<accession>Q96P20</accession>
<accession>A0A024R5Q0</accession>
<accession>B2RC97</accession>
<accession>B7ZKS9</accession>
<accession>B7ZKT2</accession>
<accession>B7ZKT3</accession>
<accession>O75434</accession>
<accession>Q17RS2</accession>
<accession>Q59H68</accession>
<accession>Q5JQS8</accession>
<accession>Q5JQS9</accession>
<accession>Q6TG35</accession>
<accession>Q8TCW0</accession>
<accession>Q8TEU9</accession>
<accession>Q8WXH9</accession>
<proteinExistence type="evidence at protein level"/>
<gene>
    <name evidence="86 95" type="primary">NLRP3</name>
    <name evidence="95" type="synonym">C1orf7</name>
    <name evidence="80" type="synonym">CIAS1</name>
    <name evidence="82" type="synonym">NALP3</name>
    <name evidence="81" type="synonym">PYPAF1</name>
</gene>
<keyword id="KW-0002">3D-structure</keyword>
<keyword id="KW-0010">Activator</keyword>
<keyword id="KW-0013">ADP-ribosylation</keyword>
<keyword id="KW-0025">Alternative splicing</keyword>
<keyword id="KW-1008">Amyloidosis</keyword>
<keyword id="KW-0067">ATP-binding</keyword>
<keyword id="KW-0963">Cytoplasm</keyword>
<keyword id="KW-0206">Cytoskeleton</keyword>
<keyword id="KW-0209">Deafness</keyword>
<keyword id="KW-0225">Disease variant</keyword>
<keyword id="KW-1015">Disulfide bond</keyword>
<keyword id="KW-0256">Endoplasmic reticulum</keyword>
<keyword id="KW-0333">Golgi apparatus</keyword>
<keyword id="KW-0378">Hydrolase</keyword>
<keyword id="KW-0391">Immunity</keyword>
<keyword id="KW-1271">Inflammasome</keyword>
<keyword id="KW-0395">Inflammatory response</keyword>
<keyword id="KW-0399">Innate immunity</keyword>
<keyword id="KW-1017">Isopeptide bond</keyword>
<keyword id="KW-0433">Leucine-rich repeat</keyword>
<keyword id="KW-0449">Lipoprotein</keyword>
<keyword id="KW-0472">Membrane</keyword>
<keyword id="KW-0496">Mitochondrion</keyword>
<keyword id="KW-1010">Non-syndromic deafness</keyword>
<keyword id="KW-0547">Nucleotide-binding</keyword>
<keyword id="KW-0539">Nucleus</keyword>
<keyword id="KW-0564">Palmitate</keyword>
<keyword id="KW-0597">Phosphoprotein</keyword>
<keyword id="KW-1267">Proteomics identification</keyword>
<keyword id="KW-1185">Reference proteome</keyword>
<keyword id="KW-0677">Repeat</keyword>
<keyword id="KW-0964">Secreted</keyword>
<keyword id="KW-0804">Transcription</keyword>
<keyword id="KW-0805">Transcription regulation</keyword>
<keyword id="KW-0832">Ubl conjugation</keyword>
<name>NLRP3_HUMAN</name>
<dbReference type="EC" id="3.6.4.-" evidence="22 57 58"/>
<dbReference type="EMBL" id="AF410477">
    <property type="protein sequence ID" value="AAL33908.1"/>
    <property type="status" value="ALT_INIT"/>
    <property type="molecule type" value="mRNA"/>
</dbReference>
<dbReference type="EMBL" id="AF427617">
    <property type="protein sequence ID" value="AAL33911.1"/>
    <property type="molecule type" value="mRNA"/>
</dbReference>
<dbReference type="EMBL" id="AY051117">
    <property type="protein sequence ID" value="AAL12497.1"/>
    <property type="status" value="ALT_INIT"/>
    <property type="molecule type" value="Genomic_DNA"/>
</dbReference>
<dbReference type="EMBL" id="AY051112">
    <property type="protein sequence ID" value="AAL12497.1"/>
    <property type="status" value="JOINED"/>
    <property type="molecule type" value="Genomic_DNA"/>
</dbReference>
<dbReference type="EMBL" id="AY051113">
    <property type="protein sequence ID" value="AAL12497.1"/>
    <property type="status" value="JOINED"/>
    <property type="molecule type" value="Genomic_DNA"/>
</dbReference>
<dbReference type="EMBL" id="AY051114">
    <property type="protein sequence ID" value="AAL12497.1"/>
    <property type="status" value="JOINED"/>
    <property type="molecule type" value="Genomic_DNA"/>
</dbReference>
<dbReference type="EMBL" id="AY051115">
    <property type="protein sequence ID" value="AAL12497.1"/>
    <property type="status" value="JOINED"/>
    <property type="molecule type" value="Genomic_DNA"/>
</dbReference>
<dbReference type="EMBL" id="AY051116">
    <property type="protein sequence ID" value="AAL12497.1"/>
    <property type="status" value="JOINED"/>
    <property type="molecule type" value="Genomic_DNA"/>
</dbReference>
<dbReference type="EMBL" id="AY056059">
    <property type="protein sequence ID" value="AAL12497.1"/>
    <property type="status" value="JOINED"/>
    <property type="molecule type" value="Genomic_DNA"/>
</dbReference>
<dbReference type="EMBL" id="AY056060">
    <property type="protein sequence ID" value="AAL12497.1"/>
    <property type="status" value="JOINED"/>
    <property type="molecule type" value="Genomic_DNA"/>
</dbReference>
<dbReference type="EMBL" id="AY051117">
    <property type="protein sequence ID" value="AAL12498.1"/>
    <property type="status" value="ALT_INIT"/>
    <property type="molecule type" value="Genomic_DNA"/>
</dbReference>
<dbReference type="EMBL" id="AY051112">
    <property type="protein sequence ID" value="AAL12498.1"/>
    <property type="status" value="JOINED"/>
    <property type="molecule type" value="Genomic_DNA"/>
</dbReference>
<dbReference type="EMBL" id="AY051113">
    <property type="protein sequence ID" value="AAL12498.1"/>
    <property type="status" value="JOINED"/>
    <property type="molecule type" value="Genomic_DNA"/>
</dbReference>
<dbReference type="EMBL" id="AY051114">
    <property type="protein sequence ID" value="AAL12498.1"/>
    <property type="status" value="JOINED"/>
    <property type="molecule type" value="Genomic_DNA"/>
</dbReference>
<dbReference type="EMBL" id="AY051115">
    <property type="protein sequence ID" value="AAL12498.1"/>
    <property type="status" value="JOINED"/>
    <property type="molecule type" value="Genomic_DNA"/>
</dbReference>
<dbReference type="EMBL" id="AY051116">
    <property type="protein sequence ID" value="AAL12498.1"/>
    <property type="status" value="JOINED"/>
    <property type="molecule type" value="Genomic_DNA"/>
</dbReference>
<dbReference type="EMBL" id="AF468522">
    <property type="protein sequence ID" value="AAL78632.1"/>
    <property type="molecule type" value="mRNA"/>
</dbReference>
<dbReference type="EMBL" id="AF420469">
    <property type="protein sequence ID" value="AAL65136.1"/>
    <property type="status" value="ALT_INIT"/>
    <property type="molecule type" value="mRNA"/>
</dbReference>
<dbReference type="EMBL" id="AY092033">
    <property type="protein sequence ID" value="AAM14669.1"/>
    <property type="molecule type" value="mRNA"/>
</dbReference>
<dbReference type="EMBL" id="AF418985">
    <property type="protein sequence ID" value="AAL14640.2"/>
    <property type="molecule type" value="mRNA"/>
</dbReference>
<dbReference type="EMBL" id="AK314998">
    <property type="protein sequence ID" value="BAG37494.1"/>
    <property type="status" value="ALT_INIT"/>
    <property type="molecule type" value="mRNA"/>
</dbReference>
<dbReference type="EMBL" id="AB208891">
    <property type="protein sequence ID" value="BAD92128.1"/>
    <property type="status" value="ALT_INIT"/>
    <property type="molecule type" value="mRNA"/>
</dbReference>
<dbReference type="EMBL" id="AC104335">
    <property type="status" value="NOT_ANNOTATED_CDS"/>
    <property type="molecule type" value="Genomic_DNA"/>
</dbReference>
<dbReference type="EMBL" id="AL606804">
    <property type="status" value="NOT_ANNOTATED_CDS"/>
    <property type="molecule type" value="Genomic_DNA"/>
</dbReference>
<dbReference type="EMBL" id="CH471148">
    <property type="protein sequence ID" value="EAW77184.1"/>
    <property type="molecule type" value="Genomic_DNA"/>
</dbReference>
<dbReference type="EMBL" id="CH471148">
    <property type="protein sequence ID" value="EAW77186.1"/>
    <property type="molecule type" value="Genomic_DNA"/>
</dbReference>
<dbReference type="EMBL" id="BC117211">
    <property type="protein sequence ID" value="AAI17212.1"/>
    <property type="molecule type" value="mRNA"/>
</dbReference>
<dbReference type="EMBL" id="BC143359">
    <property type="protein sequence ID" value="AAI43360.1"/>
    <property type="molecule type" value="mRNA"/>
</dbReference>
<dbReference type="EMBL" id="BC143362">
    <property type="protein sequence ID" value="AAI43363.1"/>
    <property type="molecule type" value="mRNA"/>
</dbReference>
<dbReference type="EMBL" id="BC143363">
    <property type="protein sequence ID" value="AAI43364.1"/>
    <property type="molecule type" value="mRNA"/>
</dbReference>
<dbReference type="EMBL" id="AY422168">
    <property type="protein sequence ID" value="AAQ98889.1"/>
    <property type="molecule type" value="mRNA"/>
</dbReference>
<dbReference type="EMBL" id="AF054176">
    <property type="protein sequence ID" value="AAC39910.1"/>
    <property type="status" value="ALT_FRAME"/>
    <property type="molecule type" value="mRNA"/>
</dbReference>
<dbReference type="RefSeq" id="NP_001073289.1">
    <property type="nucleotide sequence ID" value="NM_001079821.2"/>
</dbReference>
<dbReference type="RefSeq" id="NP_001120933.1">
    <property type="nucleotide sequence ID" value="NM_001127461.2"/>
</dbReference>
<dbReference type="RefSeq" id="NP_001120934.1">
    <property type="nucleotide sequence ID" value="NM_001127462.2"/>
</dbReference>
<dbReference type="RefSeq" id="NP_001230062.1">
    <property type="nucleotide sequence ID" value="NM_001243133.1"/>
</dbReference>
<dbReference type="RefSeq" id="NP_004886.3">
    <molecule id="Q96P20-1"/>
    <property type="nucleotide sequence ID" value="NM_004895.4"/>
</dbReference>
<dbReference type="RefSeq" id="NP_899632.1">
    <property type="nucleotide sequence ID" value="NM_183395.2"/>
</dbReference>
<dbReference type="RefSeq" id="XP_011542350.1">
    <property type="nucleotide sequence ID" value="XM_011544048.2"/>
</dbReference>
<dbReference type="RefSeq" id="XP_016855670.1">
    <molecule id="Q96P20-1"/>
    <property type="nucleotide sequence ID" value="XM_017000181.2"/>
</dbReference>
<dbReference type="RefSeq" id="XP_016855671.1">
    <molecule id="Q96P20-1"/>
    <property type="nucleotide sequence ID" value="XM_017000182.2"/>
</dbReference>
<dbReference type="RefSeq" id="XP_016855672.1">
    <property type="nucleotide sequence ID" value="XM_017000183.1"/>
</dbReference>
<dbReference type="RefSeq" id="XP_016855673.1">
    <property type="nucleotide sequence ID" value="XM_017000184.1"/>
</dbReference>
<dbReference type="RefSeq" id="XP_047299489.1">
    <molecule id="Q96P20-1"/>
    <property type="nucleotide sequence ID" value="XM_047443533.1"/>
</dbReference>
<dbReference type="RefSeq" id="XP_047299490.1">
    <molecule id="Q96P20-1"/>
    <property type="nucleotide sequence ID" value="XM_047443534.1"/>
</dbReference>
<dbReference type="RefSeq" id="XP_047299491.1">
    <molecule id="Q96P20-1"/>
    <property type="nucleotide sequence ID" value="XM_047443535.1"/>
</dbReference>
<dbReference type="RefSeq" id="XP_047299495.1">
    <molecule id="Q96P20-1"/>
    <property type="nucleotide sequence ID" value="XM_047443539.1"/>
</dbReference>
<dbReference type="RefSeq" id="XP_047299502.1">
    <molecule id="Q96P20-4"/>
    <property type="nucleotide sequence ID" value="XM_047443546.1"/>
</dbReference>
<dbReference type="RefSeq" id="XP_047299513.1">
    <molecule id="Q96P20-5"/>
    <property type="nucleotide sequence ID" value="XM_047443557.1"/>
</dbReference>
<dbReference type="RefSeq" id="XP_047299518.1">
    <molecule id="Q96P20-4"/>
    <property type="nucleotide sequence ID" value="XM_047443562.1"/>
</dbReference>
<dbReference type="RefSeq" id="XP_047299527.1">
    <molecule id="Q96P20-2"/>
    <property type="nucleotide sequence ID" value="XM_047443571.1"/>
</dbReference>
<dbReference type="RefSeq" id="XP_054190045.1">
    <molecule id="Q96P20-1"/>
    <property type="nucleotide sequence ID" value="XM_054334070.1"/>
</dbReference>
<dbReference type="RefSeq" id="XP_054190046.1">
    <molecule id="Q96P20-1"/>
    <property type="nucleotide sequence ID" value="XM_054334071.1"/>
</dbReference>
<dbReference type="RefSeq" id="XP_054190047.1">
    <molecule id="Q96P20-1"/>
    <property type="nucleotide sequence ID" value="XM_054334072.1"/>
</dbReference>
<dbReference type="RefSeq" id="XP_054190048.1">
    <molecule id="Q96P20-1"/>
    <property type="nucleotide sequence ID" value="XM_054334073.1"/>
</dbReference>
<dbReference type="RefSeq" id="XP_054190049.1">
    <molecule id="Q96P20-1"/>
    <property type="nucleotide sequence ID" value="XM_054334074.1"/>
</dbReference>
<dbReference type="RefSeq" id="XP_054190050.1">
    <molecule id="Q96P20-1"/>
    <property type="nucleotide sequence ID" value="XM_054334075.1"/>
</dbReference>
<dbReference type="RefSeq" id="XP_054190051.1">
    <molecule id="Q96P20-4"/>
    <property type="nucleotide sequence ID" value="XM_054334076.1"/>
</dbReference>
<dbReference type="RefSeq" id="XP_054190052.1">
    <molecule id="Q96P20-5"/>
    <property type="nucleotide sequence ID" value="XM_054334077.1"/>
</dbReference>
<dbReference type="RefSeq" id="XP_054190053.1">
    <molecule id="Q96P20-4"/>
    <property type="nucleotide sequence ID" value="XM_054334078.1"/>
</dbReference>
<dbReference type="RefSeq" id="XP_054190055.1">
    <molecule id="Q96P20-2"/>
    <property type="nucleotide sequence ID" value="XM_054334080.1"/>
</dbReference>
<dbReference type="PDB" id="2NAQ">
    <property type="method" value="NMR"/>
    <property type="chains" value="A=3-93"/>
</dbReference>
<dbReference type="PDB" id="3QF2">
    <property type="method" value="X-ray"/>
    <property type="resolution" value="1.70 A"/>
    <property type="chains" value="A/B=3-112"/>
</dbReference>
<dbReference type="PDB" id="6NPY">
    <property type="method" value="EM"/>
    <property type="resolution" value="3.80 A"/>
    <property type="chains" value="A=3-1036"/>
</dbReference>
<dbReference type="PDB" id="7ALV">
    <property type="method" value="X-ray"/>
    <property type="resolution" value="2.83 A"/>
    <property type="chains" value="A=131-679"/>
</dbReference>
<dbReference type="PDB" id="7PZC">
    <property type="method" value="EM"/>
    <property type="resolution" value="3.90 A"/>
    <property type="chains" value="A/B/C/D/E/F/G/H/I/J=1-1036"/>
</dbReference>
<dbReference type="PDB" id="7PZD">
    <property type="method" value="EM"/>
    <property type="resolution" value="3.60 A"/>
    <property type="chains" value="G/H/I/J/K/L/M/N/O/P/Q/R/S/T/U/V/W/X=3-110"/>
</dbReference>
<dbReference type="PDB" id="7VTP">
    <property type="method" value="EM"/>
    <property type="resolution" value="3.23 A"/>
    <property type="chains" value="A/B/C/D/E/F=130-1036"/>
</dbReference>
<dbReference type="PDB" id="7ZGU">
    <property type="method" value="EM"/>
    <property type="resolution" value="3.40 A"/>
    <property type="chains" value="A/B/C/D/E/F=126-1036"/>
</dbReference>
<dbReference type="PDB" id="8EJ4">
    <property type="method" value="EM"/>
    <property type="resolution" value="3.40 A"/>
    <property type="chains" value="A/B/C/D/E/F/G/H/I=133-1004"/>
</dbReference>
<dbReference type="PDB" id="8ERT">
    <property type="method" value="EM"/>
    <property type="resolution" value="3.30 A"/>
    <property type="chains" value="A/B/C/D/E/F/G/H/I/J/K/L/M/N/O/P/Q/R/S/T/U/V/W=1-95"/>
</dbReference>
<dbReference type="PDB" id="8ETR">
    <property type="method" value="EM"/>
    <property type="resolution" value="3.50 A"/>
    <property type="chains" value="A=134-676"/>
</dbReference>
<dbReference type="PDB" id="8RI2">
    <property type="method" value="X-ray"/>
    <property type="resolution" value="2.80 A"/>
    <property type="chains" value="A=131-679"/>
</dbReference>
<dbReference type="PDB" id="8SWF">
    <property type="method" value="EM"/>
    <property type="resolution" value="3.39 A"/>
    <property type="chains" value="A/B/C/D/E/F/G/H=130-1036"/>
</dbReference>
<dbReference type="PDB" id="8SWK">
    <property type="method" value="EM"/>
    <property type="resolution" value="4.32 A"/>
    <property type="chains" value="A/B/C/D/E/F=133-1036"/>
</dbReference>
<dbReference type="PDB" id="8SXN">
    <property type="method" value="EM"/>
    <property type="resolution" value="4.04 A"/>
    <property type="chains" value="C/D=133-1036"/>
</dbReference>
<dbReference type="PDB" id="8WSM">
    <property type="method" value="X-ray"/>
    <property type="resolution" value="2.70 A"/>
    <property type="chains" value="A=131-679"/>
</dbReference>
<dbReference type="PDB" id="8ZEM">
    <property type="method" value="X-ray"/>
    <property type="resolution" value="3.32 A"/>
    <property type="chains" value="A=131-679"/>
</dbReference>
<dbReference type="PDB" id="9DH3">
    <property type="method" value="EM"/>
    <property type="resolution" value="3.76 A"/>
    <property type="chains" value="A/B/C/D=136-1036"/>
</dbReference>
<dbReference type="PDB" id="9GU4">
    <property type="method" value="X-ray"/>
    <property type="resolution" value="2.70 A"/>
    <property type="chains" value="A=131-679"/>
</dbReference>
<dbReference type="PDB" id="9MGY">
    <property type="method" value="EM"/>
    <property type="resolution" value="2.90 A"/>
    <property type="chains" value="C=1-1036"/>
</dbReference>
<dbReference type="PDB" id="9MIE">
    <property type="method" value="EM"/>
    <property type="resolution" value="3.93 A"/>
    <property type="chains" value="C=1-1036"/>
</dbReference>
<dbReference type="PDB" id="9MIG">
    <property type="method" value="EM"/>
    <property type="resolution" value="3.60 A"/>
    <property type="chains" value="C=1-1036"/>
</dbReference>
<dbReference type="PDBsum" id="2NAQ"/>
<dbReference type="PDBsum" id="3QF2"/>
<dbReference type="PDBsum" id="6NPY"/>
<dbReference type="PDBsum" id="7ALV"/>
<dbReference type="PDBsum" id="7PZC"/>
<dbReference type="PDBsum" id="7PZD"/>
<dbReference type="PDBsum" id="7VTP"/>
<dbReference type="PDBsum" id="7ZGU"/>
<dbReference type="PDBsum" id="8EJ4"/>
<dbReference type="PDBsum" id="8ERT"/>
<dbReference type="PDBsum" id="8ETR"/>
<dbReference type="PDBsum" id="8RI2"/>
<dbReference type="PDBsum" id="8SWF"/>
<dbReference type="PDBsum" id="8SWK"/>
<dbReference type="PDBsum" id="8SXN"/>
<dbReference type="PDBsum" id="8WSM"/>
<dbReference type="PDBsum" id="8ZEM"/>
<dbReference type="PDBsum" id="9DH3"/>
<dbReference type="PDBsum" id="9GU4"/>
<dbReference type="PDBsum" id="9MGY"/>
<dbReference type="PDBsum" id="9MIE"/>
<dbReference type="PDBsum" id="9MIG"/>
<dbReference type="EMDB" id="EMD-0476"/>
<dbReference type="EMDB" id="EMD-13684"/>
<dbReference type="EMDB" id="EMD-13685"/>
<dbReference type="EMDB" id="EMD-13686"/>
<dbReference type="EMDB" id="EMD-13687"/>
<dbReference type="EMDB" id="EMD-13692"/>
<dbReference type="EMDB" id="EMD-13693"/>
<dbReference type="EMDB" id="EMD-13699"/>
<dbReference type="EMDB" id="EMD-13727"/>
<dbReference type="EMDB" id="EMD-14713"/>
<dbReference type="EMDB" id="EMD-28175"/>
<dbReference type="EMDB" id="EMD-28560"/>
<dbReference type="EMDB" id="EMD-28596"/>
<dbReference type="EMDB" id="EMD-32119"/>
<dbReference type="EMDB" id="EMD-40811"/>
<dbReference type="EMDB" id="EMD-40820"/>
<dbReference type="EMDB" id="EMD-40855"/>
<dbReference type="EMDB" id="EMD-46855"/>
<dbReference type="EMDB" id="EMD-48263"/>
<dbReference type="EMDB" id="EMD-48288"/>
<dbReference type="EMDB" id="EMD-48289"/>
<dbReference type="SMR" id="Q96P20"/>
<dbReference type="BioGRID" id="125319">
    <property type="interactions" value="124"/>
</dbReference>
<dbReference type="ComplexPortal" id="CPX-4141">
    <property type="entry name" value="NLRP3 inflammasome"/>
</dbReference>
<dbReference type="CORUM" id="Q96P20"/>
<dbReference type="DIP" id="DIP-41153N"/>
<dbReference type="FunCoup" id="Q96P20">
    <property type="interactions" value="1128"/>
</dbReference>
<dbReference type="IntAct" id="Q96P20">
    <property type="interactions" value="51"/>
</dbReference>
<dbReference type="MINT" id="Q96P20"/>
<dbReference type="STRING" id="9606.ENSP00000337383"/>
<dbReference type="BindingDB" id="Q96P20"/>
<dbReference type="ChEMBL" id="CHEMBL1741208"/>
<dbReference type="DrugBank" id="DB16130">
    <property type="generic name" value="Dapansutrile"/>
</dbReference>
<dbReference type="DrugCentral" id="Q96P20"/>
<dbReference type="GuidetoPHARMACOLOGY" id="1770"/>
<dbReference type="GlyGen" id="Q96P20">
    <property type="glycosylation" value="1 site, 1 O-linked glycan (1 site)"/>
</dbReference>
<dbReference type="iPTMnet" id="Q96P20"/>
<dbReference type="PhosphoSitePlus" id="Q96P20"/>
<dbReference type="SwissPalm" id="Q96P20"/>
<dbReference type="BioMuta" id="NLRP3"/>
<dbReference type="DMDM" id="262527566"/>
<dbReference type="jPOST" id="Q96P20"/>
<dbReference type="MassIVE" id="Q96P20"/>
<dbReference type="PaxDb" id="9606-ENSP00000337383"/>
<dbReference type="PeptideAtlas" id="Q96P20"/>
<dbReference type="ProteomicsDB" id="77599">
    <molecule id="Q96P20-1"/>
</dbReference>
<dbReference type="ProteomicsDB" id="77600">
    <molecule id="Q96P20-2"/>
</dbReference>
<dbReference type="ProteomicsDB" id="77601">
    <molecule id="Q96P20-3"/>
</dbReference>
<dbReference type="ProteomicsDB" id="77602">
    <molecule id="Q96P20-4"/>
</dbReference>
<dbReference type="ProteomicsDB" id="77603">
    <molecule id="Q96P20-5"/>
</dbReference>
<dbReference type="Antibodypedia" id="624">
    <property type="antibodies" value="780 antibodies from 45 providers"/>
</dbReference>
<dbReference type="DNASU" id="114548"/>
<dbReference type="GeneID" id="114548"/>
<dbReference type="KEGG" id="hsa:114548"/>
<dbReference type="UCSC" id="uc001icr.4">
    <molecule id="Q96P20-1"/>
    <property type="organism name" value="human"/>
</dbReference>
<dbReference type="AGR" id="HGNC:16400"/>
<dbReference type="CTD" id="114548"/>
<dbReference type="DisGeNET" id="114548"/>
<dbReference type="GeneCards" id="NLRP3"/>
<dbReference type="HGNC" id="HGNC:16400">
    <property type="gene designation" value="NLRP3"/>
</dbReference>
<dbReference type="MalaCards" id="NLRP3"/>
<dbReference type="MIM" id="120100">
    <property type="type" value="phenotype"/>
</dbReference>
<dbReference type="MIM" id="148200">
    <property type="type" value="phenotype"/>
</dbReference>
<dbReference type="MIM" id="191900">
    <property type="type" value="phenotype"/>
</dbReference>
<dbReference type="MIM" id="606416">
    <property type="type" value="gene"/>
</dbReference>
<dbReference type="MIM" id="607115">
    <property type="type" value="phenotype"/>
</dbReference>
<dbReference type="MIM" id="617772">
    <property type="type" value="phenotype"/>
</dbReference>
<dbReference type="neXtProt" id="NX_Q96P20"/>
<dbReference type="Orphanet" id="1451">
    <property type="disease" value="CINCA syndrome"/>
</dbReference>
<dbReference type="Orphanet" id="47045">
    <property type="disease" value="Familial cold urticaria"/>
</dbReference>
<dbReference type="Orphanet" id="647815">
    <property type="disease" value="Keratitis fugax hereditaria"/>
</dbReference>
<dbReference type="Orphanet" id="575">
    <property type="disease" value="Muckle-Wells syndrome"/>
</dbReference>
<dbReference type="PharmGKB" id="PA26512"/>
<dbReference type="VEuPathDB" id="HostDB:ENSG00000162711"/>
<dbReference type="eggNOG" id="ENOG502SBIG">
    <property type="taxonomic scope" value="Eukaryota"/>
</dbReference>
<dbReference type="HOGENOM" id="CLU_002274_2_0_1"/>
<dbReference type="InParanoid" id="Q96P20"/>
<dbReference type="OrthoDB" id="120976at2759"/>
<dbReference type="PAN-GO" id="Q96P20">
    <property type="GO annotations" value="8 GO annotations based on evolutionary models"/>
</dbReference>
<dbReference type="PhylomeDB" id="Q96P20"/>
<dbReference type="TreeFam" id="TF340267"/>
<dbReference type="PathwayCommons" id="Q96P20"/>
<dbReference type="Reactome" id="R-HSA-5689901">
    <property type="pathway name" value="Metalloprotease DUBs"/>
</dbReference>
<dbReference type="Reactome" id="R-HSA-844456">
    <property type="pathway name" value="The NLRP3 inflammasome"/>
</dbReference>
<dbReference type="Reactome" id="R-HSA-9660826">
    <property type="pathway name" value="Purinergic signaling in leishmaniasis infection"/>
</dbReference>
<dbReference type="Reactome" id="R-HSA-9692916">
    <property type="pathway name" value="SARS-CoV-1 activates/modulates innate immune responses"/>
</dbReference>
<dbReference type="Reactome" id="R-HSA-9705671">
    <property type="pathway name" value="SARS-CoV-2 activates/modulates innate and adaptive immune responses"/>
</dbReference>
<dbReference type="Reactome" id="R-HSA-9707564">
    <property type="pathway name" value="Cytoprotection by HMOX1"/>
</dbReference>
<dbReference type="SignaLink" id="Q96P20"/>
<dbReference type="SIGNOR" id="Q96P20"/>
<dbReference type="BioGRID-ORCS" id="114548">
    <property type="hits" value="5 hits in 1142 CRISPR screens"/>
</dbReference>
<dbReference type="CD-CODE" id="975B8A70">
    <property type="entry name" value="Inflammasome"/>
</dbReference>
<dbReference type="ChiTaRS" id="NLRP3">
    <property type="organism name" value="human"/>
</dbReference>
<dbReference type="EvolutionaryTrace" id="Q96P20"/>
<dbReference type="GeneWiki" id="NALP3"/>
<dbReference type="GenomeRNAi" id="114548"/>
<dbReference type="Pharos" id="Q96P20">
    <property type="development level" value="Tchem"/>
</dbReference>
<dbReference type="PRO" id="PR:Q96P20"/>
<dbReference type="Proteomes" id="UP000005640">
    <property type="component" value="Chromosome 1"/>
</dbReference>
<dbReference type="RNAct" id="Q96P20">
    <property type="molecule type" value="protein"/>
</dbReference>
<dbReference type="Bgee" id="ENSG00000162711">
    <property type="expression patterns" value="Expressed in monocyte and 106 other cell types or tissues"/>
</dbReference>
<dbReference type="ExpressionAtlas" id="Q96P20">
    <property type="expression patterns" value="baseline and differential"/>
</dbReference>
<dbReference type="GO" id="GO:0005737">
    <property type="term" value="C:cytoplasm"/>
    <property type="evidence" value="ECO:0000314"/>
    <property type="project" value="UniProtKB"/>
</dbReference>
<dbReference type="GO" id="GO:0005829">
    <property type="term" value="C:cytosol"/>
    <property type="evidence" value="ECO:0000314"/>
    <property type="project" value="UniProt"/>
</dbReference>
<dbReference type="GO" id="GO:0005783">
    <property type="term" value="C:endoplasmic reticulum"/>
    <property type="evidence" value="ECO:0007669"/>
    <property type="project" value="UniProtKB-SubCell"/>
</dbReference>
<dbReference type="GO" id="GO:0005576">
    <property type="term" value="C:extracellular region"/>
    <property type="evidence" value="ECO:0007669"/>
    <property type="project" value="UniProtKB-SubCell"/>
</dbReference>
<dbReference type="GO" id="GO:0000139">
    <property type="term" value="C:Golgi membrane"/>
    <property type="evidence" value="ECO:0000314"/>
    <property type="project" value="UniProtKB"/>
</dbReference>
<dbReference type="GO" id="GO:0031021">
    <property type="term" value="C:interphase microtubule organizing center"/>
    <property type="evidence" value="ECO:0000250"/>
    <property type="project" value="UniProtKB"/>
</dbReference>
<dbReference type="GO" id="GO:0016020">
    <property type="term" value="C:membrane"/>
    <property type="evidence" value="ECO:0000314"/>
    <property type="project" value="UniProtKB"/>
</dbReference>
<dbReference type="GO" id="GO:0005815">
    <property type="term" value="C:microtubule organizing center"/>
    <property type="evidence" value="ECO:0000314"/>
    <property type="project" value="UniProtKB"/>
</dbReference>
<dbReference type="GO" id="GO:0005739">
    <property type="term" value="C:mitochondrion"/>
    <property type="evidence" value="ECO:0000314"/>
    <property type="project" value="UniProtKB"/>
</dbReference>
<dbReference type="GO" id="GO:0072559">
    <property type="term" value="C:NLRP3 inflammasome complex"/>
    <property type="evidence" value="ECO:0000314"/>
    <property type="project" value="UniProtKB"/>
</dbReference>
<dbReference type="GO" id="GO:0005634">
    <property type="term" value="C:nucleus"/>
    <property type="evidence" value="ECO:0000250"/>
    <property type="project" value="UniProtKB"/>
</dbReference>
<dbReference type="GO" id="GO:0043531">
    <property type="term" value="F:ADP binding"/>
    <property type="evidence" value="ECO:0000314"/>
    <property type="project" value="UniProtKB"/>
</dbReference>
<dbReference type="GO" id="GO:0005524">
    <property type="term" value="F:ATP binding"/>
    <property type="evidence" value="ECO:0000314"/>
    <property type="project" value="UniProtKB"/>
</dbReference>
<dbReference type="GO" id="GO:0016887">
    <property type="term" value="F:ATP hydrolysis activity"/>
    <property type="evidence" value="ECO:0000314"/>
    <property type="project" value="UniProtKB"/>
</dbReference>
<dbReference type="GO" id="GO:0140608">
    <property type="term" value="F:cysteine-type endopeptidase activator activity"/>
    <property type="evidence" value="ECO:0000314"/>
    <property type="project" value="UniProt"/>
</dbReference>
<dbReference type="GO" id="GO:0140297">
    <property type="term" value="F:DNA-binding transcription factor binding"/>
    <property type="evidence" value="ECO:0000250"/>
    <property type="project" value="UniProtKB"/>
</dbReference>
<dbReference type="GO" id="GO:0042802">
    <property type="term" value="F:identical protein binding"/>
    <property type="evidence" value="ECO:0000353"/>
    <property type="project" value="IntAct"/>
</dbReference>
<dbReference type="GO" id="GO:0060090">
    <property type="term" value="F:molecular adaptor activity"/>
    <property type="evidence" value="ECO:0000314"/>
    <property type="project" value="UniProt"/>
</dbReference>
<dbReference type="GO" id="GO:0140693">
    <property type="term" value="F:molecular condensate scaffold activity"/>
    <property type="evidence" value="ECO:0000314"/>
    <property type="project" value="UniProt"/>
</dbReference>
<dbReference type="GO" id="GO:0140299">
    <property type="term" value="F:molecular sensor activity"/>
    <property type="evidence" value="ECO:0000314"/>
    <property type="project" value="UniProtKB"/>
</dbReference>
<dbReference type="GO" id="GO:0042834">
    <property type="term" value="F:peptidoglycan binding"/>
    <property type="evidence" value="ECO:0000304"/>
    <property type="project" value="HGNC-UCL"/>
</dbReference>
<dbReference type="GO" id="GO:1901981">
    <property type="term" value="F:phosphatidylinositol phosphate binding"/>
    <property type="evidence" value="ECO:0000314"/>
    <property type="project" value="UniProtKB"/>
</dbReference>
<dbReference type="GO" id="GO:0070273">
    <property type="term" value="F:phosphatidylinositol-4-phosphate binding"/>
    <property type="evidence" value="ECO:0000314"/>
    <property type="project" value="UniProtKB"/>
</dbReference>
<dbReference type="GO" id="GO:0030674">
    <property type="term" value="F:protein-macromolecule adaptor activity"/>
    <property type="evidence" value="ECO:0000314"/>
    <property type="project" value="UniProt"/>
</dbReference>
<dbReference type="GO" id="GO:0043565">
    <property type="term" value="F:sequence-specific DNA binding"/>
    <property type="evidence" value="ECO:0000250"/>
    <property type="project" value="UniProtKB"/>
</dbReference>
<dbReference type="GO" id="GO:0035591">
    <property type="term" value="F:signaling adaptor activity"/>
    <property type="evidence" value="ECO:0000314"/>
    <property type="project" value="UniProtKB"/>
</dbReference>
<dbReference type="GO" id="GO:0006915">
    <property type="term" value="P:apoptotic process"/>
    <property type="evidence" value="ECO:0000303"/>
    <property type="project" value="UniProtKB"/>
</dbReference>
<dbReference type="GO" id="GO:0071222">
    <property type="term" value="P:cellular response to lipopolysaccharide"/>
    <property type="evidence" value="ECO:0000314"/>
    <property type="project" value="UniProtKB"/>
</dbReference>
<dbReference type="GO" id="GO:0098586">
    <property type="term" value="P:cellular response to virus"/>
    <property type="evidence" value="ECO:0000314"/>
    <property type="project" value="UniProtKB"/>
</dbReference>
<dbReference type="GO" id="GO:0006952">
    <property type="term" value="P:defense response"/>
    <property type="evidence" value="ECO:0000304"/>
    <property type="project" value="HGNC-UCL"/>
</dbReference>
<dbReference type="GO" id="GO:0009595">
    <property type="term" value="P:detection of biotic stimulus"/>
    <property type="evidence" value="ECO:0000314"/>
    <property type="project" value="UniProtKB"/>
</dbReference>
<dbReference type="GO" id="GO:0006954">
    <property type="term" value="P:inflammatory response"/>
    <property type="evidence" value="ECO:0000314"/>
    <property type="project" value="UniProtKB"/>
</dbReference>
<dbReference type="GO" id="GO:0045087">
    <property type="term" value="P:innate immune response"/>
    <property type="evidence" value="ECO:0007669"/>
    <property type="project" value="UniProtKB-KW"/>
</dbReference>
<dbReference type="GO" id="GO:0002674">
    <property type="term" value="P:negative regulation of acute inflammatory response"/>
    <property type="evidence" value="ECO:0000315"/>
    <property type="project" value="BHF-UCL"/>
</dbReference>
<dbReference type="GO" id="GO:0050728">
    <property type="term" value="P:negative regulation of inflammatory response"/>
    <property type="evidence" value="ECO:0000315"/>
    <property type="project" value="BHF-UCL"/>
</dbReference>
<dbReference type="GO" id="GO:0032691">
    <property type="term" value="P:negative regulation of interleukin-1 beta production"/>
    <property type="evidence" value="ECO:0000315"/>
    <property type="project" value="BHF-UCL"/>
</dbReference>
<dbReference type="GO" id="GO:1901223">
    <property type="term" value="P:negative regulation of non-canonical NF-kappaB signal transduction"/>
    <property type="evidence" value="ECO:0000314"/>
    <property type="project" value="HGNC-UCL"/>
</dbReference>
<dbReference type="GO" id="GO:0044546">
    <property type="term" value="P:NLRP3 inflammasome complex assembly"/>
    <property type="evidence" value="ECO:0000314"/>
    <property type="project" value="UniProtKB"/>
</dbReference>
<dbReference type="GO" id="GO:0007231">
    <property type="term" value="P:osmosensory signaling pathway"/>
    <property type="evidence" value="ECO:0000303"/>
    <property type="project" value="ComplexPortal"/>
</dbReference>
<dbReference type="GO" id="GO:0002221">
    <property type="term" value="P:pattern recognition receptor signaling pathway"/>
    <property type="evidence" value="ECO:0000303"/>
    <property type="project" value="ComplexPortal"/>
</dbReference>
<dbReference type="GO" id="GO:0050729">
    <property type="term" value="P:positive regulation of inflammatory response"/>
    <property type="evidence" value="ECO:0000314"/>
    <property type="project" value="UniProtKB"/>
</dbReference>
<dbReference type="GO" id="GO:0032731">
    <property type="term" value="P:positive regulation of interleukin-1 beta production"/>
    <property type="evidence" value="ECO:0000314"/>
    <property type="project" value="UniProtKB"/>
</dbReference>
<dbReference type="GO" id="GO:0032753">
    <property type="term" value="P:positive regulation of interleukin-4 production"/>
    <property type="evidence" value="ECO:0000250"/>
    <property type="project" value="UniProtKB"/>
</dbReference>
<dbReference type="GO" id="GO:0051092">
    <property type="term" value="P:positive regulation of NF-kappaB transcription factor activity"/>
    <property type="evidence" value="ECO:0000314"/>
    <property type="project" value="UniProtKB"/>
</dbReference>
<dbReference type="GO" id="GO:1901224">
    <property type="term" value="P:positive regulation of non-canonical NF-kappaB signal transduction"/>
    <property type="evidence" value="ECO:0000353"/>
    <property type="project" value="UniProtKB"/>
</dbReference>
<dbReference type="GO" id="GO:2000553">
    <property type="term" value="P:positive regulation of T-helper 2 cell cytokine production"/>
    <property type="evidence" value="ECO:0000250"/>
    <property type="project" value="UniProtKB"/>
</dbReference>
<dbReference type="GO" id="GO:0045630">
    <property type="term" value="P:positive regulation of T-helper 2 cell differentiation"/>
    <property type="evidence" value="ECO:0000250"/>
    <property type="project" value="UniProtKB"/>
</dbReference>
<dbReference type="GO" id="GO:0045944">
    <property type="term" value="P:positive regulation of transcription by RNA polymerase II"/>
    <property type="evidence" value="ECO:0000250"/>
    <property type="project" value="UniProtKB"/>
</dbReference>
<dbReference type="GO" id="GO:0002830">
    <property type="term" value="P:positive regulation of type 2 immune response"/>
    <property type="evidence" value="ECO:0000250"/>
    <property type="project" value="UniProtKB"/>
</dbReference>
<dbReference type="GO" id="GO:0051260">
    <property type="term" value="P:protein homooligomerization"/>
    <property type="evidence" value="ECO:0000314"/>
    <property type="project" value="UniProtKB"/>
</dbReference>
<dbReference type="GO" id="GO:0051604">
    <property type="term" value="P:protein maturation"/>
    <property type="evidence" value="ECO:0000314"/>
    <property type="project" value="UniProt"/>
</dbReference>
<dbReference type="GO" id="GO:0070269">
    <property type="term" value="P:pyroptotic inflammatory response"/>
    <property type="evidence" value="ECO:0000303"/>
    <property type="project" value="ComplexPortal"/>
</dbReference>
<dbReference type="GO" id="GO:0050727">
    <property type="term" value="P:regulation of inflammatory response"/>
    <property type="evidence" value="ECO:0000318"/>
    <property type="project" value="GO_Central"/>
</dbReference>
<dbReference type="GO" id="GO:0007165">
    <property type="term" value="P:signal transduction"/>
    <property type="evidence" value="ECO:0000303"/>
    <property type="project" value="UniProtKB"/>
</dbReference>
<dbReference type="CDD" id="cd00116">
    <property type="entry name" value="LRR_RI"/>
    <property type="match status" value="1"/>
</dbReference>
<dbReference type="CDD" id="cd08320">
    <property type="entry name" value="Pyrin_NALPs"/>
    <property type="match status" value="1"/>
</dbReference>
<dbReference type="FunFam" id="1.10.533.10:FF:000019">
    <property type="entry name" value="NACHT, LRR and PYD domains-containing protein 3"/>
    <property type="match status" value="1"/>
</dbReference>
<dbReference type="FunFam" id="3.40.50.300:FF:000442">
    <property type="entry name" value="NACHT, LRR and PYD domains-containing protein 3"/>
    <property type="match status" value="1"/>
</dbReference>
<dbReference type="FunFam" id="3.80.10.10:FF:000360">
    <property type="entry name" value="NACHT, LRR and PYD domains-containing protein 3"/>
    <property type="match status" value="1"/>
</dbReference>
<dbReference type="Gene3D" id="1.10.533.10">
    <property type="entry name" value="Death Domain, Fas"/>
    <property type="match status" value="1"/>
</dbReference>
<dbReference type="Gene3D" id="3.40.50.300">
    <property type="entry name" value="P-loop containing nucleotide triphosphate hydrolases"/>
    <property type="match status" value="1"/>
</dbReference>
<dbReference type="Gene3D" id="3.80.10.10">
    <property type="entry name" value="Ribonuclease Inhibitor"/>
    <property type="match status" value="1"/>
</dbReference>
<dbReference type="InterPro" id="IPR004020">
    <property type="entry name" value="DAPIN"/>
</dbReference>
<dbReference type="InterPro" id="IPR011029">
    <property type="entry name" value="DEATH-like_dom_sf"/>
</dbReference>
<dbReference type="InterPro" id="IPR001611">
    <property type="entry name" value="Leu-rich_rpt"/>
</dbReference>
<dbReference type="InterPro" id="IPR032675">
    <property type="entry name" value="LRR_dom_sf"/>
</dbReference>
<dbReference type="InterPro" id="IPR029495">
    <property type="entry name" value="NACHT-assoc"/>
</dbReference>
<dbReference type="InterPro" id="IPR007111">
    <property type="entry name" value="NACHT_NTPase"/>
</dbReference>
<dbReference type="InterPro" id="IPR041267">
    <property type="entry name" value="NLRP_HD2"/>
</dbReference>
<dbReference type="InterPro" id="IPR050637">
    <property type="entry name" value="NLRP_innate_immun_reg"/>
</dbReference>
<dbReference type="InterPro" id="IPR041075">
    <property type="entry name" value="NOD1/2_WH"/>
</dbReference>
<dbReference type="InterPro" id="IPR027417">
    <property type="entry name" value="P-loop_NTPase"/>
</dbReference>
<dbReference type="PANTHER" id="PTHR45690">
    <property type="entry name" value="NACHT, LRR AND PYD DOMAINS-CONTAINING PROTEIN 12"/>
    <property type="match status" value="1"/>
</dbReference>
<dbReference type="PANTHER" id="PTHR45690:SF19">
    <property type="entry name" value="NACHT, LRR AND PYD DOMAINS-CONTAINING PROTEIN 3"/>
    <property type="match status" value="1"/>
</dbReference>
<dbReference type="Pfam" id="PF14484">
    <property type="entry name" value="FISNA"/>
    <property type="match status" value="1"/>
</dbReference>
<dbReference type="Pfam" id="PF13516">
    <property type="entry name" value="LRR_6"/>
    <property type="match status" value="5"/>
</dbReference>
<dbReference type="Pfam" id="PF05729">
    <property type="entry name" value="NACHT"/>
    <property type="match status" value="1"/>
</dbReference>
<dbReference type="Pfam" id="PF17776">
    <property type="entry name" value="NLRC4_HD2"/>
    <property type="match status" value="1"/>
</dbReference>
<dbReference type="Pfam" id="PF17779">
    <property type="entry name" value="NOD2_WH"/>
    <property type="match status" value="1"/>
</dbReference>
<dbReference type="Pfam" id="PF02758">
    <property type="entry name" value="PYRIN"/>
    <property type="match status" value="1"/>
</dbReference>
<dbReference type="SMART" id="SM01288">
    <property type="entry name" value="FISNA"/>
    <property type="match status" value="1"/>
</dbReference>
<dbReference type="SMART" id="SM00368">
    <property type="entry name" value="LRR_RI"/>
    <property type="match status" value="9"/>
</dbReference>
<dbReference type="SMART" id="SM01289">
    <property type="entry name" value="PYRIN"/>
    <property type="match status" value="1"/>
</dbReference>
<dbReference type="SUPFAM" id="SSF47986">
    <property type="entry name" value="DEATH domain"/>
    <property type="match status" value="1"/>
</dbReference>
<dbReference type="SUPFAM" id="SSF52540">
    <property type="entry name" value="P-loop containing nucleoside triphosphate hydrolases"/>
    <property type="match status" value="1"/>
</dbReference>
<dbReference type="SUPFAM" id="SSF52047">
    <property type="entry name" value="RNI-like"/>
    <property type="match status" value="1"/>
</dbReference>
<dbReference type="PROSITE" id="PS50824">
    <property type="entry name" value="DAPIN"/>
    <property type="match status" value="1"/>
</dbReference>
<dbReference type="PROSITE" id="PS50837">
    <property type="entry name" value="NACHT"/>
    <property type="match status" value="1"/>
</dbReference>
<comment type="function">
    <text evidence="1 18 22 24 25 26 30 34 36 44 48 49 51 52 55 56 57 58 59 61 62 63 66 69 72 73 77">Sensor component of the NLRP3 inflammasome, which mediates inflammasome activation in response to defects in membrane integrity, leading to secretion of inflammatory cytokines IL1B and IL18 and pyroptosis (PubMed:16407889, PubMed:18403674, PubMed:18604214, PubMed:23582325, PubMed:25686105, PubMed:27929086, PubMed:28656979, PubMed:28847925, PubMed:30487600, PubMed:30612879, PubMed:31086327, PubMed:31086329, PubMed:31189953, PubMed:33231615, PubMed:34133077, PubMed:34341353, PubMed:34512673, PubMed:36442502). In response to pathogens and other damage-associated signals that affect the integrity of membranes, initiates the formation of the inflammasome polymeric complex composed of NLRP3, CASP1 and PYCARD/ASC (PubMed:16407889, PubMed:18403674, PubMed:27432880, PubMed:28847925, PubMed:31189953, PubMed:33231615, PubMed:34133077, PubMed:34341353, PubMed:36142182, PubMed:36442502). Recruitment of pro-caspase-1 (proCASP1) to the NLRP3 inflammasome promotes caspase-1 (CASP1) activation, which subsequently cleaves and activates inflammatory cytokines IL1B and IL18 and gasdermin-D (GSDMD), promoting cytokine secretion and pyroptosis (PubMed:23582325, PubMed:28847925, PubMed:31189953, PubMed:33231615, PubMed:34133077, PubMed:34341353). Activation of NLRP3 inflammasome is also required for HMGB1 secretion; stimulating inflammatory responses (PubMed:22801494). Under resting conditions, ADP-bound NLRP3 is autoinhibited (PubMed:35114687). NLRP3 activation stimuli include extracellular ATP, nigericin, reactive oxygen species, crystals of monosodium urate or cholesterol, amyloid-beta fibers, environmental or industrial particles and nanoparticles, such as asbestos, silica, aluminum salts, cytosolic dsRNA, etc (PubMed:16407889, PubMed:18403674, PubMed:18604214, PubMed:19414800, PubMed:23871209). Almost all stimuli trigger intracellular K(+) efflux (By similarity). These stimuli lead to membrane perturbation and activation of NLRP3 (By similarity). Upon activation, NLRP3 is transported to microtubule organizing center (MTOC), where it is unlocked by NEK7, leading to its relocalization to dispersed trans-Golgi network (dTGN) vesicle membranes and formation of an active inflammasome complex (PubMed:36442502, PubMed:39173637). Associates with dTGN vesicle membranes by binding to phosphatidylinositol 4-phosphate (PtdIns4P) (PubMed:30487600, PubMed:34554188). Shows ATPase activity (PubMed:17483456).</text>
</comment>
<comment type="function">
    <text evidence="1">Independently of inflammasome activation, regulates the differentiation of T helper 2 (Th2) cells and has a role in Th2 cell-dependent asthma and tumor growth (By similarity). During Th2 differentiation, required for optimal IRF4 binding to IL4 promoter and for IRF4-dependent IL4 transcription (By similarity). Binds to the consensus DNA sequence 5'-GRRGGNRGAG-3' (By similarity). May also participate in the transcription of IL5, IL13, GATA3, CCR3, CCR4 and MAF (By similarity).</text>
</comment>
<comment type="catalytic activity">
    <reaction evidence="22 57 58">
        <text>ATP + H2O = ADP + phosphate + H(+)</text>
        <dbReference type="Rhea" id="RHEA:13065"/>
        <dbReference type="ChEBI" id="CHEBI:15377"/>
        <dbReference type="ChEBI" id="CHEBI:15378"/>
        <dbReference type="ChEBI" id="CHEBI:30616"/>
        <dbReference type="ChEBI" id="CHEBI:43474"/>
        <dbReference type="ChEBI" id="CHEBI:456216"/>
    </reaction>
    <physiologicalReaction direction="left-to-right" evidence="22 57 58">
        <dbReference type="Rhea" id="RHEA:13066"/>
    </physiologicalReaction>
</comment>
<comment type="activity regulation">
    <text evidence="1 18 24 25 26 41 44 48 50 55 56 57 58 60 61 62 68 69 70 71 72 73 77">Under resting conditions, NLRP3 binds ADP and is autoinhibited (PubMed:35114687). Inactive NLRP3 forms homodecameric double-ring cages that hide pyrin domains within NACHT-LRR rings to avoid premature activation (PubMed:35114687). NLRP3 activation stimuli include extracellular ATP, nigericin, reactive oxygen species, crystals of monosodium urate or cholesterol, amyloid-beta fibers, environmental or industrial particles and nanoparticles, such as asbestos, silica, aluminum salts, cytosolic dsRNA, etc (PubMed:16407889, PubMed:18403674, PubMed:18604214, PubMed:19414800, PubMed:35114687). Activated upon human coronavirus SARS-CoV-2 infection (PubMed:33231615, PubMed:34133077). Almost all stimuli trigger intracellular K(+) efflux (By similarity). These stimuli lead to membrane perturbations that induce activation of NLRP3 (By similarity). Upon activation, NLRP3 is transported to microtubule organizing center (MTOC), where it is unlocked by NEK7, leading to its relocalization to dispersed trans-Golgi network (dTGN) vesicle membranes and recruitment of PYCARD/ASC for the formation of an active inflammasome complex (PubMed:30487600, PubMed:30612879, PubMed:36442502, PubMed:39173637). NEK7-activated NLRP3 forms a disk-shaped inflammasome (PubMed:36442502). NLRP3 and PYCARD/ASC interact via their respective pyrin domains; interaction initiates speck formation (nucleation) which greatly enhances further addition of soluble PYCARD/ASC molecules to the speck in a prion-like polymerization process (PubMed:24630722, PubMed:27432880, PubMed:28465465, PubMed:35559676, PubMed:36142182, PubMed:36442502). Clustered PYCARD/ASC nucleates the formation of CASP1 filaments through the interaction of their respective CARD domains, acting as a platform for CASP1 polymerization and activation (PubMed:24630722). Active CASP1 then processes IL1B and IL18 precursors, leading to the release of mature cytokines in the extracellular milieu and inflammatory response (PubMed:24630722). NLRP3 inflammasome assembly is inhibited by IRGM, which impedes NLRP3 oligomerization (PubMed:30612879). NLRP3 inflammasome is inhibited by cyclic AMP (cAMP), which directly binds NLRP3; inhibition is relieved by calcium-sensing receptor CASR, which inhibits production of cAMP (PubMed:32843625). Specifically inhibited by sulfonylurea MCC950 (also named CP-456,773, CRID3), a potent and specific small-molecule inhibitor of the NLRP3 inflammasome that acts by preventing ATP hydrolysis (PubMed:25686105, PubMed:31086327, PubMed:31086329, PubMed:34687713, PubMed:35114687, PubMed:35254907).</text>
</comment>
<comment type="subunit">
    <text evidence="1 6 14 21 28 29 30 33 34 35 36 38 39 46 48 51 56 59 63 69 70 71 72 73 74 75 76 77 78">Sensor component of NLRP3 inflammasomes; inflammasomes are supramolecular complexes that assemble in the cytosol in response to pathogens and other damage-associated signals and play critical roles in innate immunity and inflammation (PubMed:11786556, PubMed:15030775, PubMed:21880711). The core of NLRP3 inflammasomes consists of a signal sensor component (NLRP3), an adapter (PYCARD/ASC), which recruits an effector pro-inflammatory caspase (CASP1 and, possibly, CASP4 and CASP5) (PubMed:11786556, PubMed:15030775, PubMed:21880711). Homodecamer; inactive NLRP3 forms homodecameric double-ring cages that hide pyrin domains within NACHT-LRR rings to avoid premature activation (PubMed:35114687, PubMed:35254907). Interacts (via pyrin domain) with PYCARD/ASC (via pyrin domain); interaction is direct (PubMed:11786556, PubMed:27432880, PubMed:34341353, PubMed:35559676, PubMed:36142182, PubMed:36442502). Interacts (via LRR repeat domain) with NEK7 (via N-terminus); the interaction is required for the formation of the complex NLRP3:PYCARD, oligomerization of PYCARD/ASC and activation of CASP1 (PubMed:31189953, PubMed:36442502, PubMed:38092000, PubMed:39173637, PubMed:37575012). Interacts (via LRR repeat domain) with NR4A1/Nur77 (via N-terminus); the interaction is direct, requires activation of NR4A1 by its ligands NBRE-containing dsDNA and lipopolysaccharide, and stimulates the association of NLRP3 with NEK7 for non-canonical NLRP3 inflammasome activation (By similarity). Interacts with CARD8; leading to inhibit formation of the NLRP3 inflammasome (PubMed:24517500). Interacts with MEFV; this interaction targets NLRP3 to degradation by autophagy, hence preventing excessive IL1B- and IL18-mediated inflammation (PubMed:17431422, PubMed:26347139). Interacts with EIF2AK2/PKR; this interaction requires EIF2AK2 activity, is accompanied by EIF2AK2 autophosphorylation and promotes inflammasome assembly in response to specific stimuli (PubMed:22801494). Interacts with GBP5 (via DAPIN domain); this interaction promotes inflammasome assembly in response to microbial and soluble, but not crystalline, agents (PubMed:22461501). Interacts with PML (isoform PML-1) (via the leucine-rich repeat (LRR) domain); PML-mediated increase in NLRP3 inflammasome activation does not depend upon this interaction (PubMed:23430110). Interacts (via NACHT domain) with DHX33 (via DEAH box); NLRP3 activation in presence of cytosolic dsRNA is mediated by DHX33 (PubMed:23871209). Interacts (via NACHT and LRR domains) with ARRB2; this interaction is direct and inducible by polyunsaturated fatty acids (PUFAs) (PubMed:23809162). Interacts with PYDC5 (PubMed:24531343). Interacts (via NACHT domain) with DDX3X under both LPS-primed and inflammasome-activating conditions (By similarity). Interacts with IRF4 (via the LRR domain); this interaction is direct and is required for optimal IRF4 binding to IL4 promoter and efficient IL4 transactivation during differentiation of Th2 helper T-cells (By similarity). Interacts with MAVS; promoting localization to mitochondria and activation of the NLRP3 inflammasome (PubMed:23582325). Interacts with MARK4; promoting localization of NLRP3 to the microtubule organizing center (MTOC) (PubMed:28656979). Interacts with TRIM50; this interaction also promotes NLRP3 oligomerization and subsequent inflammasome activation (By similarity). Interacts with IRGM; preventing NLRP3 inflammasome assembly and promoting NLRP3 degradation (PubMed:30612879). Interacts (via KFERQ-like motifs) with HSPA8/HSC70; promoting NLRP3 degradation by the chaperone-mediated autophagy pathway (PubMed:36586411). Interacts (via NACHT and LLR domains) with ABHD8; this interaction is enhanced in the presence of NLRP3 inflammasome inducers, such as ATP, nigericin, silica, or alum. Interaction with ABHD8 leads the recruitment of ZDHHC12, hence facilitating NLRP3 palmitoylation and degradation by the chaperone-mediated autophagy pathway (CMA), therefore attenuating NLRP3 inflammasome activation (PubMed:39225180).</text>
</comment>
<comment type="subunit">
    <text evidence="63 78">(Microbial infection) Interacts with SARS coronavirus-2/SARS-CoV-2 N protein; the interaction is direct and promotes the binding of NLRP3 with PYCARD/ASC and facilitates NLRP3 inflammasome assembly (PubMed:34341353). This interaction disrupts the association between NLRP3 and ABHD8, enhancing NLRP3 stability, ultimately leading to increased inflammasome activation (PubMed:39225180).</text>
</comment>
<comment type="subunit">
    <text evidence="43">(Microbial infection) Interacts with M.pneumoniae CARDS toxin, which ADP-ribosylates NLRP3.</text>
</comment>
<comment type="interaction">
    <interactant intactId="EBI-6253230">
        <id>Q96P20</id>
    </interactant>
    <interactant intactId="EBI-1049597">
        <id>P27797</id>
        <label>CALR</label>
    </interactant>
    <organismsDiffer>false</organismsDiffer>
    <experiments>3</experiments>
</comment>
<comment type="interaction">
    <interactant intactId="EBI-6253230">
        <id>Q96P20</id>
    </interactant>
    <interactant intactId="EBI-351007">
        <id>P36957</id>
        <label>DLST</label>
    </interactant>
    <organismsDiffer>false</organismsDiffer>
    <experiments>3</experiments>
</comment>
<comment type="interaction">
    <interactant intactId="EBI-6253230">
        <id>Q96P20</id>
    </interactant>
    <interactant intactId="EBI-640775">
        <id>P19525</id>
        <label>EIF2AK2</label>
    </interactant>
    <organismsDiffer>false</organismsDiffer>
    <experiments>6</experiments>
</comment>
<comment type="interaction">
    <interactant intactId="EBI-6253230">
        <id>Q96P20</id>
    </interactant>
    <interactant intactId="EBI-995373">
        <id>Q7Z434</id>
        <label>MAVS</label>
    </interactant>
    <organismsDiffer>false</organismsDiffer>
    <experiments>4</experiments>
</comment>
<comment type="interaction">
    <interactant intactId="EBI-6253230">
        <id>Q96P20</id>
    </interactant>
    <interactant intactId="EBI-1055945">
        <id>Q8TDX7</id>
        <label>NEK7</label>
    </interactant>
    <organismsDiffer>false</organismsDiffer>
    <experiments>4</experiments>
</comment>
<comment type="interaction">
    <interactant intactId="EBI-6253230">
        <id>Q96P20</id>
    </interactant>
    <interactant intactId="EBI-6253230">
        <id>Q96P20</id>
        <label>NLRP3</label>
    </interactant>
    <organismsDiffer>false</organismsDiffer>
    <experiments>2</experiments>
</comment>
<comment type="interaction">
    <interactant intactId="EBI-6253230">
        <id>Q96P20</id>
    </interactant>
    <interactant intactId="EBI-751215">
        <id>Q9ULZ3</id>
        <label>PYCARD</label>
    </interactant>
    <organismsDiffer>false</organismsDiffer>
    <experiments>27</experiments>
</comment>
<comment type="interaction">
    <interactant intactId="EBI-6253230">
        <id>Q96P20</id>
    </interactant>
    <interactant intactId="EBI-25492924">
        <id>Q80H93</id>
        <label>8b</label>
    </interactant>
    <organismsDiffer>true</organismsDiffer>
    <experiments>7</experiments>
</comment>
<comment type="interaction">
    <interactant intactId="EBI-6253230">
        <id>Q96P20</id>
    </interactant>
    <interactant intactId="EBI-25475856">
        <id>P0DTC9</id>
        <label>N</label>
    </interactant>
    <organismsDiffer>true</organismsDiffer>
    <experiments>18</experiments>
</comment>
<comment type="interaction">
    <interactant intactId="EBI-6253230">
        <id>Q96P20</id>
    </interactant>
    <interactant intactId="EBI-16193749">
        <id>Q9ES74</id>
        <label>Nek7</label>
    </interactant>
    <organismsDiffer>true</organismsDiffer>
    <experiments>2</experiments>
</comment>
<comment type="interaction">
    <interactant intactId="EBI-14029575">
        <id>Q96P20-1</id>
    </interactant>
    <interactant intactId="EBI-16193799">
        <id>Q8TDX7-1</id>
        <label>NEK7</label>
    </interactant>
    <organismsDiffer>false</organismsDiffer>
    <experiments>6</experiments>
</comment>
<comment type="subcellular location">
    <subcellularLocation>
        <location evidence="6 13 19 76">Cytoplasm</location>
        <location evidence="6 13 19 76">Cytosol</location>
    </subcellularLocation>
    <subcellularLocation>
        <location evidence="6 13 19 36 43 61">Inflammasome</location>
    </subcellularLocation>
    <subcellularLocation>
        <location evidence="51 77">Cytoplasm</location>
        <location evidence="51 77">Cytoskeleton</location>
        <location evidence="51 77">Microtubule organizing center</location>
    </subcellularLocation>
    <subcellularLocation>
        <location evidence="32 55">Golgi apparatus membrane</location>
    </subcellularLocation>
    <subcellularLocation>
        <location evidence="1">Endoplasmic reticulum</location>
    </subcellularLocation>
    <subcellularLocation>
        <location evidence="27 34">Mitochondrion</location>
    </subcellularLocation>
    <subcellularLocation>
        <location evidence="42">Secreted</location>
    </subcellularLocation>
    <subcellularLocation>
        <location evidence="1">Nucleus</location>
    </subcellularLocation>
    <text evidence="1 42 55 77">In macrophages, under resting conditions, mainly located in the cytosol and on membranes of various organelles, such as endoplasmic reticulum, mitochondria and Golgi: forms an inactive double-ring cage that is primarily localized on membranes (By similarity). Upon activation, NLRP3 is transported to microtubule organizing center (MTOC), where it is unlocked by NEK7, leading to its relocalization to dispersed trans-Golgi network (dTGN) vesicle membranes for the formation of an active inflammasome complex (PubMed:39173637). Recruited to dTGN vesicle membranes by binding to phosphatidylinositol 4-phosphate (PtdIns4P) (PubMed:30487600). After the induction of pyroptosis, inflammasome specks are released into the extracellular space where they can further promote IL1B processing and where they can be engulfed by macrophages (PubMed:24952504). Phagocytosis induces lysosomal damage and inflammasome activation in the recipient cells (PubMed:24952504). In the Th2 subset of CD4(+) helper T-cells, mainly located in the nucleus (By similarity). Nuclear localization depends upon KPNA2 (By similarity). In the Th1 subset of CD4(+) helper T-cells, mainly cytoplasmic (By similarity).</text>
</comment>
<comment type="alternative products">
    <event type="alternative splicing"/>
    <isoform>
        <id>Q96P20-1</id>
        <name>2</name>
        <sequence type="displayed"/>
    </isoform>
    <isoform>
        <id>Q96P20-2</id>
        <name>1</name>
        <sequence type="described" ref="VSP_005520 VSP_005521"/>
    </isoform>
    <isoform>
        <id>Q96P20-3</id>
        <name>3</name>
        <sequence type="described" ref="VSP_005519"/>
    </isoform>
    <isoform>
        <id>Q96P20-4</id>
        <name>4</name>
        <sequence type="described" ref="VSP_005520"/>
    </isoform>
    <isoform>
        <id>Q96P20-5</id>
        <name>5</name>
        <sequence type="described" ref="VSP_005521"/>
    </isoform>
    <isoform>
        <id>Q96P20-6</id>
        <name>6</name>
        <sequence type="described" ref="VSP_053714"/>
    </isoform>
</comment>
<comment type="tissue specificity">
    <text evidence="6 8 19 23 32 61 62">Predominantly expressed in macrophages (PubMed:33231615, PubMed:34133077). Also expressed in dendritic cells, B- and T-cells (at protein level) (PubMed:11786556, PubMed:17164409). Expressed in LPS-treated granulocytes, but not in resting cells (at protein level) (PubMed:17164409). Expression in monocytes is very weak (at protein level) (PubMed:17164409). Expressed in stratified non-keratinizing squamous epithelium, including oral, esophageal and ectocervical mucosa and in the Hassall's corpuscles in the thymus. Also, detected in the stratified epithelium covering the bladder and ureter (transitional mucosa) (at protein level) (PubMed:17164409). Expressed in lung epithelial cells (at protein level) (PubMed:23229815). Expressed in chondrocytes (PubMed:12032915). Expressed at low levels in resting osteoblasts (PubMed:17907925).</text>
</comment>
<comment type="induction">
    <text evidence="13 23 37">By activators of Toll-like receptors, such as lipoteichoic acid (LTA) (TLR2), polyinosine-polycytidylic acid (poly(I:C), a synthetic analog of dsRNA) (TLR3) and bacterial lipopolysaccharides (LPS) (TLR4), and by TNF (PubMed:14662828). Up-regulated in osteoblasts after exposure to invasive, but not invasion-defective, strains of Salmonella typhimurium (at protein level) (PubMed:17907925). In macrophages, up-regulated by endocannabinoid anandamide/AEA (PubMed:23955712).</text>
</comment>
<comment type="induction">
    <text evidence="62">(Microbial infection) In COVID-19 patient derived macrophages, expression is induced by SARS-CoV-2 spike protein, probably via TLR2 (at protein level).</text>
</comment>
<comment type="domain">
    <text evidence="41">The pyrin domain (also called DAPIN domain or PYD) is involved in PYCARD/ASC-binding.</text>
</comment>
<comment type="domain">
    <text evidence="65 73">The FISNA domain is a critical mediator of NLRP3 conformational during NLRP3 activation (PubMed:34524838, PubMed:36442502). It becomes ordered in its key regions during activation to stabilize the active NACHT conformation and mediate most interactions in the NLRP3 disk (PubMed:36442502).</text>
</comment>
<comment type="domain">
    <text evidence="33">The LRR domain mediates the interaction with IRF4, PML, NEK7 and NR4A1/Nur77.</text>
</comment>
<comment type="domain">
    <text evidence="74">The KFERQ-like motifs mediate binding to HSPA8/HSC70 following NLRP3 paylmitoylation by ZDHHC12.</text>
</comment>
<comment type="PTM">
    <text evidence="1 40 47 50 53 66 67 77">Phosphorylation at Ser-198 by MAPK8/JNK1 increases inflammasome activation by promoting deubiquitination by BRCC3 and NLRP3 homooligomerization (PubMed:28943315). Phosphorylation at Ser-806 by CSNK1A1 prevents inflammasome activation by preventing NEK7 recruitment (PubMed:34615873). Phosphorylation at Ser-5 in the pyrin domain inhibits homomultimerization of NLRP3 and activation of the NLRP3 inflammasome: dephosphorylation by protein phosphatase 2A (PP2A) promotes assembly of the NLRP3 inflammasome (PubMed:28465465). Phosphorylation at Ser-295 by PKD/PRKD1 promotes NLRP3 inflammasome assembly (By similarity). Phosphorylation by ERK1/MAPK3 promotes NLRP3 inflammasome assembly (PubMed:24623131). Phosphorylation by BTK (at Tyr-136, Tyr-140, Tyr-143 and Tyr-168) in the region that mediates binding to phosphatidylinositol phosphate, promotes relocalization of NLRP3 and assembly of the NLRP3 inflammasome (PubMed:34554188). Phosphorylation at Tyr-861 inhibits NLRP3 inflammasome assembly: dephosphorylation by PTPN22 promotes inflammasome activation (PubMed:27043286). Phosphorylated by LATS1 and LATS2 at Ser-265 following palmitoylation by ZDHHC1, promoting its relocalization to the microtubule organizing center (MTOC), where NLRP3 is activated by NEK7, leading to inflammasome assembly and activation (PubMed:39173637).</text>
</comment>
<comment type="PTM">
    <text evidence="1 31 45 49 64 75">Ubiquitinated; undergoes both 'Lys-48'- and 'Lys-63'-linked polyubiquitination (PubMed:22948162, PubMed:27929086). Ubiquitination does not lead to degradation, but inhibits inflammasome activation (By similarity). Deubiquitination is catalyzed by BRCC3 and associated with NLRP3 activation and inflammasome assembly (By similarity). This process can be induced by the activation of Toll-like receptors (by LPS), through a non-transcriptional pathway dependent on the mitochondrial production of reactive oxygen species, and by ATP (By similarity). Ubiquitinated by TRIM31 via 'Lys-48'-linked ubiquitination, leading to its degradation by the proteasome (PubMed:27929086). Ubiquitinated at Lys-689 by the SCF(FBXL2) complex, leading to its degradation by the proteasome (PubMed:26037928). Ubiquitinated by TRIM35 via 'lys-48' and 'Lys-63'-linked ubiquitination leading to inhibition of NLRP3 inflammasome activation (PubMed:34512673). Undergoes 'Lys-27'-linked polyubiquitination by MARCHF5, leading to NLRP3-NEK7 complex formation and NLRP3 oligomerization (PubMed:37575012).</text>
</comment>
<comment type="PTM">
    <text evidence="74 76 77 78">Palmitoylation by ZDHHC12 promotes NLRP3 degradation by the chaperone-mediated autophagy pathway (CMA) and therefore limits NLRP3 inflammasome activation (PubMed:36586411, PubMed:39225180). Following palmitoylation, HSPA8/HSC70 recognizes and binds the KFERQ-like motifs on NLRP3 and promotes NLRP3 recruitment to lysosomes, where it is degraded via the chaperone-mediated autophagy pathway in a LAMP2-dependent process (PubMed:36586411). Palmitoylation at Cys-837 and Cys-838 by ZDHHC5 enhances its binding to NEK7 leading to inflammasome assembly and activation (PubMed:38092000). Palmitoylation at Cys-130 and Cys-958 by ZDHHC1 facilitates phosphorylation at Ser-265 by LATS1 and LATS2, promoting its relocalization to the microtubule organizing center (MTOC), where NLRP3 is activated by NEK7, leading to inflammasome assembly and activation (PubMed:39173637). Depalmitoylated by ABHD17A (PubMed:38092000).</text>
</comment>
<comment type="PTM">
    <text evidence="56">Degraded via selective autophagy following interaction with IRGM (PubMed:30612879). IRGM promotes NLRP3 recruitment to autophagosome membranes, promoting its SQSTM1/p62-dependent autophagy-dependent degradation (PubMed:30612879).</text>
</comment>
<comment type="PTM">
    <text evidence="89">The disulfide bond in the pyrin domain might play a role in reactive oxygen species-mediated activation.</text>
</comment>
<comment type="PTM">
    <text evidence="43">(Microbial infection) ADP-ribosylated by M.pneumoniae CARDS toxin in vitro.</text>
</comment>
<comment type="disease" evidence="5 7 9 11 17 20 42">
    <disease id="DI-01561">
        <name>Familial cold autoinflammatory syndrome 1</name>
        <acronym>FCAS1</acronym>
        <description>A rare autosomal dominant systemic inflammatory disease characterized by recurrent episodes of maculopapular rash associated with arthralgias, myalgias, fever and chills, swelling of the extremities, and conjunctivitis after generalized exposure to cold. Rarely, some patients may also develop late-onset renal amyloidosis.</description>
        <dbReference type="MIM" id="120100"/>
    </disease>
    <text>The disease is caused by variants affecting the gene represented in this entry.</text>
</comment>
<comment type="disease" evidence="5 7 9 17 42">
    <disease id="DI-00783">
        <name>Muckle-Wells syndrome</name>
        <acronym>MWS</acronym>
        <description>A hereditary periodic fever syndrome characterized by fever, chronic recurrent urticaria, arthralgias, progressive sensorineural deafness, and reactive renal amyloidosis. The disease may be severe if generalized reactive amyloidosis occurs.</description>
        <dbReference type="MIM" id="191900"/>
    </disease>
    <text>The disease is caused by variants affecting the gene represented in this entry.</text>
</comment>
<comment type="disease" evidence="8 10 12 15 16 17 42 58">
    <disease id="DI-01349">
        <name>Chronic infantile neurologic cutaneous and articular syndrome</name>
        <acronym>CINCA</acronym>
        <description>Rare congenital inflammatory disorder characterized by a triad of neonatal onset of cutaneous symptoms, chronic meningitis, and joint manifestations with recurrent fever and inflammation.</description>
        <dbReference type="MIM" id="607115"/>
    </disease>
    <text>The disease is caused by variants affecting the gene represented in this entry.</text>
</comment>
<comment type="disease" evidence="54 71">
    <disease id="DI-05200">
        <name>Keratoendothelitis fugax hereditaria</name>
        <acronym>KEFH</acronym>
        <description>An autosomal dominant corneal disease that periodically, and fleetingly, affects the corneal endothelium, stroma, and vision, eventually leading to central corneal stromal opacities in some patients. The disease is characterized by unilateral attacks of ocular pain, pericorneal injection, and photophobia. The acute symptoms vanish in 1-2 days but vision remains blurry for several weeks. The attacks start at the age of 3-12 years and can affect either eye. They generally decrease in frequency and get milder with age.</description>
        <dbReference type="MIM" id="148200"/>
    </disease>
    <text>The disease is caused by variants affecting the gene represented in this entry.</text>
</comment>
<comment type="disease" evidence="52">
    <disease id="DI-05146">
        <name>Deafness, autosomal dominant, 34, with or without inflammation</name>
        <acronym>DFNA34</acronym>
        <description>A form of sensorineural hearing loss. Sensorineural deafness results from damage to the neural receptors of the inner ear, the nerve pathways to the brain, or the area of the brain that receives sound information. DFNA34 is a postlingual, slowly progressive form with variable severity and variable additional features. Some DFNA34 patients have autoinflammatory manifestations.</description>
        <dbReference type="MIM" id="617772"/>
    </disease>
    <text>The disease may be caused by variants affecting the gene represented in this entry.</text>
</comment>
<comment type="similarity">
    <text evidence="88">Belongs to the NLRP family.</text>
</comment>
<comment type="sequence caution" evidence="88">
    <conflict type="frameshift">
        <sequence resource="EMBL-CDS" id="AAC39910"/>
    </conflict>
</comment>
<comment type="sequence caution" evidence="88">
    <conflict type="erroneous initiation">
        <sequence resource="EMBL-CDS" id="AAL12497"/>
    </conflict>
    <text>Truncated N-terminus.</text>
</comment>
<comment type="sequence caution" evidence="88">
    <conflict type="erroneous initiation">
        <sequence resource="EMBL-CDS" id="AAL12498"/>
    </conflict>
    <text>Truncated N-terminus.</text>
</comment>
<comment type="sequence caution" evidence="88">
    <conflict type="erroneous initiation">
        <sequence resource="EMBL-CDS" id="AAL33908"/>
    </conflict>
    <text>Truncated N-terminus.</text>
</comment>
<comment type="sequence caution" evidence="88">
    <conflict type="erroneous initiation">
        <sequence resource="EMBL-CDS" id="AAL65136"/>
    </conflict>
    <text>Truncated N-terminus.</text>
</comment>
<comment type="sequence caution" evidence="88">
    <conflict type="erroneous initiation">
        <sequence resource="EMBL-CDS" id="BAD92128"/>
    </conflict>
    <text>Truncated N-terminus.</text>
</comment>
<comment type="sequence caution" evidence="88">
    <conflict type="erroneous initiation">
        <sequence resource="EMBL-CDS" id="BAG37494"/>
    </conflict>
    <text>Truncated N-terminus.</text>
</comment>
<comment type="online information" name="INFEVERS">
    <link uri="https://infevers.umai-montpellier.fr/web/search.php?n=4"/>
    <text>Repertory of FMF and hereditary autoinflammatory disorders mutations</text>
</comment>
<protein>
    <recommendedName>
        <fullName evidence="88">NACHT, LRR and PYD domains-containing protein 3</fullName>
        <ecNumber evidence="22 57 58">3.6.4.-</ecNumber>
    </recommendedName>
    <alternativeName>
        <fullName>Angiotensin/vasopressin receptor AII/AVP-like</fullName>
    </alternativeName>
    <alternativeName>
        <fullName evidence="83">Caterpiller protein 1.1</fullName>
        <shortName evidence="83">CLR1.1</shortName>
    </alternativeName>
    <alternativeName>
        <fullName evidence="80">Cold-induced autoinflammatory syndrome 1 protein</fullName>
    </alternativeName>
    <alternativeName>
        <fullName evidence="83">Cryopyrin</fullName>
    </alternativeName>
    <alternativeName>
        <fullName evidence="81">PYRIN-containing APAF1-like protein 1</fullName>
    </alternativeName>
</protein>
<evidence type="ECO:0000250" key="1">
    <source>
        <dbReference type="UniProtKB" id="Q8R4B8"/>
    </source>
</evidence>
<evidence type="ECO:0000255" key="2"/>
<evidence type="ECO:0000255" key="3">
    <source>
        <dbReference type="PROSITE-ProRule" id="PRU00061"/>
    </source>
</evidence>
<evidence type="ECO:0000255" key="4">
    <source>
        <dbReference type="PROSITE-ProRule" id="PRU00136"/>
    </source>
</evidence>
<evidence type="ECO:0000269" key="5">
    <source>
    </source>
</evidence>
<evidence type="ECO:0000269" key="6">
    <source>
    </source>
</evidence>
<evidence type="ECO:0000269" key="7">
    <source>
    </source>
</evidence>
<evidence type="ECO:0000269" key="8">
    <source>
    </source>
</evidence>
<evidence type="ECO:0000269" key="9">
    <source>
    </source>
</evidence>
<evidence type="ECO:0000269" key="10">
    <source>
    </source>
</evidence>
<evidence type="ECO:0000269" key="11">
    <source>
    </source>
</evidence>
<evidence type="ECO:0000269" key="12">
    <source>
    </source>
</evidence>
<evidence type="ECO:0000269" key="13">
    <source>
    </source>
</evidence>
<evidence type="ECO:0000269" key="14">
    <source>
    </source>
</evidence>
<evidence type="ECO:0000269" key="15">
    <source>
    </source>
</evidence>
<evidence type="ECO:0000269" key="16">
    <source>
    </source>
</evidence>
<evidence type="ECO:0000269" key="17">
    <source>
    </source>
</evidence>
<evidence type="ECO:0000269" key="18">
    <source>
    </source>
</evidence>
<evidence type="ECO:0000269" key="19">
    <source>
    </source>
</evidence>
<evidence type="ECO:0000269" key="20">
    <source>
    </source>
</evidence>
<evidence type="ECO:0000269" key="21">
    <source>
    </source>
</evidence>
<evidence type="ECO:0000269" key="22">
    <source>
    </source>
</evidence>
<evidence type="ECO:0000269" key="23">
    <source>
    </source>
</evidence>
<evidence type="ECO:0000269" key="24">
    <source>
    </source>
</evidence>
<evidence type="ECO:0000269" key="25">
    <source>
    </source>
</evidence>
<evidence type="ECO:0000269" key="26">
    <source>
    </source>
</evidence>
<evidence type="ECO:0000269" key="27">
    <source>
    </source>
</evidence>
<evidence type="ECO:0000269" key="28">
    <source>
    </source>
</evidence>
<evidence type="ECO:0000269" key="29">
    <source>
    </source>
</evidence>
<evidence type="ECO:0000269" key="30">
    <source>
    </source>
</evidence>
<evidence type="ECO:0000269" key="31">
    <source>
    </source>
</evidence>
<evidence type="ECO:0000269" key="32">
    <source>
    </source>
</evidence>
<evidence type="ECO:0000269" key="33">
    <source>
    </source>
</evidence>
<evidence type="ECO:0000269" key="34">
    <source>
    </source>
</evidence>
<evidence type="ECO:0000269" key="35">
    <source>
    </source>
</evidence>
<evidence type="ECO:0000269" key="36">
    <source>
    </source>
</evidence>
<evidence type="ECO:0000269" key="37">
    <source>
    </source>
</evidence>
<evidence type="ECO:0000269" key="38">
    <source>
    </source>
</evidence>
<evidence type="ECO:0000269" key="39">
    <source>
    </source>
</evidence>
<evidence type="ECO:0000269" key="40">
    <source>
    </source>
</evidence>
<evidence type="ECO:0000269" key="41">
    <source>
    </source>
</evidence>
<evidence type="ECO:0000269" key="42">
    <source>
    </source>
</evidence>
<evidence type="ECO:0000269" key="43">
    <source>
    </source>
</evidence>
<evidence type="ECO:0000269" key="44">
    <source>
    </source>
</evidence>
<evidence type="ECO:0000269" key="45">
    <source>
    </source>
</evidence>
<evidence type="ECO:0000269" key="46">
    <source>
    </source>
</evidence>
<evidence type="ECO:0000269" key="47">
    <source>
    </source>
</evidence>
<evidence type="ECO:0000269" key="48">
    <source>
    </source>
</evidence>
<evidence type="ECO:0000269" key="49">
    <source>
    </source>
</evidence>
<evidence type="ECO:0000269" key="50">
    <source>
    </source>
</evidence>
<evidence type="ECO:0000269" key="51">
    <source>
    </source>
</evidence>
<evidence type="ECO:0000269" key="52">
    <source>
    </source>
</evidence>
<evidence type="ECO:0000269" key="53">
    <source>
    </source>
</evidence>
<evidence type="ECO:0000269" key="54">
    <source>
    </source>
</evidence>
<evidence type="ECO:0000269" key="55">
    <source>
    </source>
</evidence>
<evidence type="ECO:0000269" key="56">
    <source>
    </source>
</evidence>
<evidence type="ECO:0000269" key="57">
    <source>
    </source>
</evidence>
<evidence type="ECO:0000269" key="58">
    <source>
    </source>
</evidence>
<evidence type="ECO:0000269" key="59">
    <source>
    </source>
</evidence>
<evidence type="ECO:0000269" key="60">
    <source>
    </source>
</evidence>
<evidence type="ECO:0000269" key="61">
    <source>
    </source>
</evidence>
<evidence type="ECO:0000269" key="62">
    <source>
    </source>
</evidence>
<evidence type="ECO:0000269" key="63">
    <source>
    </source>
</evidence>
<evidence type="ECO:0000269" key="64">
    <source>
    </source>
</evidence>
<evidence type="ECO:0000269" key="65">
    <source>
    </source>
</evidence>
<evidence type="ECO:0000269" key="66">
    <source>
    </source>
</evidence>
<evidence type="ECO:0000269" key="67">
    <source>
    </source>
</evidence>
<evidence type="ECO:0000269" key="68">
    <source>
    </source>
</evidence>
<evidence type="ECO:0000269" key="69">
    <source>
    </source>
</evidence>
<evidence type="ECO:0000269" key="70">
    <source>
    </source>
</evidence>
<evidence type="ECO:0000269" key="71">
    <source>
    </source>
</evidence>
<evidence type="ECO:0000269" key="72">
    <source>
    </source>
</evidence>
<evidence type="ECO:0000269" key="73">
    <source>
    </source>
</evidence>
<evidence type="ECO:0000269" key="74">
    <source>
    </source>
</evidence>
<evidence type="ECO:0000269" key="75">
    <source>
    </source>
</evidence>
<evidence type="ECO:0000269" key="76">
    <source>
    </source>
</evidence>
<evidence type="ECO:0000269" key="77">
    <source>
    </source>
</evidence>
<evidence type="ECO:0000269" key="78">
    <source>
    </source>
</evidence>
<evidence type="ECO:0000303" key="79">
    <source>
    </source>
</evidence>
<evidence type="ECO:0000303" key="80">
    <source>
    </source>
</evidence>
<evidence type="ECO:0000303" key="81">
    <source>
    </source>
</evidence>
<evidence type="ECO:0000303" key="82">
    <source>
    </source>
</evidence>
<evidence type="ECO:0000303" key="83">
    <source>
    </source>
</evidence>
<evidence type="ECO:0000303" key="84">
    <source>
    </source>
</evidence>
<evidence type="ECO:0000303" key="85">
    <source>
    </source>
</evidence>
<evidence type="ECO:0000303" key="86">
    <source>
    </source>
</evidence>
<evidence type="ECO:0000303" key="87">
    <source ref="5"/>
</evidence>
<evidence type="ECO:0000305" key="88"/>
<evidence type="ECO:0000305" key="89">
    <source>
    </source>
</evidence>
<evidence type="ECO:0000305" key="90">
    <source>
    </source>
</evidence>
<evidence type="ECO:0000305" key="91">
    <source>
    </source>
</evidence>
<evidence type="ECO:0000305" key="92">
    <source>
    </source>
</evidence>
<evidence type="ECO:0000305" key="93">
    <source>
    </source>
</evidence>
<evidence type="ECO:0000305" key="94">
    <source>
    </source>
</evidence>
<evidence type="ECO:0000312" key="95">
    <source>
        <dbReference type="HGNC" id="HGNC:16400"/>
    </source>
</evidence>
<evidence type="ECO:0007744" key="96">
    <source>
        <dbReference type="PDB" id="2NAQ"/>
    </source>
</evidence>
<evidence type="ECO:0007744" key="97">
    <source>
        <dbReference type="PDB" id="6NPY"/>
    </source>
</evidence>
<evidence type="ECO:0007744" key="98">
    <source>
        <dbReference type="PDB" id="7ALV"/>
    </source>
</evidence>
<evidence type="ECO:0007744" key="99">
    <source>
        <dbReference type="PDB" id="7PZC"/>
    </source>
</evidence>
<evidence type="ECO:0007744" key="100">
    <source>
        <dbReference type="PDB" id="7PZD"/>
    </source>
</evidence>
<evidence type="ECO:0007744" key="101">
    <source>
        <dbReference type="PDB" id="7VTP"/>
    </source>
</evidence>
<evidence type="ECO:0007744" key="102">
    <source>
        <dbReference type="PDB" id="7ZGU"/>
    </source>
</evidence>
<evidence type="ECO:0007744" key="103">
    <source>
        <dbReference type="PDB" id="8EJ4"/>
    </source>
</evidence>
<evidence type="ECO:0007829" key="104">
    <source>
        <dbReference type="PDB" id="3QF2"/>
    </source>
</evidence>
<evidence type="ECO:0007829" key="105">
    <source>
        <dbReference type="PDB" id="7ALV"/>
    </source>
</evidence>
<evidence type="ECO:0007829" key="106">
    <source>
        <dbReference type="PDB" id="7VTP"/>
    </source>
</evidence>
<evidence type="ECO:0007829" key="107">
    <source>
        <dbReference type="PDB" id="7ZGU"/>
    </source>
</evidence>
<evidence type="ECO:0007829" key="108">
    <source>
        <dbReference type="PDB" id="8ETR"/>
    </source>
</evidence>
<evidence type="ECO:0007829" key="109">
    <source>
        <dbReference type="PDB" id="8WSM"/>
    </source>
</evidence>
<sequence>MKMASTRCKLARYLEDLEDVDLKKFKMHLEDYPPQKGCIPLPRGQTEKADHVDLATLMIDFNGEEKAWAMAVWIFAAINRRDLYEKAKRDEPKWGSDNARVSNPTVICQEDSIEEEWMGLLEYLSRISICKMKKDYRKKYRKYVRSRFQCIEDRNARLGESVSLNKRYTRLRLIKEHRSQQEREQELLAIGKTKTCESPVSPIKMELLFDPDDEHSEPVHTVVFQGAAGIGKTILARKMMLDWASGTLYQDRFDYLFYIHCREVSLVTQRSLGDLIMSCCPDPNPPIHKIVRKPSRILFLMDGFDELQGAFDEHIGPLCTDWQKAERGDILLSSLIRKKLLPEASLLITTRPVALEKLQHLLDHPRHVEILGFSEAKRKEYFFKYFSDEAQARAAFSLIQENEVLFTMCFIPLVCWIVCTGLKQQMESGKSLAQTSKTTTAVYVFFLSSLLQPRGGSQEHGLCAHLWGLCSLAADGIWNQKILFEESDLRNHGLQKADVSAFLRMNLFQKEVDCEKFYSFIHMTFQEFFAAMYYLLEEEKEGRTNVPGSRLKLPSRDVTVLLENYGKFEKGYLIFVVRFLFGLVNQERTSYLEKKLSCKISQQIRLELLKWIEVKAKAKKLQIQPSQLELFYCLYEMQEEDFVQRAMDYFPKIEINLSTRMDHMVSSFCIENCHRVESLSLGFLHNMPKEEEEEEKEGRHLDMVQCVLPSSSHAACSHGLVNSHLTSSFCRGLFSVLSTSQSLTELDLSDNSLGDPGMRVLCETLQHPGCNIRRLWLGRCGLSHECCFDISLVLSSNQKLVELDLSDNALGDFGIRLLCVGLKHLLCNLKKLWLVSCCLTSACCQDLASVLSTSHSLTRLYVGENALGDSGVAILCEKAKNPQCNLQKLGLVNSGLTSVCCSALSSVLSTNQNLTHLYLRGNTLGDKGIKLLCEGLLHPDCKLQVLELDNCNLTSHCCWDLSTLLTSSQSLRKLSLGNNDLGDLGVMMFCEVLKQQSCLLQNLGLSEMYFNYETKSALETLQEEKPELTVVFEPSW</sequence>
<feature type="chain" id="PRO_0000080886" description="NACHT, LRR and PYD domains-containing protein 3">
    <location>
        <begin position="1"/>
        <end position="1036"/>
    </location>
</feature>
<feature type="domain" description="Pyrin" evidence="3">
    <location>
        <begin position="1"/>
        <end position="93"/>
    </location>
</feature>
<feature type="domain" description="FISNA" evidence="2">
    <location>
        <begin position="140"/>
        <end position="210"/>
    </location>
</feature>
<feature type="domain" description="NACHT" evidence="4">
    <location>
        <begin position="220"/>
        <end position="536"/>
    </location>
</feature>
<feature type="repeat" description="LRR 1">
    <location>
        <begin position="742"/>
        <end position="762"/>
    </location>
</feature>
<feature type="repeat" description="LRR 2">
    <location>
        <begin position="771"/>
        <end position="792"/>
    </location>
</feature>
<feature type="repeat" description="LRR 3">
    <location>
        <begin position="799"/>
        <end position="819"/>
    </location>
</feature>
<feature type="repeat" description="LRR 4">
    <location>
        <begin position="828"/>
        <end position="849"/>
    </location>
</feature>
<feature type="repeat" description="LRR 5">
    <location>
        <begin position="856"/>
        <end position="876"/>
    </location>
</feature>
<feature type="repeat" description="LRR 6">
    <location>
        <begin position="885"/>
        <end position="906"/>
    </location>
</feature>
<feature type="repeat" description="LRR 7">
    <location>
        <begin position="913"/>
        <end position="933"/>
    </location>
</feature>
<feature type="repeat" description="LRR 8">
    <location>
        <begin position="942"/>
        <end position="963"/>
    </location>
</feature>
<feature type="repeat" description="LRR 9">
    <location>
        <begin position="970"/>
        <end position="991"/>
    </location>
</feature>
<feature type="region of interest" description="Required for binding to phosphatidylinositol 4-phosphate (PtdIns4P)" evidence="1">
    <location>
        <begin position="131"/>
        <end position="134"/>
    </location>
</feature>
<feature type="short sequence motif" description="KFERQ-like motif 1" evidence="74">
    <location>
        <begin position="355"/>
        <end position="359"/>
    </location>
</feature>
<feature type="short sequence motif" description="KFERQ-like motif 2" evidence="74">
    <location>
        <begin position="603"/>
        <end position="607"/>
    </location>
</feature>
<feature type="short sequence motif" description="KFERQ-like motif 3" evidence="74">
    <location>
        <begin position="798"/>
        <end position="802"/>
    </location>
</feature>
<feature type="short sequence motif" description="KFERQ-like motif 4" evidence="74">
    <location>
        <begin position="991"/>
        <end position="995"/>
    </location>
</feature>
<feature type="binding site" evidence="92 93 94 101 102 103">
    <location>
        <position position="169"/>
    </location>
    <ligand>
        <name>ATP</name>
        <dbReference type="ChEBI" id="CHEBI:30616"/>
    </ligand>
</feature>
<feature type="binding site" evidence="4 22 90 91 92 93 94 98 99 101 102 103">
    <location>
        <begin position="226"/>
        <end position="234"/>
    </location>
    <ligand>
        <name>ATP</name>
        <dbReference type="ChEBI" id="CHEBI:30616"/>
    </ligand>
</feature>
<feature type="binding site" evidence="90 91 92 93 98 99 101 102">
    <location>
        <position position="522"/>
    </location>
    <ligand>
        <name>ATP</name>
        <dbReference type="ChEBI" id="CHEBI:30616"/>
    </ligand>
</feature>
<feature type="modified residue" description="Phosphoserine" evidence="50">
    <location>
        <position position="5"/>
    </location>
</feature>
<feature type="modified residue" description="Phosphotyrosine" evidence="53">
    <location>
        <position position="13"/>
    </location>
</feature>
<feature type="modified residue" description="Phosphotyrosine; by BTK" evidence="66">
    <location>
        <position position="136"/>
    </location>
</feature>
<feature type="modified residue" description="Phosphotyrosine; by BTK" evidence="66">
    <location>
        <position position="140"/>
    </location>
</feature>
<feature type="modified residue" description="Phosphotyrosine; by BTK" evidence="66">
    <location>
        <position position="143"/>
    </location>
</feature>
<feature type="modified residue" description="Phosphoserine" evidence="1">
    <location>
        <position position="161"/>
    </location>
</feature>
<feature type="modified residue" description="Phosphoserine" evidence="53">
    <location>
        <position position="163"/>
    </location>
</feature>
<feature type="modified residue" description="Phosphotyrosine; by BTK" evidence="66">
    <location>
        <position position="168"/>
    </location>
</feature>
<feature type="modified residue" description="Phosphoserine" evidence="53">
    <location>
        <position position="198"/>
    </location>
</feature>
<feature type="modified residue" description="Phosphoserine; by MAPK8" evidence="69">
    <location>
        <position position="198"/>
    </location>
</feature>
<feature type="modified residue" description="Phosphoserine" evidence="69">
    <location>
        <position position="201"/>
    </location>
</feature>
<feature type="modified residue" description="Phosphoserine; by LATS1 and LATS2" evidence="77">
    <location>
        <position position="265"/>
    </location>
</feature>
<feature type="modified residue" description="Phosphoserine" evidence="1">
    <location>
        <position position="295"/>
    </location>
</feature>
<feature type="modified residue" description="Phosphoserine" evidence="53">
    <location>
        <position position="334"/>
    </location>
</feature>
<feature type="modified residue" description="Phosphoserine" evidence="53">
    <location>
        <position position="728"/>
    </location>
</feature>
<feature type="modified residue" description="Phosphoserine; by CSNK1A1" evidence="67">
    <location>
        <position position="735"/>
    </location>
</feature>
<feature type="modified residue" description="Phosphoserine; by CSNK1A1" evidence="67">
    <location>
        <position position="806"/>
    </location>
</feature>
<feature type="modified residue" description="Phosphotyrosine" evidence="47">
    <location>
        <position position="861"/>
    </location>
</feature>
<feature type="modified residue" description="Phosphoserine" evidence="53">
    <location>
        <position position="975"/>
    </location>
</feature>
<feature type="modified residue" description="Phosphoserine; by CSNK1A1" evidence="67">
    <location>
        <position position="1035"/>
    </location>
</feature>
<feature type="lipid moiety-binding region" description="S-palmitoyl cysteine" evidence="77">
    <location>
        <position position="130"/>
    </location>
</feature>
<feature type="lipid moiety-binding region" description="S-palmitoyl cysteine" evidence="74">
    <location>
        <position position="837"/>
    </location>
</feature>
<feature type="lipid moiety-binding region" description="S-palmitoyl cysteine" evidence="74">
    <location>
        <position position="838"/>
    </location>
</feature>
<feature type="lipid moiety-binding region" description="S-palmitoyl cysteine" evidence="74">
    <location>
        <position position="844"/>
    </location>
</feature>
<feature type="lipid moiety-binding region" description="S-palmitoyl cysteine" evidence="77">
    <location>
        <position position="958"/>
    </location>
</feature>
<feature type="disulfide bond" description="Redox-active" evidence="28">
    <location>
        <begin position="8"/>
        <end position="108"/>
    </location>
</feature>
<feature type="cross-link" description="Glycyl lysine isopeptide (Lys-Gly) (interchain with G-Cter in ubiquitin)" evidence="75">
    <location>
        <position position="324"/>
    </location>
</feature>
<feature type="cross-link" description="Glycyl lysine isopeptide (Lys-Gly) (interchain with G-Cter in ubiquitin)" evidence="75">
    <location>
        <position position="430"/>
    </location>
</feature>
<feature type="cross-link" description="Glycyl lysine isopeptide (Lys-Gly) (interchain with G-Cter in ubiquitin)" evidence="45">
    <location>
        <position position="689"/>
    </location>
</feature>
<feature type="cross-link" description="Glycyl lysine isopeptide (Lys-Gly) (interchain with G-Cter in ubiquitin)" evidence="67">
    <location>
        <position position="878"/>
    </location>
</feature>
<feature type="cross-link" description="Glycyl lysine isopeptide (Lys-Gly) (interchain with G-Cter in ubiquitin)" evidence="67">
    <location>
        <position position="927"/>
    </location>
</feature>
<feature type="cross-link" description="Glycyl lysine isopeptide (Lys-Gly) (interchain with G-Cter in ubiquitin)" evidence="67">
    <location>
        <position position="973"/>
    </location>
</feature>
<feature type="splice variant" id="VSP_005519" description="In isoform 3." evidence="82">
    <location>
        <begin position="720"/>
        <end position="1036"/>
    </location>
</feature>
<feature type="splice variant" id="VSP_005520" description="In isoform 1 and isoform 4." evidence="79 80 82 83 84 85">
    <location>
        <begin position="721"/>
        <end position="777"/>
    </location>
</feature>
<feature type="splice variant" id="VSP_053714" description="In isoform 6." evidence="85">
    <original>WLGRCGLSHECCFDISLVLSS</original>
    <variation>C</variation>
    <location>
        <begin position="776"/>
        <end position="796"/>
    </location>
</feature>
<feature type="splice variant" id="VSP_005521" description="In isoform 1 and isoform 5." evidence="79 80 82 83 84 87">
    <location>
        <begin position="836"/>
        <end position="892"/>
    </location>
</feature>
<feature type="sequence variant" id="VAR_080490" description="In KEFH; does not affect ability to homooligomerize into ordered polymers; dbSNP:rs200154873." evidence="54 71">
    <original>D</original>
    <variation>H</variation>
    <location>
        <position position="21"/>
    </location>
</feature>
<feature type="sequence variant" id="VAR_043679" description="In CINCA; dbSNP:rs180177449." evidence="15">
    <original>I</original>
    <variation>T</variation>
    <location>
        <position position="174"/>
    </location>
</feature>
<feature type="sequence variant" id="VAR_013227" description="In FCAS1 and MWS; dbSNP:rs121908147." evidence="5 7 9 17">
    <original>V</original>
    <variation>M</variation>
    <location>
        <position position="200"/>
    </location>
</feature>
<feature type="sequence variant" id="VAR_043680" description="In CINCA; dbSNP:rs180177442." evidence="12">
    <original>R</original>
    <variation>L</variation>
    <location>
        <position position="262"/>
    </location>
</feature>
<feature type="sequence variant" id="VAR_043681" description="In CINCA; dbSNP:rs180177442." evidence="12">
    <original>R</original>
    <variation>P</variation>
    <location>
        <position position="262"/>
    </location>
</feature>
<feature type="sequence variant" id="VAR_014104" description="In FCAS1 and MWS; spontaneous polymerization into inflammasome speck; dbSNP:rs121908150." evidence="7 9 42">
    <original>R</original>
    <variation>W</variation>
    <location>
        <position position="262"/>
    </location>
</feature>
<feature type="sequence variant" id="VAR_043682" description="In CINCA; dbSNP:rs180177436." evidence="10">
    <original>L</original>
    <variation>H</variation>
    <location>
        <position position="266"/>
    </location>
</feature>
<feature type="sequence variant" id="VAR_043683" description="In CINCA; dbSNP:rs180177447." evidence="12">
    <original>D</original>
    <variation>G</variation>
    <location>
        <position position="305"/>
    </location>
</feature>
<feature type="sequence variant" id="VAR_014105" description="In CINCA and MWS; spontaneous polymerization into inflammasome speck; dbSNP:rs121908153." evidence="7 8 10 12 17 42 58">
    <original>D</original>
    <variation>N</variation>
    <location>
        <position position="305"/>
    </location>
</feature>
<feature type="sequence variant" id="VAR_014124" description="In FCAS1 and MWS; dbSNP:rs180177431." evidence="9 17">
    <original>L</original>
    <variation>P</variation>
    <location>
        <position position="307"/>
    </location>
</feature>
<feature type="sequence variant" id="VAR_043684" description="In CINCA; dbSNP:rs180177432." evidence="8">
    <original>Q</original>
    <variation>K</variation>
    <location>
        <position position="308"/>
    </location>
</feature>
<feature type="sequence variant" id="VAR_014106" description="In CINCA; dbSNP:rs121908154." evidence="8 12">
    <original>F</original>
    <variation>S</variation>
    <location>
        <position position="311"/>
    </location>
</feature>
<feature type="sequence variant" id="VAR_014366" description="In MWS and CINCA; spontaneous polymerization into inflammasome speck; dbSNP:rs151344629." evidence="7 12 17 42">
    <original>T</original>
    <variation>M</variation>
    <location>
        <position position="350"/>
    </location>
</feature>
<feature type="sequence variant" id="VAR_013228" description="In MWS; dbSNP:rs121908149." evidence="5">
    <original>A</original>
    <variation>V</variation>
    <location>
        <position position="354"/>
    </location>
</feature>
<feature type="sequence variant" id="VAR_043685" description="In FCAS1; dbSNP:rs28937896." evidence="11">
    <original>L</original>
    <variation>P</variation>
    <location>
        <position position="355"/>
    </location>
</feature>
<feature type="sequence variant" id="VAR_043686" description="In CINCA; dbSNP:rs180177444." evidence="12">
    <original>E</original>
    <variation>D</variation>
    <location>
        <position position="356"/>
    </location>
</feature>
<feature type="sequence variant" id="VAR_014367" description="In CINCA; dbSNP:rs180177434." evidence="8">
    <original>H</original>
    <variation>R</variation>
    <location>
        <position position="360"/>
    </location>
</feature>
<feature type="sequence variant" id="VAR_043687" description="In CINCA; dbSNP:rs180177445." evidence="12">
    <original>T</original>
    <variation>P</variation>
    <location>
        <position position="407"/>
    </location>
</feature>
<feature type="sequence variant" id="VAR_043688" description="In CINCA; dbSNP:rs180177433." evidence="12">
    <original>T</original>
    <variation>I</variation>
    <location>
        <position position="438"/>
    </location>
</feature>
<feature type="sequence variant" id="VAR_014368" description="In CINCA; dbSNP:rs180177433." evidence="8">
    <original>T</original>
    <variation>N</variation>
    <location>
        <position position="438"/>
    </location>
</feature>
<feature type="sequence variant" id="VAR_014369" description="In MWS; dbSNP:rs180177430." evidence="7">
    <original>A</original>
    <variation>T</variation>
    <location>
        <position position="441"/>
    </location>
</feature>
<feature type="sequence variant" id="VAR_013229" description="In FCAS1; dbSNP:rs121908146." evidence="5">
    <original>A</original>
    <variation>V</variation>
    <location>
        <position position="441"/>
    </location>
</feature>
<feature type="sequence variant" id="VAR_043689" description="In FCAS1; dbSNP:rs145268073." evidence="17">
    <original>R</original>
    <variation>K</variation>
    <location>
        <position position="490"/>
    </location>
</feature>
<feature type="sequence variant" id="VAR_031853" description="In FCAS1; dbSNP:rs180177478." evidence="20">
    <original>F</original>
    <variation>C</variation>
    <location>
        <position position="525"/>
    </location>
</feature>
<feature type="sequence variant" id="VAR_043690" description="In CINCA; dbSNP:rs180177439." evidence="10">
    <original>F</original>
    <variation>L</variation>
    <location>
        <position position="525"/>
    </location>
</feature>
<feature type="sequence variant" id="VAR_014107" description="In MWS; dbSNP:rs121908151." evidence="7">
    <original>G</original>
    <variation>R</variation>
    <location>
        <position position="571"/>
    </location>
</feature>
<feature type="sequence variant" id="VAR_043691" description="In CINCA; dbSNP:rs180177438." evidence="10 12">
    <original>Y</original>
    <variation>C</variation>
    <location>
        <position position="572"/>
    </location>
</feature>
<feature type="sequence variant" id="VAR_014108" description="In CINCA; dbSNP:rs121908152." evidence="8">
    <original>F</original>
    <variation>S</variation>
    <location>
        <position position="575"/>
    </location>
</feature>
<feature type="sequence variant" id="VAR_013230" description="In FCAS1; dbSNP:rs121908148." evidence="5">
    <original>E</original>
    <variation>G</variation>
    <location>
        <position position="629"/>
    </location>
</feature>
<feature type="sequence variant" id="VAR_043692" description="In CINCA; dbSNP:rs180177446." evidence="12">
    <original>L</original>
    <variation>F</variation>
    <location>
        <position position="634"/>
    </location>
</feature>
<feature type="sequence variant" id="VAR_014370" description="In CINCA; dbSNP:rs180177435." evidence="8">
    <original>M</original>
    <variation>T</variation>
    <location>
        <position position="664"/>
    </location>
</feature>
<feature type="sequence variant" id="VAR_043693" description="In dbSNP:rs35829419." evidence="11">
    <original>Q</original>
    <variation>K</variation>
    <location>
        <position position="705"/>
    </location>
</feature>
<feature type="sequence variant" id="VAR_023551" description="In CINCA; dbSNP:rs180177452." evidence="16">
    <original>Y</original>
    <variation>C</variation>
    <location>
        <position position="861"/>
    </location>
</feature>
<feature type="sequence variant" id="VAR_081008" description="In DFNA34; uncertain significance; increases inflammatory response; dbSNP:rs1553293095." evidence="52">
    <original>R</original>
    <variation>Q</variation>
    <location>
        <position position="920"/>
    </location>
</feature>
<feature type="mutagenesis site" description="Strongly decreased interaction with MAVS and localization to mitochondria." evidence="34">
    <location>
        <begin position="2"/>
        <end position="7"/>
    </location>
</feature>
<feature type="mutagenesis site" description="Decreased phosphorylation; increased activation of the NLRP3 inflammasome." evidence="50">
    <original>S</original>
    <variation>A</variation>
    <location>
        <position position="5"/>
    </location>
</feature>
<feature type="mutagenesis site" description="Mimics phosphorylation state; decreased activation of the NLRP3 inflammasome." evidence="50">
    <original>S</original>
    <variation>D</variation>
    <variation>E</variation>
    <location>
        <position position="5"/>
    </location>
</feature>
<feature type="mutagenesis site" description="Abolished formation of the NLRP3 inflammasome." evidence="50">
    <original>RCKLAR</original>
    <variation>ACALAA</variation>
    <location>
        <begin position="7"/>
        <end position="12"/>
    </location>
</feature>
<feature type="mutagenesis site" description="Impaired ability to homooligomerize into ordered polymers." evidence="71">
    <original>R</original>
    <variation>E</variation>
    <location>
        <position position="7"/>
    </location>
</feature>
<feature type="mutagenesis site" description="Impaired ability to homooligomerize into ordered polymers. Complete loss of PYCARD/ASC filament nucleation." evidence="41 71">
    <original>E</original>
    <variation>R</variation>
    <location>
        <position position="15"/>
    </location>
</feature>
<feature type="mutagenesis site" description="Loss of PYCARD/ASC-binding. No effect on GBP5-binding." evidence="29">
    <original>LK</original>
    <variation>PA</variation>
    <location>
        <begin position="22"/>
        <end position="23"/>
    </location>
</feature>
<feature type="mutagenesis site" description="Impaired ability to homooligomerize into ordered polymers. Complete loss of PYCARD/ASC filament nucleation." evidence="71">
    <original>KK</original>
    <variation>EE</variation>
    <location>
        <begin position="23"/>
        <end position="24"/>
    </location>
</feature>
<feature type="mutagenesis site" description="Complete loss of PYCARD/ASC filament nucleation; when associated with E-24." evidence="41">
    <original>K</original>
    <variation>E</variation>
    <location>
        <position position="23"/>
    </location>
</feature>
<feature type="mutagenesis site" description="Complete loss of PYCARD/ASC filament nucleation; when associated with E-23." evidence="41">
    <original>K</original>
    <variation>E</variation>
    <location>
        <position position="24"/>
    </location>
</feature>
<feature type="mutagenesis site" description="Impaired ability to homooligomerize into ordered polymers. Complete loss of PYCARD/ASC filament nucleation." evidence="41 71">
    <original>M</original>
    <variation>E</variation>
    <location>
        <position position="27"/>
    </location>
</feature>
<feature type="mutagenesis site" description="Impaired ability to homooligomerize into ordered polymers. Decreased PYCARD/ASC filament nucleation." evidence="71">
    <original>D</original>
    <variation>V</variation>
    <location>
        <position position="31"/>
    </location>
</feature>
<feature type="mutagenesis site" description="Impaired ability to homooligomerize into ordered polymers." evidence="71">
    <original>R</original>
    <variation>E</variation>
    <location>
        <position position="43"/>
    </location>
</feature>
<feature type="mutagenesis site" description="Complete loss of PYCARD/ASC filament nucleation. Decreased PYCARD/ASC filament nucleation." evidence="41">
    <original>R</original>
    <variation>W</variation>
    <location>
        <position position="43"/>
    </location>
</feature>
<feature type="mutagenesis site" description="Does not affect ability to homooligomerize into ordered polymers." evidence="71">
    <original>H</original>
    <variation>R</variation>
    <location>
        <position position="51"/>
    </location>
</feature>
<feature type="mutagenesis site" description="Decreased interaction with MAPK4." evidence="51">
    <original>V</original>
    <variation>G</variation>
    <location>
        <position position="52"/>
    </location>
</feature>
<feature type="mutagenesis site" description="Complete loss of PYCARD/ASC filament nucleation." evidence="41">
    <original>E</original>
    <variation>R</variation>
    <location>
        <position position="64"/>
    </location>
</feature>
<feature type="mutagenesis site" description="Does not affect ubiquitination by the SCF(FBXL2) complex." evidence="45">
    <original>W</original>
    <variation>A</variation>
    <location>
        <position position="68"/>
    </location>
</feature>
<feature type="mutagenesis site" description="Decreased ubiquitination by the SCF(FBXL2) complex." evidence="45">
    <original>W</original>
    <variation>A</variation>
    <location>
        <position position="73"/>
    </location>
</feature>
<feature type="mutagenesis site" description="Induces the formation of short but ordered homopolymers." evidence="71">
    <original>A</original>
    <variation>V</variation>
    <location>
        <position position="77"/>
    </location>
</feature>
<feature type="mutagenesis site" description="Impaired ability to homooligomerize into ordered polymers. Decreased PYCARD/ASC filament nucleation." evidence="71">
    <original>R</original>
    <variation>E</variation>
    <location>
        <position position="80"/>
    </location>
</feature>
<feature type="mutagenesis site" description="Impaired ability to homooligomerize into ordered polymers. Decreased PYCARD/ASC filament nucleation." evidence="71">
    <original>R</original>
    <variation>E</variation>
    <location>
        <position position="81"/>
    </location>
</feature>
<feature type="mutagenesis site" description="Complete loss of PYCARD/ASC filament nucleation." evidence="41">
    <original>D</original>
    <variation>R</variation>
    <location>
        <position position="82"/>
    </location>
</feature>
<feature type="mutagenesis site" description="Decreased palmitoylation and activation of the NLRP3 inflammasome; when associated with A-958." evidence="77">
    <original>C</original>
    <variation>A</variation>
    <location>
        <position position="130"/>
    </location>
</feature>
<feature type="mutagenesis site" description="Decreased phosphorylation by BTK; when associated with F-168." evidence="66">
    <original>YRKKYRKY</original>
    <variation>FRKKFRKF</variation>
    <location>
        <begin position="136"/>
        <end position="143"/>
    </location>
</feature>
<feature type="mutagenesis site" description="Decreased ability to activate the NLRP3 inflammasome." evidence="72">
    <original>Y</original>
    <variation>R</variation>
    <location>
        <position position="143"/>
    </location>
</feature>
<feature type="mutagenesis site" description="Impaired ability to activate the NLRP3 inflammasome." evidence="73">
    <original>R</original>
    <variation>E</variation>
    <location>
        <position position="147"/>
    </location>
</feature>
<feature type="mutagenesis site" description="Impaired ability to activate the NLRP3 inflammasome." evidence="73">
    <original>E</original>
    <variation>R</variation>
    <location>
        <position position="152"/>
    </location>
</feature>
<feature type="mutagenesis site" description="Impaired ability to activate the NLRP3 inflammasome." evidence="73">
    <original>N</original>
    <variation>A</variation>
    <location>
        <position position="155"/>
    </location>
</feature>
<feature type="mutagenesis site" description="Impaired ability to activate the NLRP3 inflammasome." evidence="73">
    <original>R</original>
    <variation>E</variation>
    <location>
        <position position="157"/>
    </location>
</feature>
<feature type="mutagenesis site" description="Impaired ability to activate the NLRP3 inflammasome." evidence="73">
    <original>K</original>
    <variation>E</variation>
    <location>
        <position position="166"/>
    </location>
</feature>
<feature type="mutagenesis site" description="Decreased phosphorylation by BTK; when associated with 136-F--F-143." evidence="66">
    <original>Y</original>
    <variation>F</variation>
    <location>
        <position position="168"/>
    </location>
</feature>
<feature type="mutagenesis site" description="Impaired ability to activate the NLRP3 inflammasome." evidence="73">
    <original>E</original>
    <variation>R</variation>
    <location>
        <position position="176"/>
    </location>
</feature>
<feature type="mutagenesis site" description="Abolished phosphorylation by MAPK8/JNK1; decreased activation of the NLRP3 inflammasome." evidence="49">
    <original>S</original>
    <variation>A</variation>
    <location>
        <position position="198"/>
    </location>
</feature>
<feature type="mutagenesis site" description="Mimicks phosphorylation state; increased activation of the NLRP3 inflammasome." evidence="49">
    <original>S</original>
    <variation>D</variation>
    <variation>E</variation>
    <location>
        <position position="198"/>
    </location>
</feature>
<feature type="mutagenesis site" description="Does not affect ability to activate the NLRP3 inflammasome." evidence="73">
    <original>D</original>
    <variation>R</variation>
    <location>
        <position position="213"/>
    </location>
</feature>
<feature type="mutagenesis site" description="Abolished binding to small-inhibitor MCC950 and ability to activate the NLRP3 inflammasome following stimulation with nigericin." evidence="69">
    <original>A</original>
    <variation>Q</variation>
    <location>
        <position position="228"/>
    </location>
</feature>
<feature type="mutagenesis site" description="In Walker A mutant; abolished ATPase activity. Reduced ATP-binding leading to decreased activation of the NLRP3 inflammasome." evidence="22 57">
    <original>GKT</original>
    <variation>AAA</variation>
    <location>
        <begin position="231"/>
        <end position="233"/>
    </location>
</feature>
<feature type="mutagenesis site" description="Abolished phosphorylation by LATS1, leading to decreased activation of the NLRP3 inflammasome." evidence="77">
    <original>S</original>
    <variation>A</variation>
    <location>
        <position position="265"/>
    </location>
</feature>
<feature type="mutagenesis site" description="In Walker B mutant; abolished ATPase activity. Abolished binding to small-inhibitor MCC950." evidence="57 58">
    <original>DGFDE</original>
    <variation>AGFAA</variation>
    <variation>AGFNA</variation>
    <location>
        <begin position="302"/>
        <end position="306"/>
    </location>
</feature>
<feature type="mutagenesis site" description="Complete loss of PYCARD/ASC filament nucleation." evidence="75">
    <original>K</original>
    <variation>R</variation>
    <location>
        <position position="324"/>
    </location>
</feature>
<feature type="mutagenesis site" description="Abolished binding to small-inhibitor MCC950 and ability to activate the NLRP3 inflammasome following stimulation with nigericin." evidence="69">
    <original>R</original>
    <variation>T</variation>
    <location>
        <position position="351"/>
    </location>
</feature>
<feature type="mutagenesis site" description="Does not affect ability to activate the NLRP3 inflammasome." evidence="59 73">
    <original>Q</original>
    <variation>A</variation>
    <variation>R</variation>
    <location>
        <position position="359"/>
    </location>
</feature>
<feature type="mutagenesis site" description="Decreased interaction with HSPA8/HSC70 and NLRP3 degradation by the chaperone-mediated autophagy pathway." evidence="74">
    <original>Q</original>
    <variation>A</variation>
    <location>
        <position position="359"/>
    </location>
</feature>
<feature type="mutagenesis site" description="Does not affect ability to activate the NLRP3 inflammasome." evidence="73">
    <original>H</original>
    <variation>E</variation>
    <location>
        <position position="364"/>
    </location>
</feature>
<feature type="mutagenesis site" description="Impaired ability to activate the NLRP3 inflammasome." evidence="73">
    <original>Q</original>
    <variation>A</variation>
    <location>
        <position position="424"/>
    </location>
</feature>
<feature type="mutagenesis site" description="Complete loss of PYCARD/ASC filament nucleation." evidence="75">
    <original>K</original>
    <variation>R</variation>
    <location>
        <position position="430"/>
    </location>
</feature>
<feature type="mutagenesis site" description="Impaired ability to activate the NLRP3 inflammasome." evidence="73">
    <original>Q</original>
    <variation>A</variation>
    <location>
        <position position="509"/>
    </location>
</feature>
<feature type="mutagenesis site" description="Abolished binding to small-inhibitor MCC950 and ability to activate the NLRP3 inflammasome following stimulation with nigericin." evidence="69">
    <original>R</original>
    <variation>A</variation>
    <location>
        <position position="578"/>
    </location>
</feature>
<feature type="mutagenesis site" description="Decreased interaction with HSPA8/HSC70 and NLRP3 degradation by the chaperone-mediated autophagy pathway." evidence="74">
    <original>Q</original>
    <variation>A</variation>
    <location>
        <position position="603"/>
    </location>
</feature>
<feature type="mutagenesis site" description="Does not affect autoinhibition of the protein." evidence="69">
    <original>KKL</original>
    <variation>EEA</variation>
    <location>
        <begin position="619"/>
        <end position="621"/>
    </location>
</feature>
<feature type="mutagenesis site" description="Strongly decreased ability to activate the NLRP3 inflammasome." evidence="59">
    <original>QEE</original>
    <variation>RRR</variation>
    <location>
        <begin position="638"/>
        <end position="640"/>
    </location>
</feature>
<feature type="mutagenesis site" description="Loss of autoinhibition of the protein." evidence="69">
    <location>
        <begin position="689"/>
        <end position="698"/>
    </location>
</feature>
<feature type="mutagenesis site" description="Abolished ubiquitination by the SCF(FBXL2) complex." evidence="45">
    <original>K</original>
    <variation>R</variation>
    <location>
        <position position="689"/>
    </location>
</feature>
<feature type="mutagenesis site" description="Decreased ability to activate the NLRP3 inflammasome." evidence="59">
    <original>V</original>
    <variation>R</variation>
    <location>
        <position position="707"/>
    </location>
</feature>
<feature type="mutagenesis site" description="Does not affect activation of the NLRP3 inflammasome." evidence="67">
    <original>S</original>
    <variation>A</variation>
    <location>
        <position position="735"/>
    </location>
</feature>
<feature type="mutagenesis site" description="Abolished ability to activate the NLRP3 inflammasome." evidence="59">
    <original>E</original>
    <variation>R</variation>
    <location>
        <position position="745"/>
    </location>
</feature>
<feature type="mutagenesis site" description="Abolished ability to activate the NLRP3 inflammasome." evidence="59">
    <original>D</original>
    <variation>R</variation>
    <location>
        <position position="750"/>
    </location>
</feature>
<feature type="mutagenesis site" description="Slightly impaired autoinhibition of the protein; when associated with A-831." evidence="69">
    <original>FD</original>
    <variation>AR</variation>
    <location>
        <begin position="788"/>
        <end position="789"/>
    </location>
</feature>
<feature type="mutagenesis site" description="Slightly decreased ability to activate the NLRP3 inflammasome; when associated with E-813." evidence="72">
    <original>F</original>
    <variation>E</variation>
    <location>
        <position position="788"/>
    </location>
</feature>
<feature type="mutagenesis site" description="Slightly decreased ability to activate the NLRP3 inflammasome; when associated with D-816." evidence="72">
    <original>D</original>
    <variation>R</variation>
    <location>
        <position position="789"/>
    </location>
</feature>
<feature type="mutagenesis site" description="Decreased interaction with HSPA8/HSC70 and NLRP3 degradation by the chaperone-mediated autophagy pathway." evidence="74">
    <original>Q</original>
    <variation>A</variation>
    <location>
        <position position="798"/>
    </location>
</feature>
<feature type="mutagenesis site" description="Abolished ability to activate the NLRP3 inflammasome." evidence="59">
    <original>E</original>
    <variation>R</variation>
    <location>
        <position position="802"/>
    </location>
</feature>
<feature type="mutagenesis site" description="Abolished phosphorylation by CSNK1A1; increased activation of the NLRP3 inflammasome." evidence="67">
    <original>S</original>
    <variation>A</variation>
    <location>
        <position position="806"/>
    </location>
</feature>
<feature type="mutagenesis site" description="Mimics phosphorylation state; decreased activation of the NLRP3 inflammasome." evidence="67">
    <original>S</original>
    <variation>D</variation>
    <variation>E</variation>
    <location>
        <position position="806"/>
    </location>
</feature>
<feature type="mutagenesis site" description="Slightly decreased ability to activate the NLRP3 inflammasome; when associated with E-788." evidence="72">
    <original>F</original>
    <variation>E</variation>
    <location>
        <position position="813"/>
    </location>
</feature>
<feature type="mutagenesis site" description="Slightly decreased ability to activate the NLRP3 inflammasome; when associated with R-789." evidence="72">
    <original>R</original>
    <variation>D</variation>
    <location>
        <position position="816"/>
    </location>
</feature>
<feature type="mutagenesis site" description="Slightly impaired autoinhibition of the protein; when associated with 788-A-R-789." evidence="69">
    <original>K</original>
    <variation>A</variation>
    <location>
        <position position="831"/>
    </location>
</feature>
<feature type="mutagenesis site" description="Does not affect ability to activate the NLRP3 inflammasome." evidence="59">
    <original>W</original>
    <variation>G</variation>
    <location>
        <position position="833"/>
    </location>
</feature>
<feature type="mutagenesis site" description="Abolished palmitoylation by ZDHHC5; when associated with S-838." evidence="76">
    <original>C</original>
    <variation>S</variation>
    <location>
        <position position="837"/>
    </location>
</feature>
<feature type="mutagenesis site" description="Partially affected palmitoylation by ZDHHC5, about 50% loss of interaction with NEK7." evidence="76">
    <original>C</original>
    <variation>S</variation>
    <location>
        <position position="837"/>
    </location>
</feature>
<feature type="mutagenesis site" description="Abolished palmitoylation by ZDHHC12, preventing degradation by the chaperone-mediated autophagy pathway." evidence="74">
    <original>C</original>
    <variation>A</variation>
    <location>
        <position position="844"/>
    </location>
</feature>
<feature type="mutagenesis site" description="Abolished phosphorylation." evidence="47">
    <original>Y</original>
    <variation>F</variation>
    <location>
        <position position="861"/>
    </location>
</feature>
<feature type="mutagenesis site" description="Decreased ability to activate the NLRP3 inflammasome." evidence="59">
    <original>E</original>
    <variation>R</variation>
    <location>
        <position position="864"/>
    </location>
</feature>
<feature type="mutagenesis site" description="Decreased ability to activate the NLRP3 inflammasome." evidence="59">
    <original>Y</original>
    <variation>G</variation>
    <location>
        <position position="918"/>
    </location>
</feature>
<feature type="mutagenesis site" description="Decreased palmitoylation and activation of the NLRP3 inflammasome; when associated with A-130." evidence="77">
    <original>C</original>
    <variation>A</variation>
    <location>
        <position position="958"/>
    </location>
</feature>
<feature type="mutagenesis site" description="Decreased interaction with HSPA8/HSC70 and NLRP3 degradation by the chaperone-mediated autophagy pathway." evidence="74">
    <original>Q</original>
    <variation>A</variation>
    <location>
        <position position="995"/>
    </location>
</feature>
<feature type="mutagenesis site" description="Does not affect activation of the NLRP3 inflammasome." evidence="67">
    <original>S</original>
    <variation>A</variation>
    <location>
        <position position="1035"/>
    </location>
</feature>
<feature type="sequence conflict" description="In Ref. 2; AAL78632/AAM14669/AAL14640." evidence="88" ref="2">
    <original>R</original>
    <variation>L</variation>
    <location>
        <position position="167"/>
    </location>
</feature>
<feature type="sequence conflict" description="In Ref. 2; AAL78632/AAM14669/AAL14640." evidence="88" ref="2">
    <original>Q</original>
    <variation>H</variation>
    <location>
        <position position="323"/>
    </location>
</feature>
<feature type="sequence conflict" description="In Ref. 10; AAC39910." evidence="88" ref="10">
    <original>T</original>
    <variation>S</variation>
    <location>
        <position position="439"/>
    </location>
</feature>
<feature type="sequence conflict" description="In Ref. 5; BAG37494." evidence="88" ref="5">
    <original>M</original>
    <variation>V</variation>
    <location>
        <position position="523"/>
    </location>
</feature>
<feature type="sequence conflict" description="In Ref. 10; AAC39910." evidence="88" ref="10">
    <original>K</original>
    <variation>M</variation>
    <location>
        <position position="599"/>
    </location>
</feature>
<feature type="sequence conflict" description="In Ref. 2; AAL78632/AAM14669/AAL14640." evidence="88" ref="2">
    <original>K</original>
    <variation>N</variation>
    <location>
        <position position="617"/>
    </location>
</feature>
<feature type="sequence conflict" description="In Ref. 10; AAC39910." evidence="88" ref="10">
    <original>QI</original>
    <variation>HD</variation>
    <location>
        <begin position="622"/>
        <end position="623"/>
    </location>
</feature>
<feature type="helix" evidence="104">
    <location>
        <begin position="6"/>
        <end position="15"/>
    </location>
</feature>
<feature type="helix" evidence="104">
    <location>
        <begin position="19"/>
        <end position="30"/>
    </location>
</feature>
<feature type="strand" evidence="104">
    <location>
        <begin position="34"/>
        <end position="37"/>
    </location>
</feature>
<feature type="helix" evidence="104">
    <location>
        <begin position="43"/>
        <end position="48"/>
    </location>
</feature>
<feature type="helix" evidence="104">
    <location>
        <begin position="51"/>
        <end position="62"/>
    </location>
</feature>
<feature type="helix" evidence="104">
    <location>
        <begin position="64"/>
        <end position="77"/>
    </location>
</feature>
<feature type="helix" evidence="104">
    <location>
        <begin position="81"/>
        <end position="89"/>
    </location>
</feature>
<feature type="helix" evidence="109">
    <location>
        <begin position="135"/>
        <end position="147"/>
    </location>
</feature>
<feature type="helix" evidence="109">
    <location>
        <begin position="164"/>
        <end position="167"/>
    </location>
</feature>
<feature type="strand" evidence="109">
    <location>
        <begin position="172"/>
        <end position="175"/>
    </location>
</feature>
<feature type="helix" evidence="109">
    <location>
        <begin position="206"/>
        <end position="209"/>
    </location>
</feature>
<feature type="turn" evidence="106">
    <location>
        <begin position="217"/>
        <end position="220"/>
    </location>
</feature>
<feature type="strand" evidence="109">
    <location>
        <begin position="221"/>
        <end position="225"/>
    </location>
</feature>
<feature type="helix" evidence="109">
    <location>
        <begin position="232"/>
        <end position="244"/>
    </location>
</feature>
<feature type="strand" evidence="109">
    <location>
        <begin position="247"/>
        <end position="249"/>
    </location>
</feature>
<feature type="turn" evidence="109">
    <location>
        <begin position="250"/>
        <end position="252"/>
    </location>
</feature>
<feature type="strand" evidence="109">
    <location>
        <begin position="254"/>
        <end position="260"/>
    </location>
</feature>
<feature type="helix" evidence="109">
    <location>
        <begin position="261"/>
        <end position="263"/>
    </location>
</feature>
<feature type="strand" evidence="109">
    <location>
        <begin position="266"/>
        <end position="270"/>
    </location>
</feature>
<feature type="helix" evidence="109">
    <location>
        <begin position="272"/>
        <end position="278"/>
    </location>
</feature>
<feature type="strand" evidence="109">
    <location>
        <begin position="280"/>
        <end position="284"/>
    </location>
</feature>
<feature type="helix" evidence="109">
    <location>
        <begin position="287"/>
        <end position="290"/>
    </location>
</feature>
<feature type="helix" evidence="109">
    <location>
        <begin position="294"/>
        <end position="296"/>
    </location>
</feature>
<feature type="strand" evidence="109">
    <location>
        <begin position="297"/>
        <end position="302"/>
    </location>
</feature>
<feature type="helix" evidence="109">
    <location>
        <begin position="304"/>
        <end position="306"/>
    </location>
</feature>
<feature type="strand" evidence="106">
    <location>
        <begin position="308"/>
        <end position="313"/>
    </location>
</feature>
<feature type="strand" evidence="108">
    <location>
        <begin position="322"/>
        <end position="327"/>
    </location>
</feature>
<feature type="helix" evidence="109">
    <location>
        <begin position="328"/>
        <end position="336"/>
    </location>
</feature>
<feature type="strand" evidence="107">
    <location>
        <begin position="340"/>
        <end position="343"/>
    </location>
</feature>
<feature type="strand" evidence="109">
    <location>
        <begin position="344"/>
        <end position="350"/>
    </location>
</feature>
<feature type="helix" evidence="109">
    <location>
        <begin position="352"/>
        <end position="354"/>
    </location>
</feature>
<feature type="helix" evidence="109">
    <location>
        <begin position="355"/>
        <end position="358"/>
    </location>
</feature>
<feature type="turn" evidence="109">
    <location>
        <begin position="359"/>
        <end position="361"/>
    </location>
</feature>
<feature type="strand" evidence="109">
    <location>
        <begin position="366"/>
        <end position="372"/>
    </location>
</feature>
<feature type="helix" evidence="109">
    <location>
        <begin position="375"/>
        <end position="385"/>
    </location>
</feature>
<feature type="strand" evidence="105">
    <location>
        <begin position="386"/>
        <end position="388"/>
    </location>
</feature>
<feature type="helix" evidence="109">
    <location>
        <begin position="389"/>
        <end position="401"/>
    </location>
</feature>
<feature type="helix" evidence="109">
    <location>
        <begin position="403"/>
        <end position="408"/>
    </location>
</feature>
<feature type="helix" evidence="109">
    <location>
        <begin position="412"/>
        <end position="428"/>
    </location>
</feature>
<feature type="helix" evidence="109">
    <location>
        <begin position="439"/>
        <end position="450"/>
    </location>
</feature>
<feature type="turn" evidence="107">
    <location>
        <begin position="452"/>
        <end position="454"/>
    </location>
</feature>
<feature type="helix" evidence="109">
    <location>
        <begin position="466"/>
        <end position="478"/>
    </location>
</feature>
<feature type="strand" evidence="109">
    <location>
        <begin position="482"/>
        <end position="484"/>
    </location>
</feature>
<feature type="helix" evidence="109">
    <location>
        <begin position="486"/>
        <end position="491"/>
    </location>
</feature>
<feature type="helix" evidence="109">
    <location>
        <begin position="496"/>
        <end position="504"/>
    </location>
</feature>
<feature type="strand" evidence="109">
    <location>
        <begin position="507"/>
        <end position="510"/>
    </location>
</feature>
<feature type="strand" evidence="107">
    <location>
        <begin position="513"/>
        <end position="516"/>
    </location>
</feature>
<feature type="strand" evidence="109">
    <location>
        <begin position="518"/>
        <end position="522"/>
    </location>
</feature>
<feature type="helix" evidence="109">
    <location>
        <begin position="523"/>
        <end position="533"/>
    </location>
</feature>
<feature type="helix" evidence="109">
    <location>
        <begin position="558"/>
        <end position="563"/>
    </location>
</feature>
<feature type="turn" evidence="109">
    <location>
        <begin position="564"/>
        <end position="566"/>
    </location>
</feature>
<feature type="helix" evidence="109">
    <location>
        <begin position="568"/>
        <end position="570"/>
    </location>
</feature>
<feature type="turn" evidence="109">
    <location>
        <begin position="571"/>
        <end position="573"/>
    </location>
</feature>
<feature type="helix" evidence="109">
    <location>
        <begin position="574"/>
        <end position="583"/>
    </location>
</feature>
<feature type="helix" evidence="107">
    <location>
        <begin position="590"/>
        <end position="592"/>
    </location>
</feature>
<feature type="helix" evidence="109">
    <location>
        <begin position="593"/>
        <end position="595"/>
    </location>
</feature>
<feature type="helix" evidence="109">
    <location>
        <begin position="598"/>
        <end position="616"/>
    </location>
</feature>
<feature type="strand" evidence="105">
    <location>
        <begin position="621"/>
        <end position="623"/>
    </location>
</feature>
<feature type="helix" evidence="109">
    <location>
        <begin position="627"/>
        <end position="637"/>
    </location>
</feature>
<feature type="helix" evidence="109">
    <location>
        <begin position="640"/>
        <end position="647"/>
    </location>
</feature>
<feature type="strand" evidence="106">
    <location>
        <begin position="652"/>
        <end position="657"/>
    </location>
</feature>
<feature type="helix" evidence="109">
    <location>
        <begin position="660"/>
        <end position="670"/>
    </location>
</feature>
<feature type="helix" evidence="108">
    <location>
        <begin position="672"/>
        <end position="674"/>
    </location>
</feature>
<feature type="strand" evidence="106">
    <location>
        <begin position="679"/>
        <end position="683"/>
    </location>
</feature>
<feature type="helix" evidence="106">
    <location>
        <begin position="727"/>
        <end position="739"/>
    </location>
</feature>
<feature type="strand" evidence="106">
    <location>
        <begin position="745"/>
        <end position="747"/>
    </location>
</feature>
<feature type="helix" evidence="106">
    <location>
        <begin position="754"/>
        <end position="765"/>
    </location>
</feature>
<feature type="strand" evidence="106">
    <location>
        <begin position="774"/>
        <end position="776"/>
    </location>
</feature>
<feature type="helix" evidence="106">
    <location>
        <begin position="784"/>
        <end position="796"/>
    </location>
</feature>
<feature type="strand" evidence="106">
    <location>
        <begin position="802"/>
        <end position="804"/>
    </location>
</feature>
<feature type="helix" evidence="106">
    <location>
        <begin position="811"/>
        <end position="822"/>
    </location>
</feature>
<feature type="strand" evidence="107">
    <location>
        <begin position="824"/>
        <end position="826"/>
    </location>
</feature>
<feature type="strand" evidence="106">
    <location>
        <begin position="831"/>
        <end position="833"/>
    </location>
</feature>
<feature type="helix" evidence="106">
    <location>
        <begin position="844"/>
        <end position="851"/>
    </location>
</feature>
<feature type="strand" evidence="106">
    <location>
        <begin position="859"/>
        <end position="861"/>
    </location>
</feature>
<feature type="helix" evidence="106">
    <location>
        <begin position="868"/>
        <end position="879"/>
    </location>
</feature>
<feature type="strand" evidence="106">
    <location>
        <begin position="888"/>
        <end position="890"/>
    </location>
</feature>
<feature type="helix" evidence="106">
    <location>
        <begin position="901"/>
        <end position="910"/>
    </location>
</feature>
<feature type="strand" evidence="106">
    <location>
        <begin position="916"/>
        <end position="918"/>
    </location>
</feature>
<feature type="helix" evidence="106">
    <location>
        <begin position="925"/>
        <end position="936"/>
    </location>
</feature>
<feature type="strand" evidence="107">
    <location>
        <begin position="938"/>
        <end position="940"/>
    </location>
</feature>
<feature type="strand" evidence="106">
    <location>
        <begin position="945"/>
        <end position="947"/>
    </location>
</feature>
<feature type="helix" evidence="106">
    <location>
        <begin position="955"/>
        <end position="957"/>
    </location>
</feature>
<feature type="helix" evidence="106">
    <location>
        <begin position="958"/>
        <end position="967"/>
    </location>
</feature>
<feature type="strand" evidence="106">
    <location>
        <begin position="973"/>
        <end position="975"/>
    </location>
</feature>
<feature type="helix" evidence="106">
    <location>
        <begin position="983"/>
        <end position="993"/>
    </location>
</feature>
<feature type="strand" evidence="106">
    <location>
        <begin position="1002"/>
        <end position="1004"/>
    </location>
</feature>
<feature type="helix" evidence="106">
    <location>
        <begin position="1012"/>
        <end position="1024"/>
    </location>
</feature>
<feature type="strand" evidence="106">
    <location>
        <begin position="1028"/>
        <end position="1031"/>
    </location>
</feature>
<reference key="1">
    <citation type="journal article" date="2001" name="Nat. Genet.">
        <title>Mutation of a new gene encoding a putative pyrin-like protein causes familial cold autoinflammatory syndrome and Muckle-Wells syndrome.</title>
        <authorList>
            <person name="Hoffman H.M."/>
            <person name="Mueller J.L."/>
            <person name="Broide D.H."/>
            <person name="Wanderer A.A."/>
            <person name="Kolodner R.D."/>
        </authorList>
    </citation>
    <scope>NUCLEOTIDE SEQUENCE [GENOMIC DNA / MRNA] (ISOFORMS 1 AND 2)</scope>
    <scope>VARIANTS FCAS1 MET-200; VAL-441 AND GLY-629</scope>
    <scope>VARIANT MWS VAL-354</scope>
</reference>
<reference key="2">
    <citation type="journal article" date="2002" name="Arthritis Rheum.">
        <title>Association of mutations in the NALP3/CIAS1/PYPAF1 gene with a broad phenotype including recurrent fever, cold sensitivity, sensorineural deafness, and AA amyloidosis.</title>
        <authorList>
            <person name="Aganna E."/>
            <person name="Martinon F."/>
            <person name="Hawkins P.N."/>
            <person name="Ross J.B."/>
            <person name="Swan D.C."/>
            <person name="Booth D.R."/>
            <person name="Lachmann H.J."/>
            <person name="Gaudet R."/>
            <person name="Woo P."/>
            <person name="Feighery C."/>
            <person name="Cotter F.E."/>
            <person name="Thome M."/>
            <person name="Hitman G.A."/>
            <person name="Tschopp J."/>
            <person name="McDermott M.F."/>
        </authorList>
    </citation>
    <scope>NUCLEOTIDE SEQUENCE [MRNA] (ISOFORMS 1; 2 AND 3)</scope>
    <scope>VARIANT MWS MET-200</scope>
    <scope>VARIANTS FCAS1/MWS TRP-262 AND PRO-307</scope>
</reference>
<reference key="3">
    <citation type="journal article" date="2002" name="J. Biol. Chem.">
        <title>PYPAF1: a PYRIN-containing APAF1-like protein that assembles with ASC and activates NF-kB.</title>
        <authorList>
            <person name="Manji G.A."/>
            <person name="Wang L."/>
            <person name="Geddes B.J."/>
            <person name="Brown M."/>
            <person name="Merriam S."/>
            <person name="Al-Garawi A."/>
            <person name="Mak S."/>
            <person name="Lora J.M."/>
            <person name="Briskin M."/>
            <person name="Jurman M."/>
            <person name="Cao J."/>
            <person name="DiStefano P.S."/>
            <person name="Bertin J."/>
        </authorList>
    </citation>
    <scope>NUCLEOTIDE SEQUENCE [MRNA] (ISOFORM 2)</scope>
    <scope>INTERACTION WITH PYCARD</scope>
    <scope>SUBCELLULAR LOCATION</scope>
    <scope>TISSUE SPECIFICITY</scope>
    <scope>AUTOINHIBITION</scope>
</reference>
<reference key="4">
    <citation type="journal article" date="2004" name="Nat. Genet.">
        <title>Complete sequencing and characterization of 21,243 full-length human cDNAs.</title>
        <authorList>
            <person name="Ota T."/>
            <person name="Suzuki Y."/>
            <person name="Nishikawa T."/>
            <person name="Otsuki T."/>
            <person name="Sugiyama T."/>
            <person name="Irie R."/>
            <person name="Wakamatsu A."/>
            <person name="Hayashi K."/>
            <person name="Sato H."/>
            <person name="Nagai K."/>
            <person name="Kimura K."/>
            <person name="Makita H."/>
            <person name="Sekine M."/>
            <person name="Obayashi M."/>
            <person name="Nishi T."/>
            <person name="Shibahara T."/>
            <person name="Tanaka T."/>
            <person name="Ishii S."/>
            <person name="Yamamoto J."/>
            <person name="Saito K."/>
            <person name="Kawai Y."/>
            <person name="Isono Y."/>
            <person name="Nakamura Y."/>
            <person name="Nagahari K."/>
            <person name="Murakami K."/>
            <person name="Yasuda T."/>
            <person name="Iwayanagi T."/>
            <person name="Wagatsuma M."/>
            <person name="Shiratori A."/>
            <person name="Sudo H."/>
            <person name="Hosoiri T."/>
            <person name="Kaku Y."/>
            <person name="Kodaira H."/>
            <person name="Kondo H."/>
            <person name="Sugawara M."/>
            <person name="Takahashi M."/>
            <person name="Kanda K."/>
            <person name="Yokoi T."/>
            <person name="Furuya T."/>
            <person name="Kikkawa E."/>
            <person name="Omura Y."/>
            <person name="Abe K."/>
            <person name="Kamihara K."/>
            <person name="Katsuta N."/>
            <person name="Sato K."/>
            <person name="Tanikawa M."/>
            <person name="Yamazaki M."/>
            <person name="Ninomiya K."/>
            <person name="Ishibashi T."/>
            <person name="Yamashita H."/>
            <person name="Murakawa K."/>
            <person name="Fujimori K."/>
            <person name="Tanai H."/>
            <person name="Kimata M."/>
            <person name="Watanabe M."/>
            <person name="Hiraoka S."/>
            <person name="Chiba Y."/>
            <person name="Ishida S."/>
            <person name="Ono Y."/>
            <person name="Takiguchi S."/>
            <person name="Watanabe S."/>
            <person name="Yosida M."/>
            <person name="Hotuta T."/>
            <person name="Kusano J."/>
            <person name="Kanehori K."/>
            <person name="Takahashi-Fujii A."/>
            <person name="Hara H."/>
            <person name="Tanase T.-O."/>
            <person name="Nomura Y."/>
            <person name="Togiya S."/>
            <person name="Komai F."/>
            <person name="Hara R."/>
            <person name="Takeuchi K."/>
            <person name="Arita M."/>
            <person name="Imose N."/>
            <person name="Musashino K."/>
            <person name="Yuuki H."/>
            <person name="Oshima A."/>
            <person name="Sasaki N."/>
            <person name="Aotsuka S."/>
            <person name="Yoshikawa Y."/>
            <person name="Matsunawa H."/>
            <person name="Ichihara T."/>
            <person name="Shiohata N."/>
            <person name="Sano S."/>
            <person name="Moriya S."/>
            <person name="Momiyama H."/>
            <person name="Satoh N."/>
            <person name="Takami S."/>
            <person name="Terashima Y."/>
            <person name="Suzuki O."/>
            <person name="Nakagawa S."/>
            <person name="Senoh A."/>
            <person name="Mizoguchi H."/>
            <person name="Goto Y."/>
            <person name="Shimizu F."/>
            <person name="Wakebe H."/>
            <person name="Hishigaki H."/>
            <person name="Watanabe T."/>
            <person name="Sugiyama A."/>
            <person name="Takemoto M."/>
            <person name="Kawakami B."/>
            <person name="Yamazaki M."/>
            <person name="Watanabe K."/>
            <person name="Kumagai A."/>
            <person name="Itakura S."/>
            <person name="Fukuzumi Y."/>
            <person name="Fujimori Y."/>
            <person name="Komiyama M."/>
            <person name="Tashiro H."/>
            <person name="Tanigami A."/>
            <person name="Fujiwara T."/>
            <person name="Ono T."/>
            <person name="Yamada K."/>
            <person name="Fujii Y."/>
            <person name="Ozaki K."/>
            <person name="Hirao M."/>
            <person name="Ohmori Y."/>
            <person name="Kawabata A."/>
            <person name="Hikiji T."/>
            <person name="Kobatake N."/>
            <person name="Inagaki H."/>
            <person name="Ikema Y."/>
            <person name="Okamoto S."/>
            <person name="Okitani R."/>
            <person name="Kawakami T."/>
            <person name="Noguchi S."/>
            <person name="Itoh T."/>
            <person name="Shigeta K."/>
            <person name="Senba T."/>
            <person name="Matsumura K."/>
            <person name="Nakajima Y."/>
            <person name="Mizuno T."/>
            <person name="Morinaga M."/>
            <person name="Sasaki M."/>
            <person name="Togashi T."/>
            <person name="Oyama M."/>
            <person name="Hata H."/>
            <person name="Watanabe M."/>
            <person name="Komatsu T."/>
            <person name="Mizushima-Sugano J."/>
            <person name="Satoh T."/>
            <person name="Shirai Y."/>
            <person name="Takahashi Y."/>
            <person name="Nakagawa K."/>
            <person name="Okumura K."/>
            <person name="Nagase T."/>
            <person name="Nomura N."/>
            <person name="Kikuchi H."/>
            <person name="Masuho Y."/>
            <person name="Yamashita R."/>
            <person name="Nakai K."/>
            <person name="Yada T."/>
            <person name="Nakamura Y."/>
            <person name="Ohara O."/>
            <person name="Isogai T."/>
            <person name="Sugano S."/>
        </authorList>
    </citation>
    <scope>NUCLEOTIDE SEQUENCE [LARGE SCALE MRNA] (ISOFORM 1)</scope>
    <source>
        <tissue>Brain</tissue>
    </source>
</reference>
<reference key="5">
    <citation type="submission" date="2005-03" db="EMBL/GenBank/DDBJ databases">
        <authorList>
            <person name="Totoki Y."/>
            <person name="Toyoda A."/>
            <person name="Takeda T."/>
            <person name="Sakaki Y."/>
            <person name="Tanaka A."/>
            <person name="Yokoyama S."/>
            <person name="Ohara O."/>
            <person name="Nagase T."/>
            <person name="Kikuno R.F."/>
        </authorList>
    </citation>
    <scope>NUCLEOTIDE SEQUENCE [LARGE SCALE MRNA] (ISOFORM 5)</scope>
    <source>
        <tissue>Brain</tissue>
    </source>
</reference>
<reference key="6">
    <citation type="journal article" date="2006" name="Nature">
        <title>The DNA sequence and biological annotation of human chromosome 1.</title>
        <authorList>
            <person name="Gregory S.G."/>
            <person name="Barlow K.F."/>
            <person name="McLay K.E."/>
            <person name="Kaul R."/>
            <person name="Swarbreck D."/>
            <person name="Dunham A."/>
            <person name="Scott C.E."/>
            <person name="Howe K.L."/>
            <person name="Woodfine K."/>
            <person name="Spencer C.C.A."/>
            <person name="Jones M.C."/>
            <person name="Gillson C."/>
            <person name="Searle S."/>
            <person name="Zhou Y."/>
            <person name="Kokocinski F."/>
            <person name="McDonald L."/>
            <person name="Evans R."/>
            <person name="Phillips K."/>
            <person name="Atkinson A."/>
            <person name="Cooper R."/>
            <person name="Jones C."/>
            <person name="Hall R.E."/>
            <person name="Andrews T.D."/>
            <person name="Lloyd C."/>
            <person name="Ainscough R."/>
            <person name="Almeida J.P."/>
            <person name="Ambrose K.D."/>
            <person name="Anderson F."/>
            <person name="Andrew R.W."/>
            <person name="Ashwell R.I.S."/>
            <person name="Aubin K."/>
            <person name="Babbage A.K."/>
            <person name="Bagguley C.L."/>
            <person name="Bailey J."/>
            <person name="Beasley H."/>
            <person name="Bethel G."/>
            <person name="Bird C.P."/>
            <person name="Bray-Allen S."/>
            <person name="Brown J.Y."/>
            <person name="Brown A.J."/>
            <person name="Buckley D."/>
            <person name="Burton J."/>
            <person name="Bye J."/>
            <person name="Carder C."/>
            <person name="Chapman J.C."/>
            <person name="Clark S.Y."/>
            <person name="Clarke G."/>
            <person name="Clee C."/>
            <person name="Cobley V."/>
            <person name="Collier R.E."/>
            <person name="Corby N."/>
            <person name="Coville G.J."/>
            <person name="Davies J."/>
            <person name="Deadman R."/>
            <person name="Dunn M."/>
            <person name="Earthrowl M."/>
            <person name="Ellington A.G."/>
            <person name="Errington H."/>
            <person name="Frankish A."/>
            <person name="Frankland J."/>
            <person name="French L."/>
            <person name="Garner P."/>
            <person name="Garnett J."/>
            <person name="Gay L."/>
            <person name="Ghori M.R.J."/>
            <person name="Gibson R."/>
            <person name="Gilby L.M."/>
            <person name="Gillett W."/>
            <person name="Glithero R.J."/>
            <person name="Grafham D.V."/>
            <person name="Griffiths C."/>
            <person name="Griffiths-Jones S."/>
            <person name="Grocock R."/>
            <person name="Hammond S."/>
            <person name="Harrison E.S.I."/>
            <person name="Hart E."/>
            <person name="Haugen E."/>
            <person name="Heath P.D."/>
            <person name="Holmes S."/>
            <person name="Holt K."/>
            <person name="Howden P.J."/>
            <person name="Hunt A.R."/>
            <person name="Hunt S.E."/>
            <person name="Hunter G."/>
            <person name="Isherwood J."/>
            <person name="James R."/>
            <person name="Johnson C."/>
            <person name="Johnson D."/>
            <person name="Joy A."/>
            <person name="Kay M."/>
            <person name="Kershaw J.K."/>
            <person name="Kibukawa M."/>
            <person name="Kimberley A.M."/>
            <person name="King A."/>
            <person name="Knights A.J."/>
            <person name="Lad H."/>
            <person name="Laird G."/>
            <person name="Lawlor S."/>
            <person name="Leongamornlert D.A."/>
            <person name="Lloyd D.M."/>
            <person name="Loveland J."/>
            <person name="Lovell J."/>
            <person name="Lush M.J."/>
            <person name="Lyne R."/>
            <person name="Martin S."/>
            <person name="Mashreghi-Mohammadi M."/>
            <person name="Matthews L."/>
            <person name="Matthews N.S.W."/>
            <person name="McLaren S."/>
            <person name="Milne S."/>
            <person name="Mistry S."/>
            <person name="Moore M.J.F."/>
            <person name="Nickerson T."/>
            <person name="O'Dell C.N."/>
            <person name="Oliver K."/>
            <person name="Palmeiri A."/>
            <person name="Palmer S.A."/>
            <person name="Parker A."/>
            <person name="Patel D."/>
            <person name="Pearce A.V."/>
            <person name="Peck A.I."/>
            <person name="Pelan S."/>
            <person name="Phelps K."/>
            <person name="Phillimore B.J."/>
            <person name="Plumb R."/>
            <person name="Rajan J."/>
            <person name="Raymond C."/>
            <person name="Rouse G."/>
            <person name="Saenphimmachak C."/>
            <person name="Sehra H.K."/>
            <person name="Sheridan E."/>
            <person name="Shownkeen R."/>
            <person name="Sims S."/>
            <person name="Skuce C.D."/>
            <person name="Smith M."/>
            <person name="Steward C."/>
            <person name="Subramanian S."/>
            <person name="Sycamore N."/>
            <person name="Tracey A."/>
            <person name="Tromans A."/>
            <person name="Van Helmond Z."/>
            <person name="Wall M."/>
            <person name="Wallis J.M."/>
            <person name="White S."/>
            <person name="Whitehead S.L."/>
            <person name="Wilkinson J.E."/>
            <person name="Willey D.L."/>
            <person name="Williams H."/>
            <person name="Wilming L."/>
            <person name="Wray P.W."/>
            <person name="Wu Z."/>
            <person name="Coulson A."/>
            <person name="Vaudin M."/>
            <person name="Sulston J.E."/>
            <person name="Durbin R.M."/>
            <person name="Hubbard T."/>
            <person name="Wooster R."/>
            <person name="Dunham I."/>
            <person name="Carter N.P."/>
            <person name="McVean G."/>
            <person name="Ross M.T."/>
            <person name="Harrow J."/>
            <person name="Olson M.V."/>
            <person name="Beck S."/>
            <person name="Rogers J."/>
            <person name="Bentley D.R."/>
        </authorList>
    </citation>
    <scope>NUCLEOTIDE SEQUENCE [LARGE SCALE GENOMIC DNA]</scope>
</reference>
<reference key="7">
    <citation type="submission" date="2005-07" db="EMBL/GenBank/DDBJ databases">
        <authorList>
            <person name="Mural R.J."/>
            <person name="Istrail S."/>
            <person name="Sutton G.G."/>
            <person name="Florea L."/>
            <person name="Halpern A.L."/>
            <person name="Mobarry C.M."/>
            <person name="Lippert R."/>
            <person name="Walenz B."/>
            <person name="Shatkay H."/>
            <person name="Dew I."/>
            <person name="Miller J.R."/>
            <person name="Flanigan M.J."/>
            <person name="Edwards N.J."/>
            <person name="Bolanos R."/>
            <person name="Fasulo D."/>
            <person name="Halldorsson B.V."/>
            <person name="Hannenhalli S."/>
            <person name="Turner R."/>
            <person name="Yooseph S."/>
            <person name="Lu F."/>
            <person name="Nusskern D.R."/>
            <person name="Shue B.C."/>
            <person name="Zheng X.H."/>
            <person name="Zhong F."/>
            <person name="Delcher A.L."/>
            <person name="Huson D.H."/>
            <person name="Kravitz S.A."/>
            <person name="Mouchard L."/>
            <person name="Reinert K."/>
            <person name="Remington K.A."/>
            <person name="Clark A.G."/>
            <person name="Waterman M.S."/>
            <person name="Eichler E.E."/>
            <person name="Adams M.D."/>
            <person name="Hunkapiller M.W."/>
            <person name="Myers E.W."/>
            <person name="Venter J.C."/>
        </authorList>
    </citation>
    <scope>NUCLEOTIDE SEQUENCE [LARGE SCALE GENOMIC DNA]</scope>
</reference>
<reference key="8">
    <citation type="journal article" date="2004" name="Genome Res.">
        <title>The status, quality, and expansion of the NIH full-length cDNA project: the Mammalian Gene Collection (MGC).</title>
        <authorList>
            <consortium name="The MGC Project Team"/>
        </authorList>
    </citation>
    <scope>NUCLEOTIDE SEQUENCE [LARGE SCALE MRNA] (ISOFORMS 2; 4 AND 6)</scope>
    <source>
        <tissue>Colon</tissue>
    </source>
</reference>
<reference key="9">
    <citation type="journal article" date="2003" name="J. Immunol.">
        <title>CIAS1/cryopyrin/PYPAF1/NALP3/CATERPILLER 1.1 is an inducible inflammatory mediator with NF-kappa B suppressive properties.</title>
        <authorList>
            <person name="O'Connor W. Jr."/>
            <person name="Harton J.A."/>
            <person name="Zhu X."/>
            <person name="Linhoff M.W."/>
            <person name="Ting J.-P."/>
        </authorList>
    </citation>
    <scope>NUCLEOTIDE SEQUENCE [MRNA] OF 2-1036 (ISOFORM 4)</scope>
    <scope>ALTERNATIVE SPLICING (ISOFORMS 1 AND 2)</scope>
    <scope>SUBCELLULAR LOCATION</scope>
    <scope>INDUCTION BY LPS; LTA; POLY(I:C) AND TNF</scope>
</reference>
<reference key="10">
    <citation type="journal article" date="2000" name="Genome Res.">
        <title>Cloning and functional analysis of cDNAs with open reading frames for 300 previously undefined genes expressed in CD34+ hematopoietic stem/progenitor cells.</title>
        <authorList>
            <person name="Zhang Q.-H."/>
            <person name="Ye M."/>
            <person name="Wu X.-Y."/>
            <person name="Ren S.-X."/>
            <person name="Zhao M."/>
            <person name="Zhao C.-J."/>
            <person name="Fu G."/>
            <person name="Shen Y."/>
            <person name="Fan H.-Y."/>
            <person name="Lu G."/>
            <person name="Zhong M."/>
            <person name="Xu X.-R."/>
            <person name="Han Z.-G."/>
            <person name="Zhang J.-W."/>
            <person name="Tao J."/>
            <person name="Huang Q.-H."/>
            <person name="Zhou J."/>
            <person name="Hu G.-X."/>
            <person name="Gu J."/>
            <person name="Chen S.-J."/>
            <person name="Chen Z."/>
        </authorList>
    </citation>
    <scope>NUCLEOTIDE SEQUENCE [LARGE SCALE MRNA] OF 393-1036 (ISOFORM 1)</scope>
    <source>
        <tissue>Umbilical cord blood</tissue>
    </source>
</reference>
<reference key="11">
    <citation type="journal article" date="2004" name="Immunity">
        <title>NALP3 forms an IL-1beta-processing inflammasome with increased activity in Muckle-Wells autoinflammatory disorder.</title>
        <authorList>
            <person name="Agostini L."/>
            <person name="Martinon F."/>
            <person name="Burns K."/>
            <person name="McDermott M.F."/>
            <person name="Hawkins P.N."/>
            <person name="Tschopp J."/>
        </authorList>
    </citation>
    <scope>IDENTIFICATION OF NRLP3 INFLAMMASOME COMPLEX</scope>
</reference>
<reference key="12">
    <citation type="journal article" date="2006" name="Nature">
        <title>Gout-associated uric acid crystals activate the NALP3 inflammasome.</title>
        <authorList>
            <person name="Martinon F."/>
            <person name="Petrilli V."/>
            <person name="Mayor A."/>
            <person name="Tardivel A."/>
            <person name="Tschopp J."/>
        </authorList>
    </citation>
    <scope>FUNCTION</scope>
    <scope>ACTIVITY REGULATION</scope>
</reference>
<reference key="13">
    <citation type="journal article" date="2007" name="Cell Death Differ.">
        <title>The SPRY domain of Pyrin, mutated in familial Mediterranean fever patients, interacts with inflammasome components and inhibits proIL-1beta processing.</title>
        <authorList>
            <person name="Papin S."/>
            <person name="Cuenin S."/>
            <person name="Agostini L."/>
            <person name="Martinon F."/>
            <person name="Werner S."/>
            <person name="Beer H.D."/>
            <person name="Grutter C."/>
            <person name="Grutter M."/>
            <person name="Tschopp J."/>
        </authorList>
    </citation>
    <scope>INTERACTION WITH MEFV</scope>
</reference>
<reference key="14">
    <citation type="journal article" date="2007" name="J. Histochem. Cytochem.">
        <title>Inflammasome components NALP 1 and 3 Show distinct but separate expression profiles in human tissues suggesting a site-specific role in the inflammatory response.</title>
        <authorList>
            <person name="Kummer J.A."/>
            <person name="Broekhuizen R."/>
            <person name="Everett H."/>
            <person name="Agostini L."/>
            <person name="Kuijk L."/>
            <person name="Martinon F."/>
            <person name="van Bruggen R."/>
            <person name="Tschopp J."/>
        </authorList>
    </citation>
    <scope>SUBCELLULAR LOCATION</scope>
    <scope>TISSUE SPECIFICITY</scope>
</reference>
<reference key="15">
    <citation type="journal article" date="2007" name="Proc. Natl. Acad. Sci. U.S.A.">
        <title>Cryopyrin/NALP3 binds ATP/dATP, is an ATPase, and requires ATP binding to mediate inflammatory signaling.</title>
        <authorList>
            <person name="Duncan J.A."/>
            <person name="Bergstralh D.T."/>
            <person name="Wang Y."/>
            <person name="Willingham S.B."/>
            <person name="Ye Z."/>
            <person name="Zimmermann A.G."/>
            <person name="Ting J.P."/>
        </authorList>
    </citation>
    <scope>FUNCTION</scope>
    <scope>CATALYTIC ACTIVITY</scope>
    <scope>MUTAGENESIS OF 231-GLY--THR-233</scope>
</reference>
<reference key="16">
    <citation type="journal article" date="2008" name="J. Bone Miner. Res.">
        <title>Osteoblasts express NLRP3, a nucleotide-binding domain and leucine-rich repeat region containing receptor implicated in bacterially induced cell death.</title>
        <authorList>
            <person name="McCall S.H."/>
            <person name="Sahraei M."/>
            <person name="Young A.B."/>
            <person name="Worley C.S."/>
            <person name="Duncan J.A."/>
            <person name="Ting J.P."/>
            <person name="Marriott I."/>
        </authorList>
    </citation>
    <scope>TISSUE SPECIFICITY</scope>
    <scope>INDUCTION BY SALMONELLA</scope>
</reference>
<reference key="17">
    <citation type="journal article" date="2008" name="Nat. Immunol.">
        <title>Silica crystals and aluminum salts activate the NALP3 inflammasome through phagosomal destabilization.</title>
        <authorList>
            <person name="Hornung V."/>
            <person name="Bauernfeind F."/>
            <person name="Halle A."/>
            <person name="Samstad E.O."/>
            <person name="Kono H."/>
            <person name="Rock K.L."/>
            <person name="Fitzgerald K.A."/>
            <person name="Latz E."/>
        </authorList>
    </citation>
    <scope>FUNCTION</scope>
    <scope>ACTIVITY REGULATION</scope>
</reference>
<reference key="18">
    <citation type="journal article" date="2008" name="Science">
        <title>Innate immune activation through Nalp3 inflammasome sensing of asbestos and silica.</title>
        <authorList>
            <person name="Dostert C."/>
            <person name="Petrilli V."/>
            <person name="Van Bruggen R."/>
            <person name="Steele C."/>
            <person name="Mossman B.T."/>
            <person name="Tschopp J."/>
        </authorList>
    </citation>
    <scope>FUNCTION</scope>
    <scope>ACTIVITY REGULATION</scope>
</reference>
<reference key="19">
    <citation type="journal article" date="2009" name="J. Immunol.">
        <title>Neisseria gonorrhoeae activates the proteinase cathepsin B to mediate the signaling activities of the NLRP3 and ASC-containing inflammasome.</title>
        <authorList>
            <person name="Duncan J.A."/>
            <person name="Gao X."/>
            <person name="Huang M.T."/>
            <person name="O'Connor B.P."/>
            <person name="Thomas C.E."/>
            <person name="Willingham S.B."/>
            <person name="Bergstralh D.T."/>
            <person name="Jarvis G.A."/>
            <person name="Sparling P.F."/>
            <person name="Ting J.P."/>
        </authorList>
    </citation>
    <scope>FUNCTION</scope>
    <scope>ACTIVITY REGULATION</scope>
</reference>
<reference key="20">
    <citation type="journal article" date="2011" name="Nature">
        <title>A role for mitochondria in NLRP3 inflammasome activation.</title>
        <authorList>
            <person name="Zhou R."/>
            <person name="Yazdi A.S."/>
            <person name="Menu P."/>
            <person name="Tschopp J."/>
        </authorList>
    </citation>
    <scope>SUBCELLULAR LOCATION</scope>
</reference>
<reference key="21">
    <citation type="journal article" date="2012" name="J. Biol. Chem.">
        <title>Non-transcriptional priming and deubiquitination regulate NLRP3 inflammasome activation.</title>
        <authorList>
            <person name="Juliana C."/>
            <person name="Fernandes-Alnemri T."/>
            <person name="Kang S."/>
            <person name="Farias A."/>
            <person name="Qin F."/>
            <person name="Alnemri E.S."/>
        </authorList>
    </citation>
    <scope>UBIQUITINATION</scope>
</reference>
<reference key="22">
    <citation type="journal article" date="2012" name="Nature">
        <title>Novel role of PKR in inflammasome activation and HMGB1 release.</title>
        <authorList>
            <person name="Lu B."/>
            <person name="Nakamura T."/>
            <person name="Inouye K."/>
            <person name="Li J."/>
            <person name="Tang Y."/>
            <person name="Lundbaeck P."/>
            <person name="Valdes-Ferrer S.I."/>
            <person name="Olofsson P.S."/>
            <person name="Kalb T."/>
            <person name="Roth J."/>
            <person name="Zou Y."/>
            <person name="Erlandsson-Harris H."/>
            <person name="Yang H."/>
            <person name="Ting J.P."/>
            <person name="Wang H."/>
            <person name="Andersson U."/>
            <person name="Antoine D.J."/>
            <person name="Chavan S.S."/>
            <person name="Hotamisligil G.S."/>
            <person name="Tracey K.J."/>
        </authorList>
    </citation>
    <scope>FUNCTION</scope>
    <scope>INTERACTION WITH EIF2AK2</scope>
</reference>
<reference key="23">
    <citation type="journal article" date="2012" name="Science">
        <title>GBP5 promotes NLRP3 inflammasome assembly and immunity in mammals.</title>
        <authorList>
            <person name="Shenoy A.R."/>
            <person name="Wellington D.A."/>
            <person name="Kumar P."/>
            <person name="Kassa H."/>
            <person name="Booth C.J."/>
            <person name="Cresswell P."/>
            <person name="MacMicking J.D."/>
        </authorList>
    </citation>
    <scope>INTERACTION WITH GBP5</scope>
    <scope>MUTAGENESIS OF 22-LEU-LYS-23</scope>
</reference>
<reference key="24">
    <citation type="journal article" date="2013" name="Blood">
        <title>Selective inhibition of the NLRP3 inflammasome by targeting to promyelocytic leukemia protein in mouse and human.</title>
        <authorList>
            <person name="Lo Y.H."/>
            <person name="Huang Y.W."/>
            <person name="Wu Y.H."/>
            <person name="Tsai C.S."/>
            <person name="Lin Y.C."/>
            <person name="Mo S.T."/>
            <person name="Kuo W.C."/>
            <person name="Chuang Y.T."/>
            <person name="Jiang S.T."/>
            <person name="Shih H.M."/>
            <person name="Lai M.Z."/>
        </authorList>
    </citation>
    <scope>INTERACTION WITH PML</scope>
</reference>
<reference key="25">
    <citation type="journal article" date="2013" name="Curr. Opin. Immunol.">
        <title>Modulatory mechanisms controlling the NLRP3 inflammasome in inflammation: recent developments.</title>
        <authorList>
            <person name="Haneklaus M."/>
            <person name="O'Neill L.A."/>
            <person name="Coll R.C."/>
        </authorList>
    </citation>
    <scope>REVIEW</scope>
</reference>
<reference key="26">
    <citation type="journal article" date="2013" name="Immunity">
        <title>The DHX33 RNA helicase senses cytosolic RNA and activates the NLRP3 inflammasome.</title>
        <authorList>
            <person name="Mitoma H."/>
            <person name="Hanabuchi S."/>
            <person name="Kim T."/>
            <person name="Bao M."/>
            <person name="Zhang Z."/>
            <person name="Sugimoto N."/>
            <person name="Liu Y.J."/>
        </authorList>
    </citation>
    <scope>FUNCTION</scope>
    <scope>INTERACTION WITH DHX33</scope>
    <scope>SUBCELLULAR LOCATION</scope>
</reference>
<reference key="27">
    <citation type="journal article" date="2013" name="Immunity">
        <title>Omega-3 fatty acids prevent inflammation and metabolic disorder through inhibition of NLRP3 inflammasome activation.</title>
        <authorList>
            <person name="Yan Y."/>
            <person name="Jiang W."/>
            <person name="Spinetti T."/>
            <person name="Tardivel A."/>
            <person name="Castillo R."/>
            <person name="Bourquin C."/>
            <person name="Guarda G."/>
            <person name="Tian Z."/>
            <person name="Tschopp J."/>
            <person name="Zhou R."/>
        </authorList>
    </citation>
    <scope>INTERACTION WITH ARRB2</scope>
</reference>
<reference key="28">
    <citation type="journal article" date="2013" name="Cell">
        <title>The adaptor MAVS promotes NLRP3 mitochondrial localization and inflammasome activation.</title>
        <authorList>
            <person name="Subramanian N."/>
            <person name="Natarajan K."/>
            <person name="Clatworthy M.R."/>
            <person name="Wang Z."/>
            <person name="Germain R.N."/>
        </authorList>
    </citation>
    <scope>FUNCTION</scope>
    <scope>SUBCELLULAR LOCATION</scope>
    <scope>INTERACTION WITH MAVS</scope>
    <scope>MUTAGENESIS OF 2-LYS--ARG-7</scope>
</reference>
<reference key="29">
    <citation type="journal article" date="2013" name="Nat. Med.">
        <title>Activation of the Nlrp3 inflammasome in infiltrating macrophages by endocannabinoids mediates beta cell loss in type 2 diabetes.</title>
        <authorList>
            <person name="Jourdan T."/>
            <person name="Godlewski G."/>
            <person name="Cinar R."/>
            <person name="Bertola A."/>
            <person name="Szanda G."/>
            <person name="Liu J."/>
            <person name="Tam J."/>
            <person name="Han T."/>
            <person name="Mukhopadhyay B."/>
            <person name="Skarulis M.C."/>
            <person name="Ju C."/>
            <person name="Aouadi M."/>
            <person name="Czech M.P."/>
            <person name="Kunos G."/>
        </authorList>
    </citation>
    <scope>INDUCTION BY ENDOCANNABINOID ANANDAMIDE</scope>
</reference>
<reference key="30">
    <citation type="journal article" date="2013" name="Thorax">
        <title>Human respiratory syncytial virus viroporin SH: a viral recognition pathway used by the host to signal inflammasome activation.</title>
        <authorList>
            <person name="Triantafilou K."/>
            <person name="Kar S."/>
            <person name="Vakakis E."/>
            <person name="Kotecha S."/>
            <person name="Triantafilou M."/>
        </authorList>
    </citation>
    <scope>TISSUE SPECIFICITY</scope>
    <scope>SUBCELLULAR LOCATION</scope>
</reference>
<reference key="31">
    <citation type="journal article" date="2014" name="Arthritis Res. Ther.">
        <title>CARD8 is a negative regulator for NLRP3 inflammasome, but mutant NLRP3 in cryopyrin-associated periodic syndromes escapes the restriction.</title>
        <authorList>
            <person name="Ito S."/>
            <person name="Hara Y."/>
            <person name="Kubota T."/>
        </authorList>
    </citation>
    <scope>INTERACTION WITH CARD8</scope>
</reference>
<reference key="32">
    <citation type="journal article" date="2014" name="Cell">
        <title>Unified polymerization mechanism for the assembly of ASC-dependent inflammasomes.</title>
        <authorList>
            <person name="Lu A."/>
            <person name="Magupalli V.G."/>
            <person name="Ruan J."/>
            <person name="Yin Q."/>
            <person name="Atianand M.K."/>
            <person name="Vos M.R."/>
            <person name="Schroder G.F."/>
            <person name="Fitzgerald K.A."/>
            <person name="Wu H."/>
            <person name="Egelman E.H."/>
        </authorList>
    </citation>
    <scope>MECHANISM OF INFLAMMASOME ASSEMBLY</scope>
    <scope>MUTAGENESIS OF GLU-15; LYS-23; LYS-24; MET-27; ARG-43; GLU-64 AND ASP-82</scope>
</reference>
<reference key="33">
    <citation type="journal article" date="2014" name="J. Immunol.">
        <title>Inflammasome priming by lipopolysaccharide is dependent upon ERK signaling and proteasome function.</title>
        <authorList>
            <person name="Ghonime M.G."/>
            <person name="Shamaa O.R."/>
            <person name="Das S."/>
            <person name="Eldomany R.A."/>
            <person name="Fernandes-Alnemri T."/>
            <person name="Alnemri E.S."/>
            <person name="Gavrilin M.A."/>
            <person name="Wewers M.D."/>
        </authorList>
    </citation>
    <scope>PHOSPHORYLATION</scope>
</reference>
<reference key="34">
    <citation type="journal article" date="2014" name="MBio">
        <title>ADP-ribosylation of NLRP3 by Mycoplasma pneumoniae CARDS toxin regulates inflammasome activity.</title>
        <authorList>
            <person name="Bose S."/>
            <person name="Segovia J.A."/>
            <person name="Somarajan S.R."/>
            <person name="Chang T.H."/>
            <person name="Kannan T.R."/>
            <person name="Baseman J.B."/>
        </authorList>
    </citation>
    <scope>INTERACTION WITH M.PNEUMONIAE CARDS TOXIN</scope>
    <scope>SUBCELLULAR LOCATION</scope>
    <scope>PROBABLE ADP-RIBOSYLATION (MICROBIAL INFECTION)</scope>
</reference>
<reference key="35">
    <citation type="journal article" date="2014" name="Nat. Immunol.">
        <title>The PYRIN domain-only protein POP3 inhibits ALR inflammasomes and regulates responses to infection with DNA viruses.</title>
        <authorList>
            <person name="Khare S."/>
            <person name="Ratsimandresy R.A."/>
            <person name="de Almeida L."/>
            <person name="Cuda C.M."/>
            <person name="Rellick S.L."/>
            <person name="Misharin A.V."/>
            <person name="Wallin M.C."/>
            <person name="Gangopadhyay A."/>
            <person name="Forte E."/>
            <person name="Gottwein E."/>
            <person name="Perlman H."/>
            <person name="Reed J.C."/>
            <person name="Greaves D.R."/>
            <person name="Dorfleutner A."/>
            <person name="Stehlik C."/>
        </authorList>
    </citation>
    <scope>INTERACTION WITH PYDC5</scope>
</reference>
<reference key="36">
    <citation type="journal article" date="2014" name="Nat. Immunol.">
        <title>The NLRP3 inflammasome is released as a particulate danger signal that amplifies the inflammatory response.</title>
        <authorList>
            <person name="Baroja-Mazo A."/>
            <person name="Martin-Sanchez F."/>
            <person name="Gomez A.I."/>
            <person name="Martinez C.M."/>
            <person name="Amores-Iniesta J."/>
            <person name="Compan V."/>
            <person name="Barbera-Cremades M."/>
            <person name="Yaguee J."/>
            <person name="Ruiz-Ortiz E."/>
            <person name="Anton J."/>
            <person name="Bujan S."/>
            <person name="Couillin I."/>
            <person name="Brough D."/>
            <person name="Arostegui J.I."/>
            <person name="Pelegrin P."/>
        </authorList>
    </citation>
    <scope>SUBCELLULAR LOCATION</scope>
    <scope>CHARACTERIZATION OF VARIANT FCAS1/MWS TRP-262</scope>
    <scope>CHARACTERIZATION OF VARIANT CINCA ASN-305</scope>
    <scope>CHARACTERIZATION OF VARIANT CINCA/MWS MET-350</scope>
</reference>
<reference key="37">
    <citation type="journal article" date="2015" name="FEBS J.">
        <title>Structural mechanisms of inflammasome assembly.</title>
        <authorList>
            <person name="Lu A."/>
            <person name="Wu H."/>
        </authorList>
    </citation>
    <scope>REVIEW ON INFLAMMASOME ASSEMBLY</scope>
</reference>
<reference key="38">
    <citation type="journal article" date="2015" name="J. Biol. Chem.">
        <title>Lipopolysaccharide primes the NALP3 inflammasome by inhibiting its ubiquitination and degradation mediated by the SCFFBXL2 E3 ligase.</title>
        <authorList>
            <person name="Han S."/>
            <person name="Lear T.B."/>
            <person name="Jerome J.A."/>
            <person name="Rajbhandari S."/>
            <person name="Snavely C.A."/>
            <person name="Gulick D.L."/>
            <person name="Gibson K.F."/>
            <person name="Zou C."/>
            <person name="Chen B.B."/>
            <person name="Mallampalli R.K."/>
        </authorList>
    </citation>
    <scope>UBIQUITINATION AT LYS-689</scope>
    <scope>MUTAGENESIS OF TRP-68; TRP-73 AND LYS-689</scope>
</reference>
<reference key="39">
    <citation type="journal article" date="2015" name="J. Cell Biol.">
        <title>TRIM-mediated precision autophagy targets cytoplasmic regulators of innate immunity.</title>
        <authorList>
            <person name="Kimura T."/>
            <person name="Jain A."/>
            <person name="Choi S.W."/>
            <person name="Mandell M.A."/>
            <person name="Schroder K."/>
            <person name="Johansen T."/>
            <person name="Deretic V."/>
        </authorList>
    </citation>
    <scope>INTERACTION WITH MEFV</scope>
</reference>
<reference key="40">
    <citation type="journal article" date="2016" name="Nat. Commun.">
        <title>The E3 ubiquitin ligase TRIM31 attenuates NLRP3 inflammasome activation by promoting proteasomal degradation of NLRP3.</title>
        <authorList>
            <person name="Song H."/>
            <person name="Liu B."/>
            <person name="Huai W."/>
            <person name="Yu Z."/>
            <person name="Wang W."/>
            <person name="Zhao J."/>
            <person name="Han L."/>
            <person name="Jiang G."/>
            <person name="Zhang L."/>
            <person name="Gao C."/>
            <person name="Zhao W."/>
        </authorList>
    </citation>
    <scope>FUNCTION</scope>
    <scope>UBIQUITINATION</scope>
    <scope>MUTAGENESIS OF SER-198</scope>
</reference>
<reference key="41">
    <citation type="journal article" date="2017" name="Mol. Cell">
        <title>NLRP3 phosphorylation is an essential priming event for inflammasome activation.</title>
        <authorList>
            <person name="Song N."/>
            <person name="Liu Z.S."/>
            <person name="Xue W."/>
            <person name="Bai Z.F."/>
            <person name="Wang Q.Y."/>
            <person name="Dai J."/>
            <person name="Liu X."/>
            <person name="Huang Y.J."/>
            <person name="Cai H."/>
            <person name="Zhan X.Y."/>
            <person name="Han Q.Y."/>
            <person name="Wang H."/>
            <person name="Chen Y."/>
            <person name="Li H.Y."/>
            <person name="Li A.L."/>
            <person name="Zhang X.M."/>
            <person name="Zhou T."/>
            <person name="Li T."/>
        </authorList>
    </citation>
    <scope>PHOSPHORYLATION AT TYR-13; SER-163; SER-198; SER-334; SER-728 AND SER-975</scope>
</reference>
<reference key="42">
    <citation type="journal article" date="2017" name="Nat. Commun.">
        <title>MARK4 regulates NLRP3 positioning and inflammasome activation through a microtubule-dependent mechanism.</title>
        <authorList>
            <person name="Li X."/>
            <person name="Thome S."/>
            <person name="Ma X."/>
            <person name="Amrute-Nayak M."/>
            <person name="Finigan A."/>
            <person name="Kitt L."/>
            <person name="Masters L."/>
            <person name="James J.R."/>
            <person name="Shi Y."/>
            <person name="Meng G."/>
            <person name="Mallat Z."/>
        </authorList>
    </citation>
    <scope>FUNCTION</scope>
    <scope>SUBCELLULAR LOCATION</scope>
    <scope>INTERACTION WITH MARK4</scope>
    <scope>MUTAGENESIS OF VAL-52</scope>
</reference>
<reference key="43">
    <citation type="journal article" date="2015" name="Nat. Med.">
        <title>A small-molecule inhibitor of the NLRP3 inflammasome for the treatment of inflammatory diseases.</title>
        <authorList>
            <person name="Coll R.C."/>
            <person name="Robertson A.A."/>
            <person name="Chae J.J."/>
            <person name="Higgins S.C."/>
            <person name="Munoz-Planillo R."/>
            <person name="Inserra M.C."/>
            <person name="Vetter I."/>
            <person name="Dungan L.S."/>
            <person name="Monks B.G."/>
            <person name="Stutz A."/>
            <person name="Croker D.E."/>
            <person name="Butler M.S."/>
            <person name="Haneklaus M."/>
            <person name="Sutton C.E."/>
            <person name="Nunez G."/>
            <person name="Latz E."/>
            <person name="Kastner D.L."/>
            <person name="Mills K.H."/>
            <person name="Masters S.L."/>
            <person name="Schroder K."/>
            <person name="Cooper M.A."/>
            <person name="O'Neill L.A."/>
        </authorList>
    </citation>
    <scope>FUNCTION</scope>
    <scope>ACTIVITY REGULATION</scope>
</reference>
<reference key="44">
    <citation type="journal article" date="2016" name="J. Clin. Invest.">
        <title>NLRP3 tyrosine phosphorylation is controlled by protein tyrosine phosphatase PTPN22.</title>
        <authorList>
            <person name="Spalinger M.R."/>
            <person name="Kasper S."/>
            <person name="Gottier C."/>
            <person name="Lang S."/>
            <person name="Atrott K."/>
            <person name="Vavricka S.R."/>
            <person name="Scharl S."/>
            <person name="Raselli T."/>
            <person name="Frey-Wagner I."/>
            <person name="Gutte P.M."/>
            <person name="Gruetter M.G."/>
            <person name="Beer H.D."/>
            <person name="Contassot E."/>
            <person name="Chan A.C."/>
            <person name="Dai X."/>
            <person name="Rawlings D.J."/>
            <person name="Mair F."/>
            <person name="Becher B."/>
            <person name="Falk W."/>
            <person name="Fried M."/>
            <person name="Rogler G."/>
            <person name="Scharl M."/>
        </authorList>
    </citation>
    <scope>PHOSPHORYLATION AT TYR-861</scope>
    <scope>MUTAGENESIS OF TYR-861</scope>
</reference>
<reference key="45">
    <citation type="journal article" date="2017" name="J. Exp. Med.">
        <title>NLRP3 inflammasome assembly is regulated by phosphorylation of the pyrin domain.</title>
        <authorList>
            <person name="Stutz A."/>
            <person name="Kolbe C.C."/>
            <person name="Stahl R."/>
            <person name="Horvath G.L."/>
            <person name="Franklin B.S."/>
            <person name="van Ray O."/>
            <person name="Brinkschulte R."/>
            <person name="Geyer M."/>
            <person name="Meissner F."/>
            <person name="Latz E."/>
        </authorList>
    </citation>
    <scope>PHOSPHORYLATION AT SER-5</scope>
    <scope>7ACTIVITY REGULATION</scope>
    <scope>MUTAGENESIS OF SER-5 AND 7-ARG--ARG-12</scope>
</reference>
<reference key="46">
    <citation type="journal article" date="2017" name="Proc. Natl. Acad. Sci. U.S.A.">
        <title>mutation and cochlear autoinflammation cause syndromic and nonsyndromic hearing loss DFNA34 responsive to anakinra therapy.</title>
        <authorList>
            <person name="Nakanishi H."/>
            <person name="Kawashima Y."/>
            <person name="Kurima K."/>
            <person name="Chae J.J."/>
            <person name="Ross A.M."/>
            <person name="Pinto-Patarroyo G."/>
            <person name="Patel S.K."/>
            <person name="Muskett J.A."/>
            <person name="Ratay J.S."/>
            <person name="Chattaraj P."/>
            <person name="Park Y.H."/>
            <person name="Grevich S."/>
            <person name="Brewer C.C."/>
            <person name="Hoa M."/>
            <person name="Kim H.J."/>
            <person name="Butman J.A."/>
            <person name="Broderick L."/>
            <person name="Hoffman H.M."/>
            <person name="Aksentijevich I."/>
            <person name="Kastner D.L."/>
            <person name="Goldbach-Mansky R."/>
            <person name="Griffith A.J."/>
        </authorList>
    </citation>
    <scope>FUNCTION</scope>
    <scope>INVOLVEMENT IN DFNA34</scope>
    <scope>VARIANT DFNA34 GLN-920</scope>
    <scope>CHARACTERIZATION OF VARIANT DFNA34 GLN-920</scope>
</reference>
<reference key="47">
    <citation type="journal article" date="2018" name="Nature">
        <title>PtdIns4P on dispersed trans-Golgi network mediates NLRP3 inflammasome activation.</title>
        <authorList>
            <person name="Chen J."/>
            <person name="Chen Z.J."/>
        </authorList>
    </citation>
    <scope>FUNCTION</scope>
    <scope>ACTIVITY REGULATION</scope>
    <scope>SUBCELLULAR LOCATION</scope>
</reference>
<reference key="48">
    <citation type="journal article" date="2019" name="Mol. Cell">
        <title>The Crohn's disease risk factor IRGM limits NLRP3 inflammasome activation by impeding its assembly and by mediating its selective autophagy.</title>
        <authorList>
            <person name="Mehto S."/>
            <person name="Jena K.K."/>
            <person name="Nath P."/>
            <person name="Chauhan S."/>
            <person name="Kolapalli S.P."/>
            <person name="Das S.K."/>
            <person name="Sahoo P.K."/>
            <person name="Jain A."/>
            <person name="Taylor G.A."/>
            <person name="Chauhan S."/>
        </authorList>
    </citation>
    <scope>FUNCTION</scope>
    <scope>ACTIVITY REGULATION</scope>
    <scope>INTERACTION WITH IRGM</scope>
    <scope>PROTEIN DEGRADATION</scope>
</reference>
<reference key="49">
    <citation type="journal article" date="2019" name="Nat. Chem. Biol.">
        <title>MCC950 directly targets the NLRP3 ATP-hydrolysis motif for inflammasome inhibition.</title>
        <authorList>
            <person name="Coll R.C."/>
            <person name="Hill J.R."/>
            <person name="Day C.J."/>
            <person name="Zamoshnikova A."/>
            <person name="Boucher D."/>
            <person name="Massey N.L."/>
            <person name="Chitty J.L."/>
            <person name="Fraser J.A."/>
            <person name="Jennings M.P."/>
            <person name="Robertson A.A.B."/>
            <person name="Schroder K."/>
        </authorList>
    </citation>
    <scope>FUNCTION</scope>
    <scope>CATALYTIC ACTIVITY</scope>
    <scope>ACTIVITY REGULATION</scope>
    <scope>MUTAGENESIS OF 231-GLY--THR-233 AND 302-ASP--GLU-306</scope>
</reference>
<reference key="50">
    <citation type="journal article" date="2019" name="Nat. Chem. Biol.">
        <title>MCC950 closes the active conformation of NLRP3 to an inactive state.</title>
        <authorList>
            <person name="Tapia-Abellan A."/>
            <person name="Angosto-Bazarra D."/>
            <person name="Martinez-Banaclocha H."/>
            <person name="de Torre-Minguela C."/>
            <person name="Ceron-Carrasco J.P."/>
            <person name="Perez-Sanchez H."/>
            <person name="Arostegui J.I."/>
            <person name="Pelegrin P."/>
        </authorList>
    </citation>
    <scope>FUNCTION</scope>
    <scope>CATALYTIC ACTIVITY</scope>
    <scope>ACTIVITY REGULATION</scope>
    <scope>MUTAGENESIS OF 302-ASP--GLU-306</scope>
    <scope>CHARACTERIZATION OF VARIANT CINCA ASN-305</scope>
</reference>
<reference key="51">
    <citation type="journal article" date="2020" name="Nat. Commun.">
        <title>Calcium-sensing receptor-mediated NLRP3 inflammasome response to calciprotein particles drives inflammation in rheumatoid arthritis.</title>
        <authorList>
            <person name="Jaeger E."/>
            <person name="Murthy S."/>
            <person name="Schmidt C."/>
            <person name="Hahn M."/>
            <person name="Strobel S."/>
            <person name="Peters A."/>
            <person name="Staeubert C."/>
            <person name="Sungur P."/>
            <person name="Venus T."/>
            <person name="Geisler M."/>
            <person name="Radusheva V."/>
            <person name="Raps S."/>
            <person name="Rothe K."/>
            <person name="Scholz R."/>
            <person name="Jung S."/>
            <person name="Wagner S."/>
            <person name="Pierer M."/>
            <person name="Seifert O."/>
            <person name="Chang W."/>
            <person name="Estrela-Lopis I."/>
            <person name="Raulien N."/>
            <person name="Krohn K."/>
            <person name="Straeter N."/>
            <person name="Hoeppener S."/>
            <person name="Schoeneberg T."/>
            <person name="Rossol M."/>
            <person name="Wagner U."/>
        </authorList>
    </citation>
    <scope>ACTIVITY REGULATION</scope>
</reference>
<reference key="52">
    <citation type="journal article" date="2021" name="EMBO Mol. Med.">
        <title>Long-lived macrophage reprogramming drives spike protein-mediated inflammasome activation in COVID-19.</title>
        <authorList>
            <person name="Theobald S.J."/>
            <person name="Simonis A."/>
            <person name="Georgomanolis T."/>
            <person name="Kreer C."/>
            <person name="Zehner M."/>
            <person name="Eisfeld H.S."/>
            <person name="Albert M.C."/>
            <person name="Chhen J."/>
            <person name="Motameny S."/>
            <person name="Erger F."/>
            <person name="Fischer J."/>
            <person name="Malin J.J."/>
            <person name="Graeb J."/>
            <person name="Winter S."/>
            <person name="Pouikli A."/>
            <person name="David F."/>
            <person name="Boell B."/>
            <person name="Koehler P."/>
            <person name="Vanshylla K."/>
            <person name="Gruell H."/>
            <person name="Suarez I."/>
            <person name="Hallek M."/>
            <person name="Faetkenheuer G."/>
            <person name="Jung N."/>
            <person name="Cornely O.A."/>
            <person name="Lehmann C."/>
            <person name="Tessarz P."/>
            <person name="Altmueller J."/>
            <person name="Nuernberg P."/>
            <person name="Kashkar H."/>
            <person name="Klein F."/>
            <person name="Koch M."/>
            <person name="Rybniker J."/>
        </authorList>
    </citation>
    <scope>FUNCTION</scope>
    <scope>INDUCTION BY SARS-COV-2 INFECTION</scope>
    <scope>ACTIVITY REGULATION</scope>
    <scope>TISSUE SPECIFICITY</scope>
</reference>
<reference key="53">
    <citation type="journal article" date="2021" name="J. Exp. Med.">
        <title>Inflammasomes are activated in response to SARS-CoV-2 infection and are associated with COVID-19 severity in patients.</title>
        <authorList>
            <person name="Rodrigues T.S."/>
            <person name="de Sa K.S.G."/>
            <person name="Ishimoto A.Y."/>
            <person name="Becerra A."/>
            <person name="Oliveira S."/>
            <person name="Almeida L."/>
            <person name="Goncalves A.V."/>
            <person name="Perucello D.B."/>
            <person name="Andrade W.A."/>
            <person name="Castro R."/>
            <person name="Veras F.P."/>
            <person name="Toller-Kawahisa J.E."/>
            <person name="Nascimento D.C."/>
            <person name="de Lima M.H.F."/>
            <person name="Silva C.M.S."/>
            <person name="Caetite D.B."/>
            <person name="Martins R.B."/>
            <person name="Castro I.A."/>
            <person name="Pontelli M.C."/>
            <person name="de Barros F.C."/>
            <person name="do Amaral N.B."/>
            <person name="Giannini M.C."/>
            <person name="Bonjorno L.P."/>
            <person name="Lopes M.I.F."/>
            <person name="Santana R.C."/>
            <person name="Vilar F.C."/>
            <person name="Auxiliadora-Martins M."/>
            <person name="Luppino-Assad R."/>
            <person name="de Almeida S.C.L."/>
            <person name="de Oliveira F.R."/>
            <person name="Batah S.S."/>
            <person name="Siyuan L."/>
            <person name="Benatti M.N."/>
            <person name="Cunha T.M."/>
            <person name="Alves-Filho J.C."/>
            <person name="Cunha F.Q."/>
            <person name="Cunha L.D."/>
            <person name="Frantz F.G."/>
            <person name="Kohlsdorf T."/>
            <person name="Fabro A.T."/>
            <person name="Arruda E."/>
            <person name="de Oliveira R.D.R."/>
            <person name="Louzada-Junior P."/>
            <person name="Zamboni D.S."/>
        </authorList>
    </citation>
    <scope>FUNCTION</scope>
    <scope>ACTIVITY REGULATION</scope>
    <scope>SUBCELLULAR LOCATION</scope>
    <scope>TISSUE SPECIFICITY</scope>
</reference>
<reference key="54">
    <citation type="journal article" date="2021" name="Nat. Commun.">
        <title>SARS-CoV-2 N protein promotes NLRP3 inflammasome activation to induce hyperinflammation.</title>
        <authorList>
            <person name="Pan P."/>
            <person name="Shen M."/>
            <person name="Yu Z."/>
            <person name="Ge W."/>
            <person name="Chen K."/>
            <person name="Tian M."/>
            <person name="Xiao F."/>
            <person name="Wang Z."/>
            <person name="Wang J."/>
            <person name="Jia Y."/>
            <person name="Wang W."/>
            <person name="Wan P."/>
            <person name="Zhang J."/>
            <person name="Chen W."/>
            <person name="Lei Z."/>
            <person name="Chen X."/>
            <person name="Luo Z."/>
            <person name="Zhang Q."/>
            <person name="Xu M."/>
            <person name="Li G."/>
            <person name="Li Y."/>
            <person name="Wu J."/>
        </authorList>
    </citation>
    <scope>FUNCTION</scope>
    <scope>INTERACTION WITH SARS-COV-2 N PROTEIN (MICROBIAL INFECTION)</scope>
    <scope>INTERACTION WITH PYCARD</scope>
</reference>
<reference key="55">
    <citation type="journal article" date="2021" name="J. Exp. Med.">
        <title>BTK operates a phospho-tyrosine switch to regulate NLRP3 inflammasome activity.</title>
        <authorList>
            <person name="Bittner Z.A."/>
            <person name="Liu X."/>
            <person name="Mateo Tortola M."/>
            <person name="Tapia-Abellan A."/>
            <person name="Shankar S."/>
            <person name="Andreeva L."/>
            <person name="Mangan M."/>
            <person name="Spalinger M."/>
            <person name="Kalbacher H."/>
            <person name="Duewell P."/>
            <person name="Lovotti M."/>
            <person name="Bosch K."/>
            <person name="Dickhoefer S."/>
            <person name="Marcu A."/>
            <person name="Stevanovic S."/>
            <person name="Herster F."/>
            <person name="Cardona Gloria Y."/>
            <person name="Chang T.H."/>
            <person name="Bork F."/>
            <person name="Greve C.L."/>
            <person name="Loeffler M.W."/>
            <person name="Wolz O.O."/>
            <person name="Schilling N.A."/>
            <person name="Kuemmerle-Deschner J.B."/>
            <person name="Wagner S."/>
            <person name="Delor A."/>
            <person name="Grimbacher B."/>
            <person name="Hantschel O."/>
            <person name="Scharl M."/>
            <person name="Wu H."/>
            <person name="Latz E."/>
            <person name="Weber A.N.R."/>
        </authorList>
    </citation>
    <scope>FUNCTION</scope>
    <scope>PHOSPHORYLATION AT TYR-136; TYR-140; TYR-143 AND TYR-168</scope>
    <scope>MUTAGENESIS OF 136-TYR--TYR-143 AND TYR-168</scope>
</reference>
<reference key="56">
    <citation type="journal article" date="2021" name="Nat. Commun.">
        <title>NLRP3 phosphorylation in its LRR domain critically regulates inflammasome assembly.</title>
        <authorList>
            <person name="Niu T."/>
            <person name="De Rosny C."/>
            <person name="Chautard S."/>
            <person name="Rey A."/>
            <person name="Patoli D."/>
            <person name="Groslambert M."/>
            <person name="Cosson C."/>
            <person name="Lagrange B."/>
            <person name="Zhang Z."/>
            <person name="Visvikis O."/>
            <person name="Hacot S."/>
            <person name="Hologne M."/>
            <person name="Walker O."/>
            <person name="Wong J."/>
            <person name="Wang P."/>
            <person name="Ricci R."/>
            <person name="Henry T."/>
            <person name="Boyer L."/>
            <person name="Petrilli V."/>
            <person name="Py B.F."/>
        </authorList>
    </citation>
    <scope>PHOSPHORYLATION AT SER-735; SER-806 AND SER-1035</scope>
    <scope>UBIQUITINATION AT LYS-878; LYS-927 AND LYS-973</scope>
    <scope>MUTAGENESIS OF SER-735; SER-806 AND SER-1035</scope>
</reference>
<reference key="57">
    <citation type="journal article" date="2021" name="Front. Immunol.">
        <title>The E3 Ubiquitin Ligase TRIM65 Negatively Regulates Inflammasome Activation Through Promoting Ubiquitination of NLRP3.</title>
        <authorList>
            <person name="Tang T."/>
            <person name="Li P."/>
            <person name="Zhou X."/>
            <person name="Wang R."/>
            <person name="Fan X."/>
            <person name="Yang M."/>
            <person name="Qi K."/>
        </authorList>
    </citation>
    <scope>FUNCTION</scope>
    <scope>UBIQUITINATION BY TRIM65</scope>
</reference>
<reference key="58">
    <citation type="journal article" date="2021" name="Sci. Adv.">
        <title>Sensing low intracellular potassium by NLRP3 results in a stable open structure that promotes inflammasome activation.</title>
        <authorList>
            <person name="Tapia-Abellan A."/>
            <person name="Angosto-Bazarra D."/>
            <person name="Alarcon-Vila C."/>
            <person name="Banos M.C."/>
            <person name="Hafner-Bratkovic I."/>
            <person name="Oliva B."/>
            <person name="Pelegrin P."/>
        </authorList>
    </citation>
    <scope>DOMAIN</scope>
</reference>
<reference key="59">
    <citation type="journal article" date="2022" name="Mol. Cell">
        <title>Palmitoylation prevents sustained inflammation by limiting NLRP3 inflammasome activation through chaperone-mediated autophagy.</title>
        <authorList>
            <person name="Wang L."/>
            <person name="Cai J."/>
            <person name="Zhao X."/>
            <person name="Ma L."/>
            <person name="Zeng P."/>
            <person name="Zhou L."/>
            <person name="Liu Y."/>
            <person name="Yang S."/>
            <person name="Cai Z."/>
            <person name="Zhang S."/>
            <person name="Zhou L."/>
            <person name="Yang J."/>
            <person name="Liu T."/>
            <person name="Jin S."/>
            <person name="Cui J."/>
        </authorList>
    </citation>
    <scope>PALMITOYLATION AT CYS-844</scope>
    <scope>INTERACTION WITH HSPA8</scope>
    <scope>MUTAGENESIS OF GLN-359; GLN-603; GLN-798; CYS-844 AND GLN-995</scope>
</reference>
<reference key="60">
    <citation type="journal article" date="2023" name="EMBO J.">
        <title>MARCH5-dependent NLRP3 ubiquitination is required for mitochondrial NLRP3-NEK7 complex formation and NLRP3 inflammasome activation.</title>
        <authorList>
            <person name="Park Y.J."/>
            <person name="Dodantenna N."/>
            <person name="Kim Y."/>
            <person name="Kim T.H."/>
            <person name="Lee H.S."/>
            <person name="Yoo Y.S."/>
            <person name="Heo J."/>
            <person name="Lee J.H."/>
            <person name="Kwon M.H."/>
            <person name="Kang H.C."/>
            <person name="Lee J.S."/>
            <person name="Cho H."/>
        </authorList>
    </citation>
    <scope>FUNCTION</scope>
    <scope>UBIQUITINATION AT LYS-324 AND LYS-430</scope>
    <scope>INTERACTION WITH NEK7</scope>
    <scope>SUBUNIT</scope>
    <scope>MUTAGENESIS OF LYS-324 AND LYS-430</scope>
</reference>
<reference key="61">
    <citation type="journal article" date="2023" name="Mol. Cell">
        <title>ZDHHC5-mediated NLRP3 palmitoylation promotes NLRP3-NEK7 interaction and inflammasome activation.</title>
        <authorList>
            <person name="Zheng S."/>
            <person name="Que X."/>
            <person name="Wang S."/>
            <person name="Zhou Q."/>
            <person name="Xing X."/>
            <person name="Chen L."/>
            <person name="Hou C."/>
            <person name="Ma J."/>
            <person name="An P."/>
            <person name="Peng Y."/>
            <person name="Yao Y."/>
            <person name="Song Q."/>
            <person name="Li J."/>
            <person name="Zhang P."/>
            <person name="Pei H."/>
        </authorList>
    </citation>
    <scope>FUNCTION</scope>
    <scope>PALMITOYLATION AT CYS-837 AND CYS-838</scope>
    <scope>INTERACTION WITH NEK7</scope>
    <scope>SUBCELLULAR LOCATION</scope>
    <scope>MUTAGENESIS OF CYS-837 AND CYS-838</scope>
</reference>
<reference key="62">
    <citation type="journal article" date="2024" name="Mol. Cell">
        <title>Consecutive palmitoylation and phosphorylation orchestrates NLRP3 membrane trafficking and inflammasome activation.</title>
        <authorList>
            <person name="Nie L."/>
            <person name="Fei C."/>
            <person name="Fan Y."/>
            <person name="Dang F."/>
            <person name="Zhao Z."/>
            <person name="Zhu T."/>
            <person name="Wu X."/>
            <person name="Dai T."/>
            <person name="Balasubramanian A."/>
            <person name="Pan J."/>
            <person name="Hu Y."/>
            <person name="Luo H.R."/>
            <person name="Wei W."/>
            <person name="Chen J."/>
        </authorList>
    </citation>
    <scope>FUNCTION</scope>
    <scope>ACTIVITY REGULATION</scope>
    <scope>INTERACTION WITH NEK7</scope>
    <scope>SUBCELLULAR LOCATION</scope>
    <scope>PALMITOYLATION AT CYS-130 AND CYS-958</scope>
    <scope>PHOSPHORYLATION AT SER-265</scope>
    <scope>MUTAGENESIS OF CYS-130; SER-265 AND CYS-958</scope>
</reference>
<reference key="63">
    <citation type="journal article" date="2025" name="Autophagy">
        <title>ABHD8 antagonizes inflammation by facilitating chaperone-mediated autophagy-mediated degradation of NLRP3.</title>
        <authorList>
            <person name="Yang S."/>
            <person name="Li M."/>
            <person name="Lian G."/>
            <person name="Wu Y."/>
            <person name="Cui J."/>
            <person name="Wang L."/>
        </authorList>
    </citation>
    <scope>INTERACTION WITH ABHD8</scope>
    <scope>INTERACTION WITH SARS-COV-2 N (MICROBIAL INFECTION)</scope>
    <scope>PALMITOYLATION</scope>
</reference>
<reference key="64">
    <citation type="journal article" date="2011" name="J. Biol. Chem.">
        <title>Crystal structure of NALP3 protein pyrin domain (PYD) and its implications in inflammasome assembly.</title>
        <authorList>
            <person name="Bae J.Y."/>
            <person name="Park H.H."/>
        </authorList>
    </citation>
    <scope>X-RAY CRYSTALLOGRAPHY (1.7 ANGSTROMS) OF 3-112</scope>
    <scope>SUBUNIT</scope>
    <scope>DISULFIDE BOND</scope>
</reference>
<reference evidence="96" key="65">
    <citation type="journal article" date="2016" name="J. Biol. Chem.">
        <title>ASC pyrin domain self-associates and binds NLRP3 protein using equivalent binding interfaces.</title>
        <authorList>
            <person name="Oroz J."/>
            <person name="Barrera-Vilarmau S."/>
            <person name="Alfonso C."/>
            <person name="Rivas G."/>
            <person name="de Alba E."/>
        </authorList>
    </citation>
    <scope>STRUCTURE BY NMR OF 3-93</scope>
    <scope>FUNCTION</scope>
    <scope>ACTIVITY REGULATION</scope>
    <scope>INTERACTION WITH PYCARD</scope>
</reference>
<reference evidence="97" key="66">
    <citation type="journal article" date="2019" name="Nature">
        <title>Structural mechanism for NEK7-licensed activation of NLRP3 inflammasome.</title>
        <authorList>
            <person name="Sharif H."/>
            <person name="Wang L."/>
            <person name="Wang W.L."/>
            <person name="Magupalli V.G."/>
            <person name="Andreeva L."/>
            <person name="Qiao Q."/>
            <person name="Hauenstein A.V."/>
            <person name="Wu Z."/>
            <person name="Nunez G."/>
            <person name="Mao Y."/>
            <person name="Wu H."/>
        </authorList>
    </citation>
    <scope>STRUCTURE BY ELECTRON MICROSCOPY (3.80 ANGSTROMS) OF 3-1036 IN COMPLEX WITH NEK7</scope>
    <scope>FUNCTION</scope>
    <scope>INTERACTION WITH NEK7</scope>
    <scope>MUTAGENESIS OF GLN-359; 638-GLN--GLU-640; VAL-707; GLU-745; ASP-750; GLU-802; TRP-833; GLU-864 AND TYR-918</scope>
</reference>
<reference evidence="98" key="67">
    <citation type="journal article" date="2021" name="J. Mol. Biol.">
        <title>Crystal structure of NLRP3 NACHT domain with an inhibitor defines mechanism of inflammasome inhibition.</title>
        <authorList>
            <person name="Dekker C."/>
            <person name="Mattes H."/>
            <person name="Wright M."/>
            <person name="Boettcher A."/>
            <person name="Hinniger A."/>
            <person name="Hughes N."/>
            <person name="Kapps-Fouthier S."/>
            <person name="Eder J."/>
            <person name="Erbel P."/>
            <person name="Stiefl N."/>
            <person name="Mackay A."/>
            <person name="Farady C.J."/>
        </authorList>
    </citation>
    <scope>X-RAY CRYSTALLOGRAPHY (2.83 ANGSTROMS) OF 131-679 IN COMPLEX WITH ADP AND SMALL-MOLECULE INHIBITOR</scope>
    <scope>ACTIVITY REGULATION</scope>
</reference>
<reference evidence="99" key="68">
    <citation type="journal article" date="2022" name="Nature">
        <title>Structure of the NLRP3 decamer bound to the cytokine release inhibitor CRID3.</title>
        <authorList>
            <person name="Hochheiser I.V."/>
            <person name="Pilsl M."/>
            <person name="Hagelueken G."/>
            <person name="Moecking J."/>
            <person name="Marleaux M."/>
            <person name="Brinkschulte R."/>
            <person name="Latz E."/>
            <person name="Engel C."/>
            <person name="Geyer M."/>
        </authorList>
    </citation>
    <scope>STRUCTURE BY ELECTRON MICROSCOPY (3.90 ANGSTROMS) IN COMPLEX WITH ADP AND INHIBITOR MCC950</scope>
    <scope>SUBUNIT</scope>
    <scope>ACTIVITY REGULATION</scope>
    <scope>PHOSPHORYLATION AT SER-198 AND SER-201</scope>
    <scope>MUTAGENESIS OF ALA-228; ARG-351; ARG-578; 619-LYS--LEU-621; 689-LYS--GLY-698; 788-PHE-ASP-789 AND LYS-831</scope>
</reference>
<reference evidence="101" key="69">
    <citation type="journal article" date="2022" name="Proc. Natl. Acad. Sci. U.S.A.">
        <title>Structural basis for the oligomerization-mediated regulation of NLRP3 inflammasome activation.</title>
        <authorList>
            <person name="Ohto U."/>
            <person name="Kamitsukasa Y."/>
            <person name="Ishida H."/>
            <person name="Zhang Z."/>
            <person name="Murakami K."/>
            <person name="Hirama C."/>
            <person name="Maekawa S."/>
            <person name="Shimizu T."/>
        </authorList>
    </citation>
    <scope>STRUCTURE BY ELECTRON MICROSCOPY (3.23 ANGSTROMS) OF 130-1036 IN COMPLEX WITH ADP AND INHIBITOR MCC950</scope>
    <scope>ACTIVITY REGULATION</scope>
</reference>
<reference evidence="100" key="70">
    <citation type="journal article" date="2022" name="Sci. Adv.">
        <title>Directionality of PYD filament growth determined by the transition of NLRP3 nucleation seeds to ASC elongation.</title>
        <authorList>
            <person name="Hochheiser I.V."/>
            <person name="Behrmann H."/>
            <person name="Hagelueken G."/>
            <person name="Rodriguez-Alcazar J.F."/>
            <person name="Kopp A."/>
            <person name="Latz E."/>
            <person name="Behrmann E."/>
            <person name="Geyer M."/>
        </authorList>
    </citation>
    <scope>STRUCTURE BY ELECTRON MICROSCOPY (3.60 ANGSTROMS) OF 3-110</scope>
    <scope>ACTIVITY REGULATION</scope>
    <scope>INTERACTION WITH PYCARD</scope>
    <scope>MUTAGENESIS OF ARG-7; GLU-15; 23-LYS-LYS-24; MET-27; ASP-31; ARG-43; HIS-51; ALA-77; ARG-80 AND ARG-81</scope>
    <scope>CHARACTERIZATION OF VARIANT KEFH HIS-21</scope>
</reference>
<reference evidence="102" key="71">
    <citation type="journal article" date="2022" name="Int. J. Mol. Sci.">
        <title>The inflammasome activity of NLRP3 is independent of NEK7 in HEK293 cells co-expressing ASC.</title>
        <authorList>
            <person name="Machtens D.A."/>
            <person name="Bresch I.P."/>
            <person name="Eberhage J."/>
            <person name="Reubold T.F."/>
            <person name="Eschenburg S."/>
        </authorList>
    </citation>
    <scope>STRUCTURE BY ELECTRON MICROSCOPY (3.40 ANGSTROMS) OF 126-1036 IN COMPLEX WITH ADP</scope>
    <scope>FUNCTION</scope>
    <scope>ACTIVITY REGULATION</scope>
    <scope>INTERACTION WITH PYCARD</scope>
    <scope>MUTAGENESIS OF TYR-143; PHE-788; ASP-789; PHE-813 AND ARG-816</scope>
</reference>
<reference key="72">
    <citation type="journal article" date="2022" name="Nature">
        <title>Cryo-EM structures of the active NLRP3 inflammasome disk.</title>
        <authorList>
            <person name="Xiao L."/>
            <person name="Magupalli V.G."/>
            <person name="Wu H."/>
        </authorList>
    </citation>
    <scope>STRUCTURE BY ELECTRON MICROSCOPY (3.3 ANGSTROMS) OF 1-95 AND 133-1004 IN COMPLEX WITH ATP AND NEK7</scope>
    <scope>FUNCTION</scope>
    <scope>ACTIVITY REGULATION</scope>
    <scope>SUBUNIT</scope>
    <scope>INTERACTION WITH NEK7</scope>
    <scope>DOMAIN</scope>
    <scope>MUTAGENESIS OF ARG-147; GLU-152; ASN-155; ARG-157; LYS-166; GLU-176; ASP-213; GLN-359; HIS-364; GLN-424 AND GLN-509</scope>
</reference>
<reference key="73">
    <citation type="journal article" date="2002" name="Am. J. Hum. Genet.">
        <title>New mutations of CIAS1 that are responsible for Muckle-Wells syndrome and familial cold urticaria: a novel mutation underlies both syndromes.</title>
        <authorList>
            <person name="Dode C."/>
            <person name="Le Du N."/>
            <person name="Cuisset L."/>
            <person name="Letourneur F."/>
            <person name="Berthelot J.-M."/>
            <person name="Vaudour G."/>
            <person name="Meyrier A."/>
            <person name="Watts R.A."/>
            <person name="Scott D.G.I."/>
            <person name="Nicholls A."/>
            <person name="Granel B."/>
            <person name="Frances C."/>
            <person name="Garcier F."/>
            <person name="Edery P."/>
            <person name="Boulinguez S."/>
            <person name="Domergues J.-P."/>
            <person name="Delpech M."/>
            <person name="Grateau G."/>
        </authorList>
    </citation>
    <scope>VARIANT FCAS1 MET-200</scope>
    <scope>VARIANTS MWS ASN-305; MET-350; THR-441 AND ARG-571</scope>
    <scope>VARIANT FCAS1/MWS TRP-262</scope>
</reference>
<reference key="74">
    <citation type="journal article" date="2002" name="Am. J. Hum. Genet.">
        <title>Chronic infantile neurological cutaneous and articular syndrome is caused by mutations in CIAS1, a gene highly expressed in polymorphonuclear cells and chondrocytes.</title>
        <authorList>
            <person name="Feldmann J."/>
            <person name="Prieur A.-M."/>
            <person name="Quartier P."/>
            <person name="Berquin P."/>
            <person name="Certain S."/>
            <person name="Cortis E."/>
            <person name="Teillac-Hamel D."/>
            <person name="Fischer A."/>
            <person name="de Saint Basile G."/>
        </authorList>
    </citation>
    <scope>VARIANTS CINCA ASN-305; LYS-308; SER-311; ARG-360; ASN-438; SER-575 AND THR-664</scope>
    <scope>TISSUE SPECIFICITY</scope>
</reference>
<reference key="75">
    <citation type="journal article" date="2002" name="Am. J. Hum. Genet.">
        <authorList>
            <person name="Feldmann J."/>
            <person name="Prieur A.-M."/>
            <person name="Quartier P."/>
            <person name="Berquin P."/>
            <person name="Certain S."/>
            <person name="Cortis E."/>
            <person name="Teillac-Hamel D."/>
            <person name="Fischer A."/>
            <person name="de Saint Basile G."/>
        </authorList>
    </citation>
    <scope>ERRATUM OF PUBMED:12032915</scope>
</reference>
<reference key="76">
    <citation type="journal article" date="2002" name="Arthritis Rheum.">
        <title>De novo CIAS1 mutations, cytokine activation, and evidence for genetic heterogeneity in patients with neonatal-onset multisystem inflammatory disease (NOMID): a new member of the expanding family of pyrin-associated autoinflammatory diseases.</title>
        <authorList>
            <person name="Aksentijevich I."/>
            <person name="Nowak M."/>
            <person name="Mallah M."/>
            <person name="Chae J.J."/>
            <person name="Watford W.T."/>
            <person name="Hofmann S.R."/>
            <person name="Stein L."/>
            <person name="Russo R."/>
            <person name="Goldsmith D."/>
            <person name="Dent P."/>
            <person name="Rosenberg H.F."/>
            <person name="Austin F."/>
            <person name="Remmers E.F."/>
            <person name="Balow J.E. Jr."/>
            <person name="Rosenzweig S."/>
            <person name="Komarow H."/>
            <person name="Shoham N.G."/>
            <person name="Wood G."/>
            <person name="Jones J."/>
            <person name="Mangra N."/>
            <person name="Carrero H."/>
            <person name="Adams B.S."/>
            <person name="Moore T.L."/>
            <person name="Schikler K."/>
            <person name="Hoffman H."/>
            <person name="Lovell D.J."/>
            <person name="Lipnick R."/>
            <person name="Barron K."/>
            <person name="O'Shea J.J."/>
            <person name="Kastner D.L."/>
            <person name="Goldbach-Mansky R."/>
        </authorList>
    </citation>
    <scope>VARIANTS CINCA HIS-266; ASN-305; LEU-525 AND CYS-572</scope>
</reference>
<reference key="77">
    <citation type="journal article" date="2003" name="Hum. Genet.">
        <title>Fine structure mapping of CIAS1: identification of an ancestral haplotype and a common FCAS mutation, L353P.</title>
        <authorList>
            <person name="Hoffman H.M."/>
            <person name="Gregory S.G."/>
            <person name="Mueller J.L."/>
            <person name="Tresierras M."/>
            <person name="Broide D.H."/>
            <person name="Wanderer A.A."/>
            <person name="Kolodner R.D."/>
        </authorList>
    </citation>
    <scope>VARIANT FCAS1 PRO-355</scope>
    <scope>VARIANT LYS-705</scope>
</reference>
<reference key="78">
    <citation type="journal article" date="2004" name="Arthritis Rheum.">
        <title>Variant chronic infantile neurologic, cutaneous, articular syndrome due to a mutation within the leucine-rich repeat domain of CIAS1.</title>
        <authorList>
            <person name="Frenkel J."/>
            <person name="van Kempen M.J."/>
            <person name="Kuis W."/>
            <person name="van Amstel H.K."/>
        </authorList>
    </citation>
    <scope>VARIANT CINCA CYS-861</scope>
</reference>
<reference key="79">
    <citation type="journal article" date="2004" name="Arthritis Rheum.">
        <title>Clinical and genetic heterogeneity among Spanish patients with recurrent autoinflammatory syndromes associated with the CIAS1/PYPAF1/NALP3 gene.</title>
        <authorList>
            <person name="Arostegui J.I."/>
            <person name="Aldea A."/>
            <person name="Modesto C."/>
            <person name="Rua M.J."/>
            <person name="Argueelles F."/>
            <person name="Gonzalez-Ensenat M.A."/>
            <person name="Ramos E."/>
            <person name="Rius J."/>
            <person name="Plaza S."/>
            <person name="Vives J."/>
            <person name="Yaguee J."/>
        </authorList>
    </citation>
    <scope>VARIANTS FCAS1 MET-200; PRO-307 AND LYS-490</scope>
    <scope>VARIANT CINCA ASN-305</scope>
    <scope>VARIANT MWS MET-350</scope>
</reference>
<reference key="80">
    <citation type="journal article" date="2004" name="Blood">
        <title>Molecular basis of the spectral expression of CIAS1 mutations associated with phagocytic cell-mediated autoinflammatory disorders CINCA/NOMID, MWS, and FCU.</title>
        <authorList>
            <person name="Neven B."/>
            <person name="Callebaut I."/>
            <person name="Prieur A.-M."/>
            <person name="Feldmann J."/>
            <person name="Bodemer C."/>
            <person name="Lepore L."/>
            <person name="Derfalvi B."/>
            <person name="Benjaponpitak S."/>
            <person name="Vesely R."/>
            <person name="Sauvain M.J."/>
            <person name="Oertle S."/>
            <person name="Allen R."/>
            <person name="Morgan G."/>
            <person name="Borkhardt A."/>
            <person name="Hill C."/>
            <person name="Gardner-Medwin J."/>
            <person name="Fischer A."/>
            <person name="de Saint Basile G."/>
        </authorList>
    </citation>
    <scope>VARIANTS CINCA LEU-262; PRO-262; ASN-305; GLY-305; SER-311; MET-350; ASP-356; PRO-407; ILE-438; CYS-572 AND PHE-634</scope>
</reference>
<reference key="81">
    <citation type="journal article" date="2004" name="Pediatrics">
        <title>A novel CIAS1 mutation and plasma/cerebrospinal fluid cytokine profile in a German patient with neonatal-onset multisystem inflammatory disease responsive to methotrexate therapy.</title>
        <authorList>
            <person name="Stojanov S."/>
            <person name="Weiss M."/>
            <person name="Lohse P."/>
            <person name="Belohradsky B.H."/>
        </authorList>
    </citation>
    <scope>VARIANT CINCA THR-174</scope>
</reference>
<reference key="82">
    <citation type="journal article" date="2007" name="Int. Arch. Allergy Immunol.">
        <title>A novel missense mutation in CIAS1 encoding the pyrin-like protein, cryopyrin, causes familial cold autoinflammatory syndrome in a family of Ethiopian origin.</title>
        <authorList>
            <person name="Shalev S.A."/>
            <person name="Sprecher E."/>
            <person name="Indelman M."/>
            <person name="Hujirat Y."/>
            <person name="Bergman R."/>
            <person name="Rottem M."/>
        </authorList>
    </citation>
    <scope>VARIANT FCAS1 CYS-525</scope>
</reference>
<reference key="83">
    <citation type="journal article" date="2018" name="Am. J. Ophthalmol.">
        <title>Keratoendotheliitis fugax hereditaria: a novel cryopyrin-associated periodic syndrome caused by a mutation in the nucleotide-binding domain, leucine-rich repeat family, pyrin domain-containing 3 (NLRP3) gene.</title>
        <authorList>
            <person name="Turunen J.A."/>
            <person name="Wedenoja J."/>
            <person name="Repo P."/>
            <person name="Jaervinen R.S."/>
            <person name="Jaentti J.E."/>
            <person name="Moertenhumer S."/>
            <person name="Riikonen A.S."/>
            <person name="Lehesjoki A.E."/>
            <person name="Majander A."/>
            <person name="Kivelae T.T."/>
        </authorList>
    </citation>
    <scope>VARIANT KEFH HIS-21</scope>
    <scope>INVOLVEMENT IN KEFH</scope>
</reference>
<organism>
    <name type="scientific">Homo sapiens</name>
    <name type="common">Human</name>
    <dbReference type="NCBI Taxonomy" id="9606"/>
    <lineage>
        <taxon>Eukaryota</taxon>
        <taxon>Metazoa</taxon>
        <taxon>Chordata</taxon>
        <taxon>Craniata</taxon>
        <taxon>Vertebrata</taxon>
        <taxon>Euteleostomi</taxon>
        <taxon>Mammalia</taxon>
        <taxon>Eutheria</taxon>
        <taxon>Euarchontoglires</taxon>
        <taxon>Primates</taxon>
        <taxon>Haplorrhini</taxon>
        <taxon>Catarrhini</taxon>
        <taxon>Hominidae</taxon>
        <taxon>Homo</taxon>
    </lineage>
</organism>